<gene>
    <name evidence="58 60" type="primary">CALM1</name>
    <name type="synonym">CALM</name>
    <name type="synonym">CAM</name>
    <name type="synonym">CAM1</name>
</gene>
<evidence type="ECO:0000250" key="1"/>
<evidence type="ECO:0000250" key="2">
    <source>
        <dbReference type="UniProtKB" id="P0DP26"/>
    </source>
</evidence>
<evidence type="ECO:0000250" key="3">
    <source>
        <dbReference type="UniProtKB" id="P0DP29"/>
    </source>
</evidence>
<evidence type="ECO:0000250" key="4">
    <source>
        <dbReference type="UniProtKB" id="P62157"/>
    </source>
</evidence>
<evidence type="ECO:0000250" key="5">
    <source>
        <dbReference type="UniProtKB" id="P62161"/>
    </source>
</evidence>
<evidence type="ECO:0000250" key="6">
    <source>
        <dbReference type="UniProtKB" id="P62204"/>
    </source>
</evidence>
<evidence type="ECO:0000255" key="7">
    <source>
        <dbReference type="PROSITE-ProRule" id="PRU00448"/>
    </source>
</evidence>
<evidence type="ECO:0000269" key="8">
    <source>
    </source>
</evidence>
<evidence type="ECO:0000269" key="9">
    <source>
    </source>
</evidence>
<evidence type="ECO:0000269" key="10">
    <source>
    </source>
</evidence>
<evidence type="ECO:0000269" key="11">
    <source>
    </source>
</evidence>
<evidence type="ECO:0000269" key="12">
    <source>
    </source>
</evidence>
<evidence type="ECO:0000269" key="13">
    <source>
    </source>
</evidence>
<evidence type="ECO:0000269" key="14">
    <source>
    </source>
</evidence>
<evidence type="ECO:0000269" key="15">
    <source>
    </source>
</evidence>
<evidence type="ECO:0000269" key="16">
    <source>
    </source>
</evidence>
<evidence type="ECO:0000269" key="17">
    <source>
    </source>
</evidence>
<evidence type="ECO:0000269" key="18">
    <source>
    </source>
</evidence>
<evidence type="ECO:0000269" key="19">
    <source>
    </source>
</evidence>
<evidence type="ECO:0000269" key="20">
    <source>
    </source>
</evidence>
<evidence type="ECO:0000269" key="21">
    <source>
    </source>
</evidence>
<evidence type="ECO:0000269" key="22">
    <source>
    </source>
</evidence>
<evidence type="ECO:0000269" key="23">
    <source>
    </source>
</evidence>
<evidence type="ECO:0000269" key="24">
    <source>
    </source>
</evidence>
<evidence type="ECO:0000269" key="25">
    <source>
    </source>
</evidence>
<evidence type="ECO:0000269" key="26">
    <source>
    </source>
</evidence>
<evidence type="ECO:0000269" key="27">
    <source>
    </source>
</evidence>
<evidence type="ECO:0000269" key="28">
    <source>
    </source>
</evidence>
<evidence type="ECO:0000269" key="29">
    <source>
    </source>
</evidence>
<evidence type="ECO:0000269" key="30">
    <source>
    </source>
</evidence>
<evidence type="ECO:0000269" key="31">
    <source>
    </source>
</evidence>
<evidence type="ECO:0000269" key="32">
    <source>
    </source>
</evidence>
<evidence type="ECO:0000269" key="33">
    <source>
    </source>
</evidence>
<evidence type="ECO:0000269" key="34">
    <source>
    </source>
</evidence>
<evidence type="ECO:0000269" key="35">
    <source>
    </source>
</evidence>
<evidence type="ECO:0000269" key="36">
    <source>
    </source>
</evidence>
<evidence type="ECO:0000269" key="37">
    <source>
    </source>
</evidence>
<evidence type="ECO:0000269" key="38">
    <source>
    </source>
</evidence>
<evidence type="ECO:0000269" key="39">
    <source>
    </source>
</evidence>
<evidence type="ECO:0000269" key="40">
    <source>
    </source>
</evidence>
<evidence type="ECO:0000269" key="41">
    <source>
    </source>
</evidence>
<evidence type="ECO:0000269" key="42">
    <source>
    </source>
</evidence>
<evidence type="ECO:0000269" key="43">
    <source>
    </source>
</evidence>
<evidence type="ECO:0000269" key="44">
    <source>
    </source>
</evidence>
<evidence type="ECO:0000269" key="45">
    <source>
    </source>
</evidence>
<evidence type="ECO:0000269" key="46">
    <source>
    </source>
</evidence>
<evidence type="ECO:0000269" key="47">
    <source>
    </source>
</evidence>
<evidence type="ECO:0000269" key="48">
    <source>
    </source>
</evidence>
<evidence type="ECO:0000269" key="49">
    <source>
    </source>
</evidence>
<evidence type="ECO:0000269" key="50">
    <source>
    </source>
</evidence>
<evidence type="ECO:0000269" key="51">
    <source>
    </source>
</evidence>
<evidence type="ECO:0000269" key="52">
    <source>
    </source>
</evidence>
<evidence type="ECO:0000269" key="53">
    <source>
    </source>
</evidence>
<evidence type="ECO:0000269" key="54">
    <source>
    </source>
</evidence>
<evidence type="ECO:0000269" key="55">
    <source>
    </source>
</evidence>
<evidence type="ECO:0000269" key="56">
    <source>
    </source>
</evidence>
<evidence type="ECO:0000269" key="57">
    <source ref="7"/>
</evidence>
<evidence type="ECO:0000303" key="58">
    <source>
    </source>
</evidence>
<evidence type="ECO:0000305" key="59"/>
<evidence type="ECO:0000312" key="60">
    <source>
        <dbReference type="HGNC" id="HGNC:1442"/>
    </source>
</evidence>
<evidence type="ECO:0007744" key="61">
    <source>
        <dbReference type="PDB" id="1CLL"/>
    </source>
</evidence>
<evidence type="ECO:0007744" key="62">
    <source>
        <dbReference type="PDB" id="2N77"/>
    </source>
</evidence>
<evidence type="ECO:0007744" key="63">
    <source>
        <dbReference type="PDB" id="4UMO"/>
    </source>
</evidence>
<evidence type="ECO:0007744" key="64">
    <source>
        <dbReference type="PDB" id="4V0C"/>
    </source>
</evidence>
<evidence type="ECO:0007744" key="65">
    <source>
        <dbReference type="PDB" id="5J03"/>
    </source>
</evidence>
<evidence type="ECO:0007744" key="66">
    <source>
        <dbReference type="PDB" id="6CNM"/>
    </source>
</evidence>
<evidence type="ECO:0007744" key="67">
    <source>
        <dbReference type="PDB" id="6CNN"/>
    </source>
</evidence>
<evidence type="ECO:0007744" key="68">
    <source>
        <dbReference type="PDB" id="6CNO"/>
    </source>
</evidence>
<evidence type="ECO:0007744" key="69">
    <source>
        <dbReference type="PDB" id="7WR4"/>
    </source>
</evidence>
<evidence type="ECO:0007744" key="70">
    <source>
        <dbReference type="PDB" id="7WR5"/>
    </source>
</evidence>
<evidence type="ECO:0007744" key="71">
    <source>
    </source>
</evidence>
<evidence type="ECO:0007744" key="72">
    <source>
    </source>
</evidence>
<evidence type="ECO:0007744" key="73">
    <source>
    </source>
</evidence>
<evidence type="ECO:0007744" key="74">
    <source>
    </source>
</evidence>
<evidence type="ECO:0007744" key="75">
    <source>
    </source>
</evidence>
<evidence type="ECO:0007744" key="76">
    <source>
    </source>
</evidence>
<evidence type="ECO:0007744" key="77">
    <source>
    </source>
</evidence>
<evidence type="ECO:0007744" key="78">
    <source>
    </source>
</evidence>
<evidence type="ECO:0007744" key="79">
    <source>
    </source>
</evidence>
<evidence type="ECO:0007744" key="80">
    <source>
    </source>
</evidence>
<evidence type="ECO:0007744" key="81">
    <source>
    </source>
</evidence>
<evidence type="ECO:0007744" key="82">
    <source>
    </source>
</evidence>
<evidence type="ECO:0007829" key="83">
    <source>
        <dbReference type="PDB" id="1WRZ"/>
    </source>
</evidence>
<evidence type="ECO:0007829" key="84">
    <source>
        <dbReference type="PDB" id="2M0J"/>
    </source>
</evidence>
<evidence type="ECO:0007829" key="85">
    <source>
        <dbReference type="PDB" id="4DCK"/>
    </source>
</evidence>
<evidence type="ECO:0007829" key="86">
    <source>
        <dbReference type="PDB" id="4DJC"/>
    </source>
</evidence>
<evidence type="ECO:0007829" key="87">
    <source>
        <dbReference type="PDB" id="4LZX"/>
    </source>
</evidence>
<proteinExistence type="evidence at protein level"/>
<accession>P0DP23</accession>
<accession>P02593</accession>
<accession>P62158</accession>
<accession>P70667</accession>
<accession>P99014</accession>
<accession>Q13942</accession>
<accession>Q53S29</accession>
<accession>Q61379</accession>
<accession>Q61380</accession>
<accession>Q96HK3</accession>
<protein>
    <recommendedName>
        <fullName evidence="60">Calmodulin-1</fullName>
    </recommendedName>
</protein>
<sequence>MADQLTEEQIAEFKEAFSLFDKDGDGTITTKELGTVMRSLGQNPTEAELQDMINEVDADGNGTIDFPEFLTMMARKMKDTDSEEEIREAFRVFDKDGNGYISAAELRHVMTNLGEKLTDEEVDEMIREADIDGDGQVNYEEFVQMMTAK</sequence>
<reference key="1">
    <citation type="journal article" date="1984" name="Biochem. Int.">
        <title>Isolation and nucleotide sequence of a cDNA encoding human calmodulin.</title>
        <authorList>
            <person name="Wawrzynczak E.J."/>
            <person name="Perham R.N."/>
        </authorList>
    </citation>
    <scope>NUCLEOTIDE SEQUENCE [MRNA]</scope>
</reference>
<reference key="2">
    <citation type="journal article" date="1994" name="Eur. J. Biochem.">
        <title>Structure of the human CALM1 calmodulin gene and identification of two CALM1-related pseudogenes CALM1P1 and CALM1P2.</title>
        <authorList>
            <person name="Rhyner J.A."/>
            <person name="Ottiger M."/>
            <person name="Wicki R."/>
            <person name="Greenwood T.M."/>
            <person name="Strehler E.E."/>
        </authorList>
    </citation>
    <scope>NUCLEOTIDE SEQUENCE [GENOMIC DNA]</scope>
    <source>
        <tissue>Blood</tissue>
    </source>
</reference>
<reference key="3">
    <citation type="submission" date="2003-05" db="EMBL/GenBank/DDBJ databases">
        <title>Cloning of human full-length CDSs in BD Creator(TM) system donor vector.</title>
        <authorList>
            <person name="Kalnine N."/>
            <person name="Chen X."/>
            <person name="Rolfs A."/>
            <person name="Halleck A."/>
            <person name="Hines L."/>
            <person name="Eisenstein S."/>
            <person name="Koundinya M."/>
            <person name="Raphael J."/>
            <person name="Moreira D."/>
            <person name="Kelley T."/>
            <person name="LaBaer J."/>
            <person name="Lin Y."/>
            <person name="Phelan M."/>
            <person name="Farmer A."/>
        </authorList>
    </citation>
    <scope>NUCLEOTIDE SEQUENCE [LARGE SCALE MRNA]</scope>
</reference>
<reference key="4">
    <citation type="journal article" date="2003" name="Nature">
        <title>The DNA sequence and analysis of human chromosome 14.</title>
        <authorList>
            <person name="Heilig R."/>
            <person name="Eckenberg R."/>
            <person name="Petit J.-L."/>
            <person name="Fonknechten N."/>
            <person name="Da Silva C."/>
            <person name="Cattolico L."/>
            <person name="Levy M."/>
            <person name="Barbe V."/>
            <person name="De Berardinis V."/>
            <person name="Ureta-Vidal A."/>
            <person name="Pelletier E."/>
            <person name="Vico V."/>
            <person name="Anthouard V."/>
            <person name="Rowen L."/>
            <person name="Madan A."/>
            <person name="Qin S."/>
            <person name="Sun H."/>
            <person name="Du H."/>
            <person name="Pepin K."/>
            <person name="Artiguenave F."/>
            <person name="Robert C."/>
            <person name="Cruaud C."/>
            <person name="Bruels T."/>
            <person name="Jaillon O."/>
            <person name="Friedlander L."/>
            <person name="Samson G."/>
            <person name="Brottier P."/>
            <person name="Cure S."/>
            <person name="Segurens B."/>
            <person name="Aniere F."/>
            <person name="Samain S."/>
            <person name="Crespeau H."/>
            <person name="Abbasi N."/>
            <person name="Aiach N."/>
            <person name="Boscus D."/>
            <person name="Dickhoff R."/>
            <person name="Dors M."/>
            <person name="Dubois I."/>
            <person name="Friedman C."/>
            <person name="Gouyvenoux M."/>
            <person name="James R."/>
            <person name="Madan A."/>
            <person name="Mairey-Estrada B."/>
            <person name="Mangenot S."/>
            <person name="Martins N."/>
            <person name="Menard M."/>
            <person name="Oztas S."/>
            <person name="Ratcliffe A."/>
            <person name="Shaffer T."/>
            <person name="Trask B."/>
            <person name="Vacherie B."/>
            <person name="Bellemere C."/>
            <person name="Belser C."/>
            <person name="Besnard-Gonnet M."/>
            <person name="Bartol-Mavel D."/>
            <person name="Boutard M."/>
            <person name="Briez-Silla S."/>
            <person name="Combette S."/>
            <person name="Dufosse-Laurent V."/>
            <person name="Ferron C."/>
            <person name="Lechaplais C."/>
            <person name="Louesse C."/>
            <person name="Muselet D."/>
            <person name="Magdelenat G."/>
            <person name="Pateau E."/>
            <person name="Petit E."/>
            <person name="Sirvain-Trukniewicz P."/>
            <person name="Trybou A."/>
            <person name="Vega-Czarny N."/>
            <person name="Bataille E."/>
            <person name="Bluet E."/>
            <person name="Bordelais I."/>
            <person name="Dubois M."/>
            <person name="Dumont C."/>
            <person name="Guerin T."/>
            <person name="Haffray S."/>
            <person name="Hammadi R."/>
            <person name="Muanga J."/>
            <person name="Pellouin V."/>
            <person name="Robert D."/>
            <person name="Wunderle E."/>
            <person name="Gauguet G."/>
            <person name="Roy A."/>
            <person name="Sainte-Marthe L."/>
            <person name="Verdier J."/>
            <person name="Verdier-Discala C."/>
            <person name="Hillier L.W."/>
            <person name="Fulton L."/>
            <person name="McPherson J."/>
            <person name="Matsuda F."/>
            <person name="Wilson R."/>
            <person name="Scarpelli C."/>
            <person name="Gyapay G."/>
            <person name="Wincker P."/>
            <person name="Saurin W."/>
            <person name="Quetier F."/>
            <person name="Waterston R."/>
            <person name="Hood L."/>
            <person name="Weissenbach J."/>
        </authorList>
    </citation>
    <scope>NUCLEOTIDE SEQUENCE [LARGE SCALE GENOMIC DNA]</scope>
</reference>
<reference key="5">
    <citation type="journal article" date="2004" name="Genome Res.">
        <title>The status, quality, and expansion of the NIH full-length cDNA project: the Mammalian Gene Collection (MGC).</title>
        <authorList>
            <consortium name="The MGC Project Team"/>
        </authorList>
    </citation>
    <scope>NUCLEOTIDE SEQUENCE [LARGE SCALE MRNA]</scope>
    <source>
        <tissue>Brain</tissue>
        <tissue>Lung</tissue>
        <tissue>Lymph</tissue>
        <tissue>Placenta</tissue>
        <tissue>Urinary bladder</tissue>
    </source>
</reference>
<reference key="6">
    <citation type="journal article" date="1982" name="Biochemistry">
        <title>Complete amino acid sequence of human brain calmodulin.</title>
        <authorList>
            <person name="Sasagawa T."/>
            <person name="Ericsson L.H."/>
            <person name="Walsh K.A."/>
            <person name="Schreiber W.E."/>
            <person name="Fischer E.H."/>
            <person name="Titani K."/>
        </authorList>
    </citation>
    <scope>PROTEIN SEQUENCE OF 2-149</scope>
    <scope>ACETYLATION AT ALA-2</scope>
    <scope>METHYLATION AT LYS-116</scope>
    <source>
        <tissue>Brain</tissue>
    </source>
</reference>
<reference key="7">
    <citation type="submission" date="2008-02" db="UniProtKB">
        <authorList>
            <person name="Bienvenut W.V."/>
            <person name="Bensaad K."/>
            <person name="Vousden K.H."/>
        </authorList>
    </citation>
    <scope>PROTEIN SEQUENCE OF 2-31 AND 92-107</scope>
    <scope>CLEAVAGE OF INITIATOR METHIONINE</scope>
    <scope>ACETYLATION AT ALA-2</scope>
    <scope>IDENTIFICATION BY MASS SPECTROMETRY</scope>
    <source>
        <tissue>Osteosarcoma</tissue>
    </source>
</reference>
<reference key="8">
    <citation type="submission" date="2008-12" db="UniProtKB">
        <authorList>
            <person name="Lubec G."/>
            <person name="Afjehi-Sadat L."/>
            <person name="Chen W.-Q."/>
            <person name="Sun Y."/>
        </authorList>
    </citation>
    <scope>PROTEIN SEQUENCE OF 15-31; 77-107 AND 128-149</scope>
    <scope>IDENTIFICATION BY MASS SPECTROMETRY</scope>
    <source>
        <tissue>Brain</tissue>
        <tissue>Cajal-Retzius cell</tissue>
        <tissue>Fetal brain cortex</tissue>
    </source>
</reference>
<reference key="9">
    <citation type="journal article" date="1998" name="Nature">
        <title>Structural basis for activation of the titin kinase domain during myofibrillogenesis.</title>
        <authorList>
            <person name="Mayans O."/>
            <person name="van der Ven P.F.M."/>
            <person name="Wilm M."/>
            <person name="Mues A."/>
            <person name="Young P."/>
            <person name="Furst D.O."/>
            <person name="Wilmanns M."/>
            <person name="Gautel M."/>
        </authorList>
    </citation>
    <scope>INTERACTION WITH TTN</scope>
</reference>
<reference key="10">
    <citation type="journal article" date="2003" name="Nature">
        <title>Proteomic characterization of the human centrosome by protein correlation profiling.</title>
        <authorList>
            <person name="Andersen J.S."/>
            <person name="Wilkinson C.J."/>
            <person name="Mayor T."/>
            <person name="Mortensen P."/>
            <person name="Nigg E.A."/>
            <person name="Mann M."/>
        </authorList>
    </citation>
    <scope>IDENTIFICATION BY MASS SPECTROMETRY</scope>
    <scope>SUBCELLULAR LOCATION [LARGE SCALE ANALYSIS]</scope>
    <source>
        <tissue>Lymphoblast</tissue>
    </source>
</reference>
<reference key="11">
    <citation type="journal article" date="2003" name="Protein Pept. Lett.">
        <title>Recombinant expression, purification and characterisation of the HMG domain of human SRY.</title>
        <authorList>
            <person name="Kelly S."/>
            <person name="Yotis J."/>
            <person name="Macris M."/>
            <person name="Harley V."/>
        </authorList>
    </citation>
    <scope>INTERACTION WITH SRY</scope>
</reference>
<reference key="12">
    <citation type="journal article" date="2005" name="J. Biol. Chem.">
        <title>Calcium/calmodulin regulates ubiquitination of the ubiquitin-specific protease TRE17/USP6.</title>
        <authorList>
            <person name="Shen C."/>
            <person name="Ye Y."/>
            <person name="Robertson S.E."/>
            <person name="Lau A.W."/>
            <person name="Mak D.O."/>
            <person name="Chou M.M."/>
        </authorList>
    </citation>
    <scope>INTERACTION WITH USP6</scope>
</reference>
<reference key="13">
    <citation type="journal article" date="2005" name="Mol. Endocrinol.">
        <title>Defective calmodulin-mediated nuclear transport of the sex-determining region of the Y chromosome (SRY) in XY sex reversal.</title>
        <authorList>
            <person name="Sim H."/>
            <person name="Rimmer K."/>
            <person name="Kelly S."/>
            <person name="Ludbrook L.M."/>
            <person name="Clayton A.H."/>
            <person name="Harley V.R."/>
        </authorList>
    </citation>
    <scope>INTERACTION WITH SRY</scope>
</reference>
<reference key="14">
    <citation type="journal article" date="2005" name="Nat. Biotechnol.">
        <title>Immunoaffinity profiling of tyrosine phosphorylation in cancer cells.</title>
        <authorList>
            <person name="Rush J."/>
            <person name="Moritz A."/>
            <person name="Lee K.A."/>
            <person name="Guo A."/>
            <person name="Goss V.L."/>
            <person name="Spek E.J."/>
            <person name="Zhang H."/>
            <person name="Zha X.-M."/>
            <person name="Polakiewicz R.D."/>
            <person name="Comb M.J."/>
        </authorList>
    </citation>
    <scope>IDENTIFICATION BY MASS SPECTROMETRY [LARGE SCALE ANALYSIS]</scope>
</reference>
<reference key="15">
    <citation type="journal article" date="2006" name="Mol. Biol. Cell">
        <title>CP110 cooperates with two calcium-binding proteins to regulate cytokinesis and genome stability.</title>
        <authorList>
            <person name="Tsang W.Y."/>
            <person name="Spektor A."/>
            <person name="Luciano D.J."/>
            <person name="Indjeian V.B."/>
            <person name="Chen Z."/>
            <person name="Salisbury J.L."/>
            <person name="Sanchez I."/>
            <person name="Dynlacht B.D."/>
        </authorList>
    </citation>
    <scope>FUNCTION</scope>
    <scope>INTERACTION WITH CCP110</scope>
    <scope>SUBCELLULAR LOCATION</scope>
</reference>
<reference key="16">
    <citation type="journal article" date="2007" name="Cell">
        <title>Cep97 and CP110 suppress a cilia assembly program.</title>
        <authorList>
            <person name="Spektor A."/>
            <person name="Tsang W.Y."/>
            <person name="Khoo D."/>
            <person name="Dynlacht B.D."/>
        </authorList>
    </citation>
    <scope>INTERACTION WITH CEP97 AND CCP110</scope>
</reference>
<reference key="17">
    <citation type="journal article" date="2008" name="J. Biol. Chem.">
        <title>The KCNQ1 (Kv7.1) COOH terminus, a multitiered scaffold for subunit assembly and protein interaction.</title>
        <authorList>
            <person name="Wiener R."/>
            <person name="Haitin Y."/>
            <person name="Shamgar L."/>
            <person name="Fernandez-Alonso M.C."/>
            <person name="Martos A."/>
            <person name="Chomsky-Hecht O."/>
            <person name="Rivas G."/>
            <person name="Attali B."/>
            <person name="Hirsch J.A."/>
        </authorList>
    </citation>
    <scope>INTERACTION WITH KCNQ1</scope>
</reference>
<reference key="18">
    <citation type="journal article" date="2008" name="J. Biol. Chem.">
        <title>S100A1 and calmodulin compete for the same binding site on ryanodine receptor.</title>
        <authorList>
            <person name="Wright N.T."/>
            <person name="Prosser B.L."/>
            <person name="Varney K.M."/>
            <person name="Zimmer D.B."/>
            <person name="Schneider M.F."/>
            <person name="Weber D.J."/>
        </authorList>
    </citation>
    <scope>INTERACTION WITH RYR1 AND RYR2</scope>
</reference>
<reference key="19">
    <citation type="journal article" date="2008" name="Proc. Natl. Acad. Sci. U.S.A.">
        <title>A quantitative atlas of mitotic phosphorylation.</title>
        <authorList>
            <person name="Dephoure N."/>
            <person name="Zhou C."/>
            <person name="Villen J."/>
            <person name="Beausoleil S.A."/>
            <person name="Bakalarski C.E."/>
            <person name="Elledge S.J."/>
            <person name="Gygi S.P."/>
        </authorList>
    </citation>
    <scope>PHOSPHORYLATION [LARGE SCALE ANALYSIS] AT TYR-100</scope>
    <scope>IDENTIFICATION BY MASS SPECTROMETRY [LARGE SCALE ANALYSIS]</scope>
    <source>
        <tissue>Cervix carcinoma</tissue>
    </source>
</reference>
<reference key="20">
    <citation type="journal article" date="2009" name="Anal. Chem.">
        <title>Lys-N and trypsin cover complementary parts of the phosphoproteome in a refined SCX-based approach.</title>
        <authorList>
            <person name="Gauci S."/>
            <person name="Helbig A.O."/>
            <person name="Slijper M."/>
            <person name="Krijgsveld J."/>
            <person name="Heck A.J."/>
            <person name="Mohammed S."/>
        </authorList>
    </citation>
    <scope>ACETYLATION [LARGE SCALE ANALYSIS] AT ALA-2</scope>
    <scope>CLEAVAGE OF INITIATOR METHIONINE [LARGE SCALE ANALYSIS]</scope>
    <scope>IDENTIFICATION BY MASS SPECTROMETRY [LARGE SCALE ANALYSIS]</scope>
</reference>
<reference key="21">
    <citation type="journal article" date="2009" name="Sci. Signal.">
        <title>Quantitative phosphoproteomic analysis of T cell receptor signaling reveals system-wide modulation of protein-protein interactions.</title>
        <authorList>
            <person name="Mayya V."/>
            <person name="Lundgren D.H."/>
            <person name="Hwang S.-I."/>
            <person name="Rezaul K."/>
            <person name="Wu L."/>
            <person name="Eng J.K."/>
            <person name="Rodionov V."/>
            <person name="Han D.K."/>
        </authorList>
    </citation>
    <scope>PHOSPHORYLATION [LARGE SCALE ANALYSIS] AT TYR-100 AND TYR-139</scope>
    <scope>IDENTIFICATION BY MASS SPECTROMETRY [LARGE SCALE ANALYSIS]</scope>
    <source>
        <tissue>Leukemic T-cell</tissue>
    </source>
</reference>
<reference key="22">
    <citation type="journal article" date="2009" name="Science">
        <title>Lysine acetylation targets protein complexes and co-regulates major cellular functions.</title>
        <authorList>
            <person name="Choudhary C."/>
            <person name="Kumar C."/>
            <person name="Gnad F."/>
            <person name="Nielsen M.L."/>
            <person name="Rehman M."/>
            <person name="Walther T.C."/>
            <person name="Olsen J.V."/>
            <person name="Mann M."/>
        </authorList>
    </citation>
    <scope>ACETYLATION [LARGE SCALE ANALYSIS] AT LYS-22 AND LYS-95</scope>
    <scope>IDENTIFICATION BY MASS SPECTROMETRY [LARGE SCALE ANALYSIS]</scope>
</reference>
<reference key="23">
    <citation type="journal article" date="2010" name="J. Biol. Chem.">
        <title>Conserved motif of CDK5RAP2 mediates its localization to centrosomes and the Golgi complex.</title>
        <authorList>
            <person name="Wang Z."/>
            <person name="Wu T."/>
            <person name="Shi L."/>
            <person name="Zhang L."/>
            <person name="Zheng W."/>
            <person name="Qu J.Y."/>
            <person name="Niu R."/>
            <person name="Qi R.Z."/>
        </authorList>
    </citation>
    <scope>INTERACTION WITH CDK5RAP2</scope>
</reference>
<reference key="24">
    <citation type="journal article" date="2010" name="J. Biol. Chem.">
        <title>Calcium-dependent association of calmodulin with the rubella virus nonstructural protease domain.</title>
        <authorList>
            <person name="Zhou Y."/>
            <person name="Tzeng W.P."/>
            <person name="Wong H.C."/>
            <person name="Ye Y."/>
            <person name="Jiang J."/>
            <person name="Chen Y."/>
            <person name="Huang Y."/>
            <person name="Suppiah S."/>
            <person name="Frey T.K."/>
            <person name="Yang J.J."/>
        </authorList>
    </citation>
    <scope>INTERACTION WITH RUBELLA VIRUS PROTEASE/METHYLTRANSFERASE P150</scope>
</reference>
<reference key="25">
    <citation type="journal article" date="2011" name="BMC Syst. Biol.">
        <title>Initial characterization of the human central proteome.</title>
        <authorList>
            <person name="Burkard T.R."/>
            <person name="Planyavsky M."/>
            <person name="Kaupe I."/>
            <person name="Breitwieser F.P."/>
            <person name="Buerckstuemmer T."/>
            <person name="Bennett K.L."/>
            <person name="Superti-Furga G."/>
            <person name="Colinge J."/>
        </authorList>
    </citation>
    <scope>IDENTIFICATION BY MASS SPECTROMETRY [LARGE SCALE ANALYSIS]</scope>
</reference>
<reference key="26">
    <citation type="journal article" date="2011" name="Sci. Signal.">
        <title>System-wide temporal characterization of the proteome and phosphoproteome of human embryonic stem cell differentiation.</title>
        <authorList>
            <person name="Rigbolt K.T."/>
            <person name="Prokhorova T.A."/>
            <person name="Akimov V."/>
            <person name="Henningsen J."/>
            <person name="Johansen P.T."/>
            <person name="Kratchmarova I."/>
            <person name="Kassem M."/>
            <person name="Mann M."/>
            <person name="Olsen J.V."/>
            <person name="Blagoev B."/>
        </authorList>
    </citation>
    <scope>PHOSPHORYLATION [LARGE SCALE ANALYSIS] AT SER-102</scope>
    <scope>IDENTIFICATION BY MASS SPECTROMETRY [LARGE SCALE ANALYSIS]</scope>
</reference>
<reference key="27">
    <citation type="journal article" date="2012" name="J. Biol. Chem.">
        <title>Crystal structure of calmodulin binding domain of orai1 in complex with Ca2+ calmodulin displays a unique binding mode.</title>
        <authorList>
            <person name="Liu Y."/>
            <person name="Zheng X."/>
            <person name="Mueller G.A."/>
            <person name="Sobhany M."/>
            <person name="DeRose E.F."/>
            <person name="Zhang Y."/>
            <person name="London R.E."/>
            <person name="Birnbaumer L."/>
        </authorList>
    </citation>
    <scope>INTERACTION WITH ORAI1</scope>
</reference>
<reference key="28">
    <citation type="journal article" date="2012" name="Mol. Cell. Proteomics">
        <title>Comparative large-scale characterisation of plant vs. mammal proteins reveals similar and idiosyncratic N-alpha acetylation features.</title>
        <authorList>
            <person name="Bienvenut W.V."/>
            <person name="Sumpton D."/>
            <person name="Martinez A."/>
            <person name="Lilla S."/>
            <person name="Espagne C."/>
            <person name="Meinnel T."/>
            <person name="Giglione C."/>
        </authorList>
    </citation>
    <scope>ACETYLATION [LARGE SCALE ANALYSIS] AT ALA-2</scope>
    <scope>CLEAVAGE OF INITIATOR METHIONINE [LARGE SCALE ANALYSIS]</scope>
    <scope>IDENTIFICATION BY MASS SPECTROMETRY [LARGE SCALE ANALYSIS]</scope>
</reference>
<reference key="29">
    <citation type="journal article" date="2012" name="Nat. Cell Biol.">
        <title>Distinct and separable activities of the endocytic clathrin-coat components Fcho1/2 and AP-2 in developmental patterning.</title>
        <authorList>
            <person name="Umasankar P.K."/>
            <person name="Sanker S."/>
            <person name="Thieman J.R."/>
            <person name="Chakraborty S."/>
            <person name="Wendland B."/>
            <person name="Tsang M."/>
            <person name="Traub L.M."/>
        </authorList>
    </citation>
    <scope>INTERACTION WITH FCHO1</scope>
</reference>
<reference key="30">
    <citation type="journal article" date="2012" name="Proc. Natl. Acad. Sci. U.S.A.">
        <title>N-terminal acetylome analyses and functional insights of the N-terminal acetyltransferase NatB.</title>
        <authorList>
            <person name="Van Damme P."/>
            <person name="Lasa M."/>
            <person name="Polevoda B."/>
            <person name="Gazquez C."/>
            <person name="Elosegui-Artola A."/>
            <person name="Kim D.S."/>
            <person name="De Juan-Pardo E."/>
            <person name="Demeyer K."/>
            <person name="Hole K."/>
            <person name="Larrea E."/>
            <person name="Timmerman E."/>
            <person name="Prieto J."/>
            <person name="Arnesen T."/>
            <person name="Sherman F."/>
            <person name="Gevaert K."/>
            <person name="Aldabe R."/>
        </authorList>
    </citation>
    <scope>ACETYLATION [LARGE SCALE ANALYSIS] AT ALA-2</scope>
    <scope>CLEAVAGE OF INITIATOR METHIONINE [LARGE SCALE ANALYSIS]</scope>
    <scope>IDENTIFICATION BY MASS SPECTROMETRY [LARGE SCALE ANALYSIS]</scope>
</reference>
<reference key="31">
    <citation type="journal article" date="2013" name="J. Proteome Res.">
        <title>Toward a comprehensive characterization of a human cancer cell phosphoproteome.</title>
        <authorList>
            <person name="Zhou H."/>
            <person name="Di Palma S."/>
            <person name="Preisinger C."/>
            <person name="Peng M."/>
            <person name="Polat A.N."/>
            <person name="Heck A.J."/>
            <person name="Mohammed S."/>
        </authorList>
    </citation>
    <scope>PHOSPHORYLATION [LARGE SCALE ANALYSIS] AT SER-82 AND SER-102</scope>
    <scope>IDENTIFICATION BY MASS SPECTROMETRY [LARGE SCALE ANALYSIS]</scope>
    <source>
        <tissue>Cervix carcinoma</tissue>
        <tissue>Erythroleukemia</tissue>
    </source>
</reference>
<reference key="32">
    <citation type="journal article" date="2014" name="J. Proteomics">
        <title>An enzyme assisted RP-RPLC approach for in-depth analysis of human liver phosphoproteome.</title>
        <authorList>
            <person name="Bian Y."/>
            <person name="Song C."/>
            <person name="Cheng K."/>
            <person name="Dong M."/>
            <person name="Wang F."/>
            <person name="Huang J."/>
            <person name="Sun D."/>
            <person name="Wang L."/>
            <person name="Ye M."/>
            <person name="Zou H."/>
        </authorList>
    </citation>
    <scope>PHOSPHORYLATION [LARGE SCALE ANALYSIS] AT SER-102 AND THR-111</scope>
    <scope>IDENTIFICATION BY MASS SPECTROMETRY [LARGE SCALE ANALYSIS]</scope>
    <source>
        <tissue>Liver</tissue>
    </source>
</reference>
<reference key="33">
    <citation type="journal article" date="2014" name="Mol. Cell. Proteomics">
        <title>Immunoaffinity enrichment and mass spectrometry analysis of protein methylation.</title>
        <authorList>
            <person name="Guo A."/>
            <person name="Gu H."/>
            <person name="Zhou J."/>
            <person name="Mulhern D."/>
            <person name="Wang Y."/>
            <person name="Lee K.A."/>
            <person name="Yang V."/>
            <person name="Aguiar M."/>
            <person name="Kornhauser J."/>
            <person name="Jia X."/>
            <person name="Ren J."/>
            <person name="Beausoleil S.A."/>
            <person name="Silva J.C."/>
            <person name="Vemulapalli V."/>
            <person name="Bedford M.T."/>
            <person name="Comb M.J."/>
        </authorList>
    </citation>
    <scope>METHYLATION [LARGE SCALE ANALYSIS] AT LYS-116</scope>
    <scope>IDENTIFICATION BY MASS SPECTROMETRY [LARGE SCALE ANALYSIS]</scope>
    <source>
        <tissue>Colon carcinoma</tissue>
    </source>
</reference>
<reference key="34">
    <citation type="journal article" date="2015" name="Mol. Cell. Proteomics">
        <title>KCMF1 (potassium channel modulatory factor 1) Links RAD6 to UBR4 (ubiquitin N-recognin domain-containing E3 ligase 4) and lysosome-mediated degradation.</title>
        <authorList>
            <person name="Hong J.H."/>
            <person name="Kaustov L."/>
            <person name="Coyaud E."/>
            <person name="Srikumar T."/>
            <person name="Wan J."/>
            <person name="Arrowsmith C."/>
            <person name="Raught B."/>
        </authorList>
    </citation>
    <scope>IDENTIFICATION IN THE SIFI COMPLEX</scope>
</reference>
<reference key="35">
    <citation type="journal article" date="2015" name="Proteomics">
        <title>N-terminome analysis of the human mitochondrial proteome.</title>
        <authorList>
            <person name="Vaca Jacome A.S."/>
            <person name="Rabilloud T."/>
            <person name="Schaeffer-Reiss C."/>
            <person name="Rompais M."/>
            <person name="Ayoub D."/>
            <person name="Lane L."/>
            <person name="Bairoch A."/>
            <person name="Van Dorsselaer A."/>
            <person name="Carapito C."/>
        </authorList>
    </citation>
    <scope>ACETYLATION [LARGE SCALE ANALYSIS] AT ALA-2</scope>
    <scope>CLEAVAGE OF INITIATOR METHIONINE [LARGE SCALE ANALYSIS]</scope>
    <scope>IDENTIFICATION BY MASS SPECTROMETRY [LARGE SCALE ANALYSIS]</scope>
</reference>
<reference key="36">
    <citation type="journal article" date="2017" name="Mol. Cell">
        <title>The ER-Localized Transmembrane Protein EPG-3/VMP1 Regulates SERCA Activity to Control ER-Isolation Membrane Contacts for Autophagosome Formation.</title>
        <authorList>
            <person name="Zhao Y.G."/>
            <person name="Chen Y."/>
            <person name="Miao G."/>
            <person name="Zhao H."/>
            <person name="Qu W."/>
            <person name="Li D."/>
            <person name="Wang Z."/>
            <person name="Liu N."/>
            <person name="Li L."/>
            <person name="Chen S."/>
            <person name="Liu P."/>
            <person name="Feng D."/>
            <person name="Zhang H."/>
        </authorList>
    </citation>
    <scope>FUNCTION</scope>
    <scope>INTERACTION WITH PIK3C3</scope>
</reference>
<reference key="37">
    <citation type="journal article" date="2017" name="Nat. Struct. Mol. Biol.">
        <title>Site-specific mapping of the human SUMO proteome reveals co-modification with phosphorylation.</title>
        <authorList>
            <person name="Hendriks I.A."/>
            <person name="Lyon D."/>
            <person name="Young C."/>
            <person name="Jensen L.J."/>
            <person name="Vertegaal A.C."/>
            <person name="Nielsen M.L."/>
        </authorList>
    </citation>
    <scope>SUMOYLATION [LARGE SCALE ANALYSIS] AT LYS-22</scope>
    <scope>IDENTIFICATION BY MASS SPECTROMETRY [LARGE SCALE ANALYSIS]</scope>
</reference>
<reference key="38">
    <citation type="journal article" date="2018" name="Cell Rep.">
        <title>Regulation of KIF1A-Driven Dense Core Vesicle Transport: Ca2+/CaM Controls DCV Binding and Liprin-alpha/TANC2 Recruits DCVs to Postsynaptic Sites.</title>
        <authorList>
            <person name="Stucchi R."/>
            <person name="Plucinska G."/>
            <person name="Hummel J.J.A."/>
            <person name="Zahavi E.E."/>
            <person name="Guerra San Juan I."/>
            <person name="Klykov O."/>
            <person name="Scheltema R.A."/>
            <person name="Altelaar A.F.M."/>
            <person name="Hoogenraad C.C."/>
        </authorList>
    </citation>
    <scope>INTERACTION WITH KIF1A</scope>
</reference>
<reference key="39">
    <citation type="journal article" date="2018" name="Sci. Rep.">
        <title>Calcineurin B homologous protein 3 binds with high affinity to the CHP binding domain of the human sodium/proton exchanger NHE1.</title>
        <authorList>
            <person name="Fuchs S."/>
            <person name="Hansen S.C."/>
            <person name="Markones M."/>
            <person name="Mymrikov E.V."/>
            <person name="Heerklotz H."/>
            <person name="Hunte C."/>
        </authorList>
    </citation>
    <scope>INTERACTION WITH SLC9A1</scope>
</reference>
<reference key="40">
    <citation type="journal article" date="2019" name="Am. J. Hum. Genet.">
        <title>Gain-of-function mutations in KCNN3 encoding the small-conductance Ca2+-activated K+ channel SK3 cause Zimmermann-Laband syndrome.</title>
        <authorList>
            <person name="Bauer C.K."/>
            <person name="Schneeberger P.E."/>
            <person name="Kortuem F."/>
            <person name="Altmueller J."/>
            <person name="Santos-Simarro F."/>
            <person name="Baker L."/>
            <person name="Keller-Ramey J."/>
            <person name="White S.M."/>
            <person name="Campeau P.M."/>
            <person name="Gripp K.W."/>
            <person name="Kutsche K."/>
        </authorList>
    </citation>
    <scope>INTERACTION WITH KCNN3</scope>
</reference>
<reference key="41">
    <citation type="journal article" date="2019" name="Nature">
        <title>Inhibition of bacterial ubiquitin ligases by SidJ-calmodulin catalysed glutamylation.</title>
        <authorList>
            <person name="Bhogaraju S."/>
            <person name="Bonn F."/>
            <person name="Mukherjee R."/>
            <person name="Adams M."/>
            <person name="Pfleiderer M.M."/>
            <person name="Galej W.P."/>
            <person name="Matkovic V."/>
            <person name="Lopez-Mosqueda J."/>
            <person name="Kalayil S."/>
            <person name="Shin D."/>
            <person name="Dikic I."/>
        </authorList>
    </citation>
    <scope>INTERACTION WITH LEGIONELLA PNEUMOPHILA SIDJ (MICROBIAL INFECTION)</scope>
    <scope>FUNCTION (MICROBIAL INFECTION)</scope>
</reference>
<reference key="42">
    <citation type="journal article" date="2021" name="J. Struct. Biol.">
        <title>Calmodulin binds to the STAS domain of SLC26A5 prestin with a calcium-dependent, one-lobe, binding mode.</title>
        <authorList>
            <person name="Costanzi E."/>
            <person name="Coletti A."/>
            <person name="Zambelli B."/>
            <person name="Macchiarulo A."/>
            <person name="Bellanda M."/>
            <person name="Battistutta R."/>
        </authorList>
    </citation>
    <scope>INTERACTION WITH SLC26A5</scope>
</reference>
<reference key="43">
    <citation type="journal article" date="2022" name="Mol. Cell">
        <title>Pathogen hijacks programmed cell death signaling by arginine ADPR-deacylization of caspases.</title>
        <authorList>
            <person name="Peng T."/>
            <person name="Tao X."/>
            <person name="Xia Z."/>
            <person name="Hu S."/>
            <person name="Xue J."/>
            <person name="Zhu Q."/>
            <person name="Pan X."/>
            <person name="Zhang Q."/>
            <person name="Li S."/>
        </authorList>
    </citation>
    <scope>INTERACTION WITH C.VIOLACEUM COPC TOXIN (MICROBIAL INFECTION)</scope>
    <scope>FUNCTION (MICROBIAL INFECTION)</scope>
</reference>
<reference key="44">
    <citation type="journal article" date="2022" name="MBio">
        <title>Calmodulin binding activates chromobacterium CopC effector to ADP-riboxanate host apoptotic caspases.</title>
        <authorList>
            <person name="Liu Y."/>
            <person name="Zeng H."/>
            <person name="Hou Y."/>
            <person name="Li Z."/>
            <person name="Li L."/>
            <person name="Song X."/>
            <person name="Ding J."/>
            <person name="Shao F."/>
            <person name="Xu Y."/>
        </authorList>
    </citation>
    <scope>INTERACTION WITH C.VIOLACEUM COPC TOXIN (MICROBIAL INFECTION)</scope>
    <scope>FUNCTION (MICROBIAL INFECTION)</scope>
</reference>
<reference key="45">
    <citation type="journal article" date="2022" name="Cell">
        <title>A family of conserved bacterial virulence factors dampens interferon responses by blocking calcium signaling.</title>
        <authorList>
            <person name="Alphonse N."/>
            <person name="Wanford J.J."/>
            <person name="Voak A.A."/>
            <person name="Gay J."/>
            <person name="Venkhaya S."/>
            <person name="Burroughs O."/>
            <person name="Mathew S."/>
            <person name="Lee T."/>
            <person name="Evans S.L."/>
            <person name="Zhao W."/>
            <person name="Frowde K."/>
            <person name="Alrehaili A."/>
            <person name="Dickenson R.E."/>
            <person name="Munk M."/>
            <person name="Panina S."/>
            <person name="Mahmood I.F."/>
            <person name="Llorian M."/>
            <person name="Stanifer M.L."/>
            <person name="Boulant S."/>
            <person name="Berchtold M.W."/>
            <person name="Bergeron J.R.C."/>
            <person name="Wack A."/>
            <person name="Lesser C.F."/>
            <person name="Odendall C."/>
        </authorList>
    </citation>
    <scope>FUNCTION</scope>
    <scope>ACTIVITY REGULATION (MICROBIAL INFECTION)</scope>
    <scope>INTERACTION WITH S.FLEXNERI OSPC1 AND OSPC3 (MICROBIAL INFECTION)</scope>
</reference>
<reference key="46">
    <citation type="journal article" date="2024" name="Nature">
        <title>Stress response silencing by an E3 ligase mutated in neurodegeneration.</title>
        <authorList>
            <person name="Haakonsen D.L."/>
            <person name="Heider M."/>
            <person name="Ingersoll A.J."/>
            <person name="Vodehnal K."/>
            <person name="Witus S.R."/>
            <person name="Uenaka T."/>
            <person name="Wernig M."/>
            <person name="Rape M."/>
        </authorList>
    </citation>
    <scope>IDENTIFICATION IN THE SIFI COMPLEX</scope>
</reference>
<reference key="47">
    <citation type="journal article" date="1999" name="Proc. Natl. Acad. Sci. U.S.A.">
        <title>Alpha-helix nucleation by a calcium-binding peptide loop.</title>
        <authorList>
            <person name="Siedlecka M."/>
            <person name="Goch G."/>
            <person name="Ejchart A."/>
            <person name="Sticht H."/>
            <person name="Bierzyski A."/>
        </authorList>
    </citation>
    <scope>STRUCTURE BY NMR OF 95-104</scope>
</reference>
<reference key="48">
    <citation type="journal article" date="2001" name="Nat. Struct. Biol.">
        <title>Solution structure of Ca(2+)-calmodulin reveals flexible hand-like properties of its domains.</title>
        <authorList>
            <person name="Chou J.J."/>
            <person name="Li S."/>
            <person name="Klee C.B."/>
            <person name="Bax A."/>
        </authorList>
    </citation>
    <scope>STRUCTURE BY NMR OF 1-77 AND 83-149</scope>
</reference>
<reference evidence="61" key="49">
    <citation type="journal article" date="1992" name="J. Mol. Biol.">
        <title>Calmodulin structure refined at 1.7 A resolution.</title>
        <authorList>
            <person name="Chattopadhyaya R."/>
            <person name="Meador W.E."/>
            <person name="Means A.R."/>
            <person name="Quiocho F.A."/>
        </authorList>
    </citation>
    <scope>X-RAY CRYSTALLOGRAPHY (1.7 ANGSTROMS) IN COMPLEX WITH CALCIUM</scope>
    <scope>CALCIUM-BINDING SITES</scope>
</reference>
<reference key="50">
    <citation type="journal article" date="1994" name="Biochemistry">
        <title>Drug binding by calmodulin: crystal structure of a calmodulin-trifluoperazine complex.</title>
        <authorList>
            <person name="Cook W.J."/>
            <person name="Walter L.J."/>
            <person name="Walter M.R."/>
        </authorList>
    </citation>
    <scope>X-RAY CRYSTALLOGRAPHY (2.45 ANGSTROMS)</scope>
</reference>
<reference key="51">
    <citation type="journal article" date="2002" name="Nature">
        <title>Structural basis for the activation of anthrax adenylyl cyclase exotoxin by calmodulin.</title>
        <authorList>
            <person name="Drum C.L."/>
            <person name="Yan S.-Z."/>
            <person name="Bard J."/>
            <person name="Shen Y.-Q."/>
            <person name="Lu D."/>
            <person name="Soelaiman S."/>
            <person name="Grabarek Z."/>
            <person name="Bohm A."/>
            <person name="Tang W.-J."/>
        </authorList>
    </citation>
    <scope>X-RAY CRYSTALLOGRAPHY (2.75 ANGSTROMS) OF 6-149</scope>
</reference>
<reference key="52">
    <citation type="journal article" date="2002" name="EMBO J.">
        <title>Physiological calcium concentrations regulate calmodulin binding and catalysis of adenylyl cyclase exotoxins.</title>
        <authorList>
            <person name="Shen Y."/>
            <person name="Lee Y.-S."/>
            <person name="Soelaiman S."/>
            <person name="Bergson P."/>
            <person name="Lu D."/>
            <person name="Chen A."/>
            <person name="Beckingham K."/>
            <person name="Grabarek Z."/>
            <person name="Mrksich M."/>
            <person name="Tang W.-J."/>
        </authorList>
    </citation>
    <scope>X-RAY CRYSTALLOGRAPHY (3.6 ANGSTROMS) OF 1-149 IN COMPLEX WITH ANTHRAX EDEMA FACTOR CYA</scope>
</reference>
<reference key="53">
    <citation type="journal article" date="2003" name="Nat. Struct. Biol.">
        <title>Crystal structure of a MARCKS peptide containing the calmodulin-binding domain in complex with Ca2+-calmodulin.</title>
        <authorList>
            <person name="Yamauchi E."/>
            <person name="Nakatsu T."/>
            <person name="Matsubara M."/>
            <person name="Kato H."/>
            <person name="Taniguchi H."/>
        </authorList>
    </citation>
    <scope>X-RAY CRYSTALLOGRAPHY (2.0 ANGSTROMS) IN COMPLEX WITH MARCKS</scope>
</reference>
<reference key="54">
    <citation type="journal article" date="2005" name="Nat. Struct. Mol. Biol.">
        <title>Insights into voltage-gated calcium channel regulation from the structure of the CaV1.2 IQ domain-Ca2+/calmodulin complex.</title>
        <authorList>
            <person name="Van Petegem F."/>
            <person name="Chatelain F.C."/>
            <person name="Minor D.L. Jr."/>
        </authorList>
    </citation>
    <scope>X-RAY CRYSTALLOGRAPHY (2.0 ANGSTROMS) OF 1-150 IN COMPLEX WITH CACNA1C</scope>
</reference>
<reference key="55">
    <citation type="journal article" date="2005" name="EMBO J.">
        <title>Calcium-independent calmodulin binding and two-metal-ion catalytic mechanism of anthrax edema factor.</title>
        <authorList>
            <person name="Shen Y."/>
            <person name="Zhukovskaya N.L."/>
            <person name="Guo Q."/>
            <person name="Florian J."/>
            <person name="Tang W.-J."/>
        </authorList>
    </citation>
    <scope>X-RAY CRYSTALLOGRAPHY (3.2 ANGSTROMS) IN COMPLEX WITH ANTHRAX EDEMA FACTOR CYA</scope>
</reference>
<reference key="56">
    <citation type="journal article" date="2011" name="J. Mol. Biol.">
        <title>Solution NMR structure of Apo-calmodulin in complex with the IQ motif of human cardiac sodium channel NaV1.5.</title>
        <authorList>
            <person name="Chagot B."/>
            <person name="Chazin W.J."/>
        </authorList>
    </citation>
    <scope>STRUCTURE BY NMR IN COMPLEX WITH SCN5A</scope>
</reference>
<reference key="57">
    <citation type="journal article" date="2013" name="Nat. Struct. Mol. Biol.">
        <title>Allosteric mechanism of water-channel gating by Ca(2+)-calmodulin.</title>
        <authorList>
            <person name="Reichow S.L."/>
            <person name="Clemens D.M."/>
            <person name="Freites J.A."/>
            <person name="Nemeth-Cahalan K.L."/>
            <person name="Heyden M."/>
            <person name="Tobias D.J."/>
            <person name="Hall J.E."/>
            <person name="Gonen T."/>
        </authorList>
    </citation>
    <scope>STRUCTURE BY ELECTRON MICROSCOPY (25 ANGSTROMS) IN COMPLEX WITH MIP</scope>
    <scope>FUNCTION</scope>
    <scope>INTERACTION WITH MIP</scope>
</reference>
<reference evidence="63 64" key="58">
    <citation type="journal article" date="2014" name="Structure">
        <title>Structural basis of a Kv7.1 potassium channel gating module: studies of the intracellular c-terminal domain in complex with calmodulin.</title>
        <authorList>
            <person name="Sachyani D."/>
            <person name="Dvir M."/>
            <person name="Strulovich R."/>
            <person name="Tria G."/>
            <person name="Tobelaim W."/>
            <person name="Peretz A."/>
            <person name="Pongs O."/>
            <person name="Svergun D."/>
            <person name="Attali B."/>
            <person name="Hirsch J.A."/>
        </authorList>
    </citation>
    <scope>X-RAY CRYSTALLOGRAPHY (2.86 ANGSTROMS) IN COMPLEX WITH KCNQ1 AND CALCIUM</scope>
    <scope>FUNCTION</scope>
    <scope>INTERACTION WITH KCNQ1</scope>
    <scope>DOMAIN</scope>
</reference>
<reference evidence="65" key="59">
    <citation type="journal article" date="2016" name="Biochemistry">
        <title>Structural insights into the M-channel proximal C-terminus/calmodulin complex.</title>
        <authorList>
            <person name="Strulovich R."/>
            <person name="Tobelaim W.S."/>
            <person name="Attali B."/>
            <person name="Hirsch J.A."/>
        </authorList>
    </citation>
    <scope>X-RAY CRYSTALLOGRAPHY (2.00 ANGSTROMS) IN COMPLEX WITH CALCIUM; KCNQ2 AND KCNQ3</scope>
    <scope>INTERACTION WITH KCNQ2 AND KCNQ3</scope>
    <scope>CALCIUM-BINDING SITES</scope>
</reference>
<reference evidence="62" key="60">
    <citation type="journal article" date="2016" name="Nat. Commun.">
        <title>PEP-19 modulates calcium binding to calmodulin by electrostatic steering.</title>
        <authorList>
            <person name="Wang X."/>
            <person name="Putkey J.A."/>
        </authorList>
    </citation>
    <scope>STRUCTURE BY NMR OF 77-149 IN COMPLEX WITH PCP4</scope>
    <scope>INTERACTION WITH PCP4</scope>
    <scope>REGION</scope>
</reference>
<reference key="61">
    <citation type="journal article" date="2013" name="Biochemistry">
        <title>NMR structure of calmodulin complexed to an N-terminally acetylated alpha-synuclein peptide.</title>
        <authorList>
            <person name="Gruschus J.M."/>
            <person name="Yap T.L."/>
            <person name="Pistolesi S."/>
            <person name="Maltsev A.S."/>
            <person name="Lee J.C."/>
        </authorList>
    </citation>
    <scope>STRUCTURE BY NMR</scope>
    <scope>INTERACTION WITH ALPHA-SYNUCLEIN/SNCA</scope>
</reference>
<reference evidence="66 67 68" key="62">
    <citation type="journal article" date="2018" name="Science">
        <title>Activation mechanism of a human SK-calmodulin channel complex elucidated by cryo-EM structures.</title>
        <authorList>
            <person name="Lee C.H."/>
            <person name="MacKinnon R."/>
        </authorList>
    </citation>
    <scope>STRUCTURE BY ELECTRON MICROSCOPY (3.40 ANGSTROMS) IN COMPLEX WITH KCNN4 AND CALCIUM</scope>
    <scope>SUBUNIT</scope>
    <scope>DOMAIN</scope>
</reference>
<reference key="63">
    <citation type="journal article" date="2022" name="Mol. Cell">
        <title>Structural insights into caspase ADPR deacylization catalyzed by a bacterial effector and host calmodulin.</title>
        <authorList>
            <person name="Zhang K."/>
            <person name="Peng T."/>
            <person name="Tao X."/>
            <person name="Tian M."/>
            <person name="Li Y."/>
            <person name="Wang Z."/>
            <person name="Ma S."/>
            <person name="Hu S."/>
            <person name="Pan X."/>
            <person name="Xue J."/>
            <person name="Luo J."/>
            <person name="Wu Q."/>
            <person name="Fu Y."/>
            <person name="Li S."/>
        </authorList>
    </citation>
    <scope>STRUCTURE BY ELECTRON MICROSCOPY (3.18 ANGSTROMS) IN COMPLEX WITH C.VIOLACEUM COPC AND CASP3</scope>
    <scope>INTERACTION WITH C.VIOLACEUM COPC TOXIN (MICROBIAL INFECTION)</scope>
    <scope>FUNCTION (MICROBIAL INFECTION)</scope>
</reference>
<reference evidence="69 70" key="64">
    <citation type="journal article" date="2023" name="Nat. Struct. Mol. Biol.">
        <title>Structural mechanisms of calmodulin activation of Shigella effector OspC3 to ADP-riboxanate caspase-4/11 and block pyroptosis.</title>
        <authorList>
            <person name="Hou Y."/>
            <person name="Zeng H."/>
            <person name="Li Z."/>
            <person name="Feng N."/>
            <person name="Meng F."/>
            <person name="Xu Y."/>
            <person name="Li L."/>
            <person name="Shao F."/>
            <person name="Ding J."/>
        </authorList>
    </citation>
    <scope>X-RAY CRYSTALLOGRAPHY (1.96 ANGSTROMS) OF 102-377 IN COMPLEX WITH CASP4 AND S.FLEXNERI OSPC3</scope>
    <scope>FUNCTION (MICROBIAL INFECTION)</scope>
    <scope>INTERACTION WITH S.FLEXNERI OSPC3 (MICROBIAL INFECTION)</scope>
</reference>
<reference key="65">
    <citation type="journal article" date="2012" name="Am. J. Hum. Genet.">
        <title>Mutations in calmodulin cause ventricular tachycardia and sudden cardiac death.</title>
        <authorList>
            <person name="Nyegaard M."/>
            <person name="Overgaard M.T."/>
            <person name="Sondergaard M.T."/>
            <person name="Vranas M."/>
            <person name="Behr E.R."/>
            <person name="Hildebrandt L.L."/>
            <person name="Lund J."/>
            <person name="Hedley P.L."/>
            <person name="Camm A.J."/>
            <person name="Wettrell G."/>
            <person name="Fosdal I."/>
            <person name="Christiansen M."/>
            <person name="Borglum A.D."/>
        </authorList>
    </citation>
    <scope>INVOLVEMENT IN CPVT4</scope>
    <scope>VARIANTS CPVT4 ILE-54 AND SER-98</scope>
    <scope>CHARACTERIZATION OF VARIANTS CPVT4 ILE-54 AND SER-98</scope>
</reference>
<reference key="66">
    <citation type="journal article" date="2013" name="Circulation">
        <title>Calmodulin mutations associated with recurrent cardiac arrest in infants.</title>
        <authorList>
            <person name="Crotti L."/>
            <person name="Johnson C.N."/>
            <person name="Graf E."/>
            <person name="De Ferrari G.M."/>
            <person name="Cuneo B.F."/>
            <person name="Ovadia M."/>
            <person name="Papagiannis J."/>
            <person name="Feldkamp M.D."/>
            <person name="Rathi S.G."/>
            <person name="Kunic J.D."/>
            <person name="Pedrazzini M."/>
            <person name="Wieland T."/>
            <person name="Lichtner P."/>
            <person name="Beckmann B.M."/>
            <person name="Clark T."/>
            <person name="Shaffer C."/>
            <person name="Benson D.W."/>
            <person name="Kaab S."/>
            <person name="Meitinger T."/>
            <person name="Strom T.M."/>
            <person name="Chazin W.J."/>
            <person name="Schwartz P.J."/>
            <person name="George A.L. Jr."/>
        </authorList>
    </citation>
    <scope>INVOLVEMENT IN LQT14</scope>
    <scope>VARIANTS LQT14 GLY-130 AND LEU-142</scope>
    <scope>CHARACTERIZATION OF VARIANTS LQT14 GLY-130 AND LEU-142</scope>
</reference>
<reference key="67">
    <citation type="journal article" date="2014" name="FEBS Lett.">
        <title>Altered RyR2 regulation by the calmodulin F90L mutation associated with idiopathic ventricular fibrillation and early sudden cardiac death.</title>
        <authorList>
            <person name="Nomikos M."/>
            <person name="Thanassoulas A."/>
            <person name="Beck K."/>
            <person name="Vassilakopoulou V."/>
            <person name="Hu H."/>
            <person name="Calver B.L."/>
            <person name="Theodoridou M."/>
            <person name="Kashir J."/>
            <person name="Blayney L."/>
            <person name="Livaniou E."/>
            <person name="Rizkallah P."/>
            <person name="Nounesis G."/>
            <person name="Lai F.A."/>
        </authorList>
    </citation>
    <scope>CHARACTERIZATION OF VARIANT LQT14 LEU-90</scope>
</reference>
<reference key="68">
    <citation type="journal article" date="2014" name="J. Am. Coll. Cardiol.">
        <title>A mutation in CALM1 encoding calmodulin in familial idiopathic ventricular fibrillation in childhood and adolescence.</title>
        <authorList>
            <person name="Marsman R.F."/>
            <person name="Barc J."/>
            <person name="Beekman L."/>
            <person name="Alders M."/>
            <person name="Dooijes D."/>
            <person name="van den Wijngaard A."/>
            <person name="Ratbi I."/>
            <person name="Sefiani A."/>
            <person name="Bhuiyan Z.A."/>
            <person name="Wilde A.A."/>
            <person name="Bezzina C.R."/>
        </authorList>
    </citation>
    <scope>INVOLVEMENT IN LQT14</scope>
    <scope>VARIANT LQT14 LEU-90</scope>
</reference>
<reference key="69">
    <citation type="journal article" date="2015" name="Biochim. Biophys. Acta">
        <title>Distinctive malfunctions of calmodulin mutations associated with heart RyR2-mediated arrhythmic disease.</title>
        <authorList>
            <person name="Vassilakopoulou V."/>
            <person name="Calver B.L."/>
            <person name="Thanassoulas A."/>
            <person name="Beck K."/>
            <person name="Hu H."/>
            <person name="Buntwal L."/>
            <person name="Smith A."/>
            <person name="Theodoridou M."/>
            <person name="Kashir J."/>
            <person name="Blayney L."/>
            <person name="Livaniou E."/>
            <person name="Nounesis G."/>
            <person name="Lai F.A."/>
            <person name="Nomikos M."/>
        </authorList>
    </citation>
    <scope>VARIANTS CPVT4 ILE-54 AND SER-98</scope>
    <scope>CHARACTERIZATION OF VARIANTS CPVT4 ILE-54 AND SER-98</scope>
    <scope>VARIANTS LQT14 GLY-130 AND LEU-142</scope>
    <scope>CHARACTERIZATION OF VARIANTS LQT14 GLY-130 AND LEU-142</scope>
    <scope>INTERACTION WITH RYR2</scope>
</reference>
<reference key="70">
    <citation type="journal article" date="2016" name="Circ. Arrhythm. Electrophysiol.">
        <title>Novel CPVT-Associated Calmodulin Mutation in CALM3 (CALM3-A103V) Activates Arrhythmogenic Ca Waves and Sparks.</title>
        <authorList>
            <person name="Gomez-Hurtado N."/>
            <person name="Boczek N.J."/>
            <person name="Kryshtal D.O."/>
            <person name="Johnson C.N."/>
            <person name="Sun J."/>
            <person name="Nitu F.R."/>
            <person name="Cornea R.L."/>
            <person name="Chazin W.J."/>
            <person name="Calvert M.L."/>
            <person name="Tester D.J."/>
            <person name="Ackerman M.J."/>
            <person name="Knollmann B.C."/>
        </authorList>
    </citation>
    <scope>VARIANTS CPVT4 ILE-54 AND SER-98</scope>
    <scope>CHARACTERIZATION OF VARIANTS CPVT4 ILE-54; SER-98</scope>
    <scope>INTERACTION WITH RYR2</scope>
</reference>
<reference key="71">
    <citation type="journal article" date="2016" name="Circ. Cardiovasc. Genet.">
        <title>Spectrum and Prevalence of CALM1-, CALM2-, and CALM3-Encoded Calmodulin Variants in Long QT Syndrome and Functional Characterization of a Novel Long QT Syndrome-Associated Calmodulin Missense Variant, E141G.</title>
        <authorList>
            <person name="Boczek N.J."/>
            <person name="Gomez-Hurtado N."/>
            <person name="Ye D."/>
            <person name="Calvert M.L."/>
            <person name="Tester D.J."/>
            <person name="Kryshtal D.O."/>
            <person name="Hwang H.S."/>
            <person name="Johnson C.N."/>
            <person name="Chazin W.J."/>
            <person name="Loporcaro C.G."/>
            <person name="Shah M."/>
            <person name="Papez A.L."/>
            <person name="Lau Y.R."/>
            <person name="Kanter R."/>
            <person name="Knollmann B.C."/>
            <person name="Ackerman M.J."/>
        </authorList>
    </citation>
    <scope>VARIANTS LQT14 GLY-141 AND LEU-142</scope>
    <scope>CHARACTERIZATION OF VARIANT LQT14 GLY-141</scope>
    <scope>FUNCTION</scope>
</reference>
<reference key="72">
    <citation type="journal article" date="2016" name="Heart Rhythm">
        <title>Arrhythmogenic calmodulin mutations impede activation of small-conductance calcium-activated potassium current.</title>
        <authorList>
            <person name="Yu C.C."/>
            <person name="Ko J.S."/>
            <person name="Ai T."/>
            <person name="Tsai W.C."/>
            <person name="Chen Z."/>
            <person name="Rubart M."/>
            <person name="Vatta M."/>
            <person name="Everett T.H. IV"/>
            <person name="George A.L. Jr."/>
            <person name="Chen P.S."/>
        </authorList>
    </citation>
    <scope>VARIANTS CPVT4 ILE-54 AND SER-98</scope>
    <scope>CHARACTERIZATION OF VARIANTS CPVT4 ILE-54 AND SER-98</scope>
    <scope>VARIANTS LQT14 LEU-90 AND GLY-130</scope>
    <scope>CHARACTERIZATION OF VARIANTS LQT14 LEU-90 AND GLY-130</scope>
    <scope>FUNCTION</scope>
</reference>
<reference key="73">
    <citation type="journal article" date="2017" name="Cardiovasc. Res.">
        <title>Elucidating arrhythmogenic mechanisms of long-QT syndrome CALM1-F142L mutation in patient-specific induced pluripotent stem cell-derived cardiomyocytes.</title>
        <authorList>
            <person name="Rocchetti M."/>
            <person name="Sala L."/>
            <person name="Dreizehnter L."/>
            <person name="Crotti L."/>
            <person name="Sinnecker D."/>
            <person name="Mura M."/>
            <person name="Pane L.S."/>
            <person name="Altomare C."/>
            <person name="Torre E."/>
            <person name="Mostacciuolo G."/>
            <person name="Severi S."/>
            <person name="Porta A."/>
            <person name="De Ferrari G.M."/>
            <person name="George A.L. Jr."/>
            <person name="Schwartz P.J."/>
            <person name="Gnecchi M."/>
            <person name="Moretti A."/>
            <person name="Zaza A."/>
        </authorList>
    </citation>
    <scope>CHARACTERIZATION OF VARIANT LQT14 LEU-142</scope>
</reference>
<reference key="74">
    <citation type="journal article" date="2019" name="Circ. Genom. Precis. Med.">
        <title>Genetic mosaicism in calmodulinopathy.</title>
        <authorList>
            <person name="Wren L.M."/>
            <person name="Jimenez-Jaimez J."/>
            <person name="Al-Ghamdi S."/>
            <person name="Al-Aama J.Y."/>
            <person name="Bdeir A."/>
            <person name="Al-Hassnan Z.N."/>
            <person name="Kuan J.L."/>
            <person name="Foo R.Y."/>
            <person name="Potet F."/>
            <person name="Johnson C.N."/>
            <person name="Aziz M.C."/>
            <person name="Carvill G.L."/>
            <person name="Kaski J.P."/>
            <person name="Crotti L."/>
            <person name="Perin F."/>
            <person name="Monserrat L."/>
            <person name="Burridge P.W."/>
            <person name="Schwartz P.J."/>
            <person name="Chazin W.J."/>
            <person name="Bhuiyan Z.A."/>
            <person name="George A.L. Jr."/>
        </authorList>
    </citation>
    <scope>VARIANT LQT14 VAL-141</scope>
    <scope>CHARACTERIZATION OF VARIANT LQT14 VAL-141</scope>
    <scope>FUNCTION</scope>
</reference>
<dbReference type="EMBL" id="M27319">
    <property type="protein sequence ID" value="AAA35635.1"/>
    <property type="molecule type" value="mRNA"/>
</dbReference>
<dbReference type="EMBL" id="U12022">
    <property type="protein sequence ID" value="AAB60644.1"/>
    <property type="molecule type" value="Genomic_DNA"/>
</dbReference>
<dbReference type="EMBL" id="U11886">
    <property type="protein sequence ID" value="AAB60644.1"/>
    <property type="status" value="JOINED"/>
    <property type="molecule type" value="Genomic_DNA"/>
</dbReference>
<dbReference type="EMBL" id="BT006818">
    <property type="protein sequence ID" value="AAP35464.1"/>
    <property type="molecule type" value="mRNA"/>
</dbReference>
<dbReference type="EMBL" id="AC006536">
    <property type="protein sequence ID" value="AAD45181.1"/>
    <property type="molecule type" value="Genomic_DNA"/>
</dbReference>
<dbReference type="EMBL" id="AL512791">
    <property type="status" value="NOT_ANNOTATED_CDS"/>
    <property type="molecule type" value="Genomic_DNA"/>
</dbReference>
<dbReference type="EMBL" id="BC000454">
    <property type="protein sequence ID" value="AAH00454.1"/>
    <property type="molecule type" value="mRNA"/>
</dbReference>
<dbReference type="EMBL" id="BC008597">
    <property type="protein sequence ID" value="AAH08597.1"/>
    <property type="molecule type" value="mRNA"/>
</dbReference>
<dbReference type="EMBL" id="BC011834">
    <property type="protein sequence ID" value="AAH11834.1"/>
    <property type="molecule type" value="mRNA"/>
</dbReference>
<dbReference type="EMBL" id="BC047523">
    <property type="status" value="NOT_ANNOTATED_CDS"/>
    <property type="molecule type" value="mRNA"/>
</dbReference>
<dbReference type="CCDS" id="CCDS9892.1"/>
<dbReference type="PIR" id="S48728">
    <property type="entry name" value="MCHU"/>
</dbReference>
<dbReference type="RefSeq" id="NP_001316851.1">
    <property type="nucleotide sequence ID" value="NM_001329922.1"/>
</dbReference>
<dbReference type="RefSeq" id="NP_001734.1">
    <property type="nucleotide sequence ID" value="NM_001743.5"/>
</dbReference>
<dbReference type="RefSeq" id="NP_005175.2">
    <property type="nucleotide sequence ID" value="NM_005184.3"/>
</dbReference>
<dbReference type="RefSeq" id="NP_008819.1">
    <property type="nucleotide sequence ID" value="NM_006888.6"/>
</dbReference>
<dbReference type="PDB" id="1CDL">
    <property type="method" value="X-ray"/>
    <property type="resolution" value="2.00 A"/>
    <property type="chains" value="A/B/C/D=2-148"/>
</dbReference>
<dbReference type="PDB" id="1CLL">
    <property type="method" value="X-ray"/>
    <property type="resolution" value="1.70 A"/>
    <property type="chains" value="A=2-149"/>
</dbReference>
<dbReference type="PDB" id="1CTR">
    <property type="method" value="X-ray"/>
    <property type="resolution" value="2.45 A"/>
    <property type="chains" value="A=2-149"/>
</dbReference>
<dbReference type="PDB" id="1IWQ">
    <property type="method" value="X-ray"/>
    <property type="resolution" value="2.00 A"/>
    <property type="chains" value="A=2-149"/>
</dbReference>
<dbReference type="PDB" id="1J7O">
    <property type="method" value="NMR"/>
    <property type="chains" value="A=2-77"/>
</dbReference>
<dbReference type="PDB" id="1J7P">
    <property type="method" value="NMR"/>
    <property type="chains" value="A=83-149"/>
</dbReference>
<dbReference type="PDB" id="1K90">
    <property type="method" value="X-ray"/>
    <property type="resolution" value="2.75 A"/>
    <property type="chains" value="D/E/F=2-149"/>
</dbReference>
<dbReference type="PDB" id="1K93">
    <property type="method" value="X-ray"/>
    <property type="resolution" value="2.95 A"/>
    <property type="chains" value="D/E/F=6-149"/>
</dbReference>
<dbReference type="PDB" id="1L7Z">
    <property type="method" value="X-ray"/>
    <property type="resolution" value="2.30 A"/>
    <property type="chains" value="A=2-149"/>
</dbReference>
<dbReference type="PDB" id="1LVC">
    <property type="method" value="X-ray"/>
    <property type="resolution" value="3.60 A"/>
    <property type="chains" value="D/E/F=1-149"/>
</dbReference>
<dbReference type="PDB" id="1NKF">
    <property type="method" value="NMR"/>
    <property type="chains" value="A=94-105"/>
</dbReference>
<dbReference type="PDB" id="1PK0">
    <property type="method" value="X-ray"/>
    <property type="resolution" value="3.30 A"/>
    <property type="chains" value="D/E/F=2-148"/>
</dbReference>
<dbReference type="PDB" id="1S26">
    <property type="method" value="X-ray"/>
    <property type="resolution" value="3.00 A"/>
    <property type="chains" value="D/E/F=2-149"/>
</dbReference>
<dbReference type="PDB" id="1SK6">
    <property type="method" value="X-ray"/>
    <property type="resolution" value="3.20 A"/>
    <property type="chains" value="D/E/F=2-149"/>
</dbReference>
<dbReference type="PDB" id="1SW8">
    <property type="method" value="NMR"/>
    <property type="chains" value="A=2-80"/>
</dbReference>
<dbReference type="PDB" id="1UP5">
    <property type="method" value="X-ray"/>
    <property type="resolution" value="1.90 A"/>
    <property type="chains" value="A/B=2-149"/>
</dbReference>
<dbReference type="PDB" id="1WRZ">
    <property type="method" value="X-ray"/>
    <property type="resolution" value="2.00 A"/>
    <property type="chains" value="A=1-149"/>
</dbReference>
<dbReference type="PDB" id="1XFU">
    <property type="method" value="X-ray"/>
    <property type="resolution" value="3.35 A"/>
    <property type="chains" value="O/P/Q/R/S/T=1-149"/>
</dbReference>
<dbReference type="PDB" id="1XFV">
    <property type="method" value="X-ray"/>
    <property type="resolution" value="3.35 A"/>
    <property type="chains" value="O/P/Q/R/S/T=1-149"/>
</dbReference>
<dbReference type="PDB" id="1XFW">
    <property type="method" value="X-ray"/>
    <property type="resolution" value="3.40 A"/>
    <property type="chains" value="O/P/Q/R/S/T=1-149"/>
</dbReference>
<dbReference type="PDB" id="1XFX">
    <property type="method" value="X-ray"/>
    <property type="resolution" value="3.20 A"/>
    <property type="chains" value="O/P/Q/R/S/T=1-149"/>
</dbReference>
<dbReference type="PDB" id="1XFY">
    <property type="method" value="X-ray"/>
    <property type="resolution" value="3.30 A"/>
    <property type="chains" value="O/P/Q/R/S/T=1-149"/>
</dbReference>
<dbReference type="PDB" id="1XFZ">
    <property type="method" value="X-ray"/>
    <property type="resolution" value="3.25 A"/>
    <property type="chains" value="O/P/Q/R/S/T=1-149"/>
</dbReference>
<dbReference type="PDB" id="1Y6W">
    <property type="method" value="X-ray"/>
    <property type="resolution" value="2.40 A"/>
    <property type="chains" value="A=2-149"/>
</dbReference>
<dbReference type="PDB" id="1YR5">
    <property type="method" value="X-ray"/>
    <property type="resolution" value="1.70 A"/>
    <property type="chains" value="A=2-149"/>
</dbReference>
<dbReference type="PDB" id="1YRT">
    <property type="method" value="X-ray"/>
    <property type="resolution" value="2.10 A"/>
    <property type="chains" value="B=76-149"/>
</dbReference>
<dbReference type="PDB" id="1YRU">
    <property type="method" value="X-ray"/>
    <property type="resolution" value="2.50 A"/>
    <property type="chains" value="B=76-149"/>
</dbReference>
<dbReference type="PDB" id="1ZOT">
    <property type="method" value="X-ray"/>
    <property type="resolution" value="2.20 A"/>
    <property type="chains" value="B=80-148"/>
</dbReference>
<dbReference type="PDB" id="1ZUZ">
    <property type="method" value="X-ray"/>
    <property type="resolution" value="1.91 A"/>
    <property type="chains" value="A=1-149"/>
</dbReference>
<dbReference type="PDB" id="2BE6">
    <property type="method" value="X-ray"/>
    <property type="resolution" value="2.00 A"/>
    <property type="chains" value="A/B/C=1-149"/>
</dbReference>
<dbReference type="PDB" id="2F3Y">
    <property type="method" value="X-ray"/>
    <property type="resolution" value="1.45 A"/>
    <property type="chains" value="A=2-149"/>
</dbReference>
<dbReference type="PDB" id="2F3Z">
    <property type="method" value="X-ray"/>
    <property type="resolution" value="1.60 A"/>
    <property type="chains" value="A=2-149"/>
</dbReference>
<dbReference type="PDB" id="2HF5">
    <property type="method" value="NMR"/>
    <property type="chains" value="A=47-114"/>
</dbReference>
<dbReference type="PDB" id="2I08">
    <property type="method" value="X-ray"/>
    <property type="resolution" value="2.00 A"/>
    <property type="chains" value="A=3-79"/>
</dbReference>
<dbReference type="PDB" id="2JZI">
    <property type="method" value="NMR"/>
    <property type="chains" value="A=2-149"/>
</dbReference>
<dbReference type="PDB" id="2K0E">
    <property type="method" value="NMR"/>
    <property type="chains" value="A=2-149"/>
</dbReference>
<dbReference type="PDB" id="2K0F">
    <property type="method" value="NMR"/>
    <property type="chains" value="A=2-149"/>
</dbReference>
<dbReference type="PDB" id="2K0J">
    <property type="method" value="NMR"/>
    <property type="chains" value="A=3-149"/>
</dbReference>
<dbReference type="PDB" id="2K61">
    <property type="method" value="NMR"/>
    <property type="chains" value="A=2-149"/>
</dbReference>
<dbReference type="PDB" id="2KNE">
    <property type="method" value="NMR"/>
    <property type="chains" value="A=2-149"/>
</dbReference>
<dbReference type="PDB" id="2KUG">
    <property type="method" value="NMR"/>
    <property type="chains" value="A=2-77"/>
</dbReference>
<dbReference type="PDB" id="2KUH">
    <property type="method" value="NMR"/>
    <property type="chains" value="A=83-149"/>
</dbReference>
<dbReference type="PDB" id="2L53">
    <property type="method" value="NMR"/>
    <property type="chains" value="A=2-149"/>
</dbReference>
<dbReference type="PDB" id="2L7L">
    <property type="method" value="NMR"/>
    <property type="chains" value="A=2-149"/>
</dbReference>
<dbReference type="PDB" id="2LGF">
    <property type="method" value="NMR"/>
    <property type="chains" value="A=3-149"/>
</dbReference>
<dbReference type="PDB" id="2LL6">
    <property type="method" value="NMR"/>
    <property type="chains" value="A=2-149"/>
</dbReference>
<dbReference type="PDB" id="2LL7">
    <property type="method" value="NMR"/>
    <property type="chains" value="A=2-149"/>
</dbReference>
<dbReference type="PDB" id="2LQC">
    <property type="method" value="NMR"/>
    <property type="chains" value="A=2-78"/>
</dbReference>
<dbReference type="PDB" id="2LQP">
    <property type="method" value="NMR"/>
    <property type="chains" value="A=79-149"/>
</dbReference>
<dbReference type="PDB" id="2LV6">
    <property type="method" value="Other"/>
    <property type="chains" value="A=2-149"/>
</dbReference>
<dbReference type="PDB" id="2M0J">
    <property type="method" value="NMR"/>
    <property type="chains" value="A=2-149"/>
</dbReference>
<dbReference type="PDB" id="2M0K">
    <property type="method" value="NMR"/>
    <property type="chains" value="A=2-149"/>
</dbReference>
<dbReference type="PDB" id="2M55">
    <property type="method" value="NMR"/>
    <property type="chains" value="A=2-149"/>
</dbReference>
<dbReference type="PDB" id="2MG5">
    <property type="method" value="NMR"/>
    <property type="chains" value="A=2-149"/>
</dbReference>
<dbReference type="PDB" id="2N27">
    <property type="method" value="NMR"/>
    <property type="chains" value="A=2-149"/>
</dbReference>
<dbReference type="PDB" id="2N6A">
    <property type="method" value="NMR"/>
    <property type="chains" value="A=6-147"/>
</dbReference>
<dbReference type="PDB" id="2N77">
    <property type="method" value="NMR"/>
    <property type="chains" value="A=77-149"/>
</dbReference>
<dbReference type="PDB" id="2N8J">
    <property type="method" value="NMR"/>
    <property type="chains" value="A=2-149"/>
</dbReference>
<dbReference type="PDB" id="2R28">
    <property type="method" value="X-ray"/>
    <property type="resolution" value="1.86 A"/>
    <property type="chains" value="A/B=1-149"/>
</dbReference>
<dbReference type="PDB" id="2V01">
    <property type="method" value="X-ray"/>
    <property type="resolution" value="2.15 A"/>
    <property type="chains" value="A=2-149"/>
</dbReference>
<dbReference type="PDB" id="2V02">
    <property type="method" value="X-ray"/>
    <property type="resolution" value="2.20 A"/>
    <property type="chains" value="A=2-149"/>
</dbReference>
<dbReference type="PDB" id="2VAY">
    <property type="method" value="X-ray"/>
    <property type="resolution" value="1.94 A"/>
    <property type="chains" value="A=4-149"/>
</dbReference>
<dbReference type="PDB" id="2W73">
    <property type="method" value="X-ray"/>
    <property type="resolution" value="1.45 A"/>
    <property type="chains" value="A/B/E/F=1-149"/>
</dbReference>
<dbReference type="PDB" id="2WEL">
    <property type="method" value="X-ray"/>
    <property type="resolution" value="1.90 A"/>
    <property type="chains" value="D=1-149"/>
</dbReference>
<dbReference type="PDB" id="2X0G">
    <property type="method" value="X-ray"/>
    <property type="resolution" value="2.20 A"/>
    <property type="chains" value="B=2-149"/>
</dbReference>
<dbReference type="PDB" id="2Y4V">
    <property type="method" value="X-ray"/>
    <property type="resolution" value="1.80 A"/>
    <property type="chains" value="A=1-149"/>
</dbReference>
<dbReference type="PDB" id="3BYA">
    <property type="method" value="X-ray"/>
    <property type="resolution" value="1.85 A"/>
    <property type="chains" value="A=2-149"/>
</dbReference>
<dbReference type="PDB" id="3DVE">
    <property type="method" value="X-ray"/>
    <property type="resolution" value="2.35 A"/>
    <property type="chains" value="A=2-149"/>
</dbReference>
<dbReference type="PDB" id="3DVJ">
    <property type="method" value="X-ray"/>
    <property type="resolution" value="2.80 A"/>
    <property type="chains" value="A=2-149"/>
</dbReference>
<dbReference type="PDB" id="3DVK">
    <property type="method" value="X-ray"/>
    <property type="resolution" value="2.30 A"/>
    <property type="chains" value="A=2-149"/>
</dbReference>
<dbReference type="PDB" id="3DVM">
    <property type="method" value="X-ray"/>
    <property type="resolution" value="2.60 A"/>
    <property type="chains" value="A=2-149"/>
</dbReference>
<dbReference type="PDB" id="3EVV">
    <property type="method" value="X-ray"/>
    <property type="resolution" value="2.60 A"/>
    <property type="chains" value="A=5-149"/>
</dbReference>
<dbReference type="PDB" id="3EWT">
    <property type="method" value="X-ray"/>
    <property type="resolution" value="2.40 A"/>
    <property type="chains" value="A=2-149"/>
</dbReference>
<dbReference type="PDB" id="3EWV">
    <property type="method" value="X-ray"/>
    <property type="resolution" value="2.60 A"/>
    <property type="chains" value="A=2-149"/>
</dbReference>
<dbReference type="PDB" id="3G43">
    <property type="method" value="X-ray"/>
    <property type="resolution" value="2.10 A"/>
    <property type="chains" value="A/B/C/D=2-149"/>
</dbReference>
<dbReference type="PDB" id="3HR4">
    <property type="method" value="X-ray"/>
    <property type="resolution" value="2.50 A"/>
    <property type="chains" value="B/D/F/H=1-149"/>
</dbReference>
<dbReference type="PDB" id="3J41">
    <property type="method" value="EM"/>
    <property type="resolution" value="25.00 A"/>
    <property type="chains" value="E/F=1-149"/>
</dbReference>
<dbReference type="PDB" id="3O77">
    <property type="method" value="X-ray"/>
    <property type="resolution" value="2.35 A"/>
    <property type="chains" value="A=1-149"/>
</dbReference>
<dbReference type="PDB" id="3O78">
    <property type="method" value="X-ray"/>
    <property type="resolution" value="2.60 A"/>
    <property type="chains" value="A/B=1-149"/>
</dbReference>
<dbReference type="PDB" id="3OXQ">
    <property type="method" value="X-ray"/>
    <property type="resolution" value="2.55 A"/>
    <property type="chains" value="A/B/C/D=1-149"/>
</dbReference>
<dbReference type="PDB" id="3SUI">
    <property type="method" value="X-ray"/>
    <property type="resolution" value="1.95 A"/>
    <property type="chains" value="A=1-149"/>
</dbReference>
<dbReference type="PDB" id="3UCT">
    <property type="method" value="X-ray"/>
    <property type="resolution" value="1.90 A"/>
    <property type="chains" value="A/B=2-80"/>
</dbReference>
<dbReference type="PDB" id="3UCW">
    <property type="method" value="X-ray"/>
    <property type="resolution" value="1.76 A"/>
    <property type="chains" value="A/B/C/D=2-80"/>
</dbReference>
<dbReference type="PDB" id="3UCY">
    <property type="method" value="X-ray"/>
    <property type="resolution" value="1.80 A"/>
    <property type="chains" value="A=2-80"/>
</dbReference>
<dbReference type="PDB" id="4BW7">
    <property type="method" value="X-ray"/>
    <property type="resolution" value="1.81 A"/>
    <property type="chains" value="A/C=1-149"/>
</dbReference>
<dbReference type="PDB" id="4BW8">
    <property type="method" value="X-ray"/>
    <property type="resolution" value="1.80 A"/>
    <property type="chains" value="A/B=1-149"/>
</dbReference>
<dbReference type="PDB" id="4BYF">
    <property type="method" value="X-ray"/>
    <property type="resolution" value="2.74 A"/>
    <property type="chains" value="B/D=1-149"/>
</dbReference>
<dbReference type="PDB" id="4DCK">
    <property type="method" value="X-ray"/>
    <property type="resolution" value="2.20 A"/>
    <property type="chains" value="B=1-149"/>
</dbReference>
<dbReference type="PDB" id="4DJC">
    <property type="method" value="X-ray"/>
    <property type="resolution" value="1.35 A"/>
    <property type="chains" value="A=1-149"/>
</dbReference>
<dbReference type="PDB" id="4GOW">
    <property type="method" value="X-ray"/>
    <property type="resolution" value="2.60 A"/>
    <property type="chains" value="D=4-147"/>
</dbReference>
<dbReference type="PDB" id="4JPZ">
    <property type="method" value="X-ray"/>
    <property type="resolution" value="3.02 A"/>
    <property type="chains" value="C/I=1-149"/>
</dbReference>
<dbReference type="PDB" id="4JQ0">
    <property type="method" value="X-ray"/>
    <property type="resolution" value="3.84 A"/>
    <property type="chains" value="C=1-149"/>
</dbReference>
<dbReference type="PDB" id="4L79">
    <property type="method" value="X-ray"/>
    <property type="resolution" value="2.30 A"/>
    <property type="chains" value="B=1-149"/>
</dbReference>
<dbReference type="PDB" id="4LZX">
    <property type="method" value="X-ray"/>
    <property type="resolution" value="1.50 A"/>
    <property type="chains" value="A=2-149"/>
</dbReference>
<dbReference type="PDB" id="4M1L">
    <property type="method" value="X-ray"/>
    <property type="resolution" value="2.10 A"/>
    <property type="chains" value="A=2-149"/>
</dbReference>
<dbReference type="PDB" id="4OVN">
    <property type="method" value="X-ray"/>
    <property type="resolution" value="2.80 A"/>
    <property type="chains" value="A/B/C/D/E=1-149"/>
</dbReference>
<dbReference type="PDB" id="4Q57">
    <property type="method" value="X-ray"/>
    <property type="resolution" value="1.80 A"/>
    <property type="chains" value="A=10-74"/>
</dbReference>
<dbReference type="PDB" id="4Q5U">
    <property type="method" value="X-ray"/>
    <property type="resolution" value="1.95 A"/>
    <property type="chains" value="A=1-149"/>
</dbReference>
<dbReference type="PDB" id="4UMO">
    <property type="method" value="X-ray"/>
    <property type="resolution" value="3.00 A"/>
    <property type="chains" value="C/D=1-149"/>
</dbReference>
<dbReference type="PDB" id="4UPU">
    <property type="method" value="X-ray"/>
    <property type="resolution" value="2.34 A"/>
    <property type="chains" value="A=2-149"/>
</dbReference>
<dbReference type="PDB" id="4V0C">
    <property type="method" value="X-ray"/>
    <property type="resolution" value="2.86 A"/>
    <property type="chains" value="C/D=1-149"/>
</dbReference>
<dbReference type="PDB" id="5COC">
    <property type="method" value="X-ray"/>
    <property type="resolution" value="2.67 A"/>
    <property type="chains" value="A=5-78"/>
</dbReference>
<dbReference type="PDB" id="5DBR">
    <property type="method" value="X-ray"/>
    <property type="resolution" value="2.25 A"/>
    <property type="chains" value="A=5-149"/>
</dbReference>
<dbReference type="PDB" id="5DOW">
    <property type="method" value="X-ray"/>
    <property type="resolution" value="1.70 A"/>
    <property type="chains" value="A/C/E/G=2-149"/>
</dbReference>
<dbReference type="PDB" id="5DSU">
    <property type="method" value="X-ray"/>
    <property type="resolution" value="1.93 A"/>
    <property type="chains" value="A=3-78"/>
</dbReference>
<dbReference type="PDB" id="5GGM">
    <property type="method" value="NMR"/>
    <property type="chains" value="A=2-149"/>
</dbReference>
<dbReference type="PDB" id="5I0I">
    <property type="method" value="X-ray"/>
    <property type="resolution" value="3.15 A"/>
    <property type="chains" value="C/E=3-147, G=84-126, I=84-147"/>
</dbReference>
<dbReference type="PDB" id="5J03">
    <property type="method" value="X-ray"/>
    <property type="resolution" value="2.00 A"/>
    <property type="chains" value="B=1-149"/>
</dbReference>
<dbReference type="PDB" id="5J8H">
    <property type="method" value="NMR"/>
    <property type="chains" value="A=2-149"/>
</dbReference>
<dbReference type="PDB" id="5JQA">
    <property type="method" value="X-ray"/>
    <property type="resolution" value="1.80 A"/>
    <property type="chains" value="A=1-149"/>
</dbReference>
<dbReference type="PDB" id="5JTH">
    <property type="method" value="X-ray"/>
    <property type="resolution" value="1.84 A"/>
    <property type="chains" value="A=1-149"/>
</dbReference>
<dbReference type="PDB" id="5K7L">
    <property type="method" value="EM"/>
    <property type="resolution" value="3.78 A"/>
    <property type="chains" value="B=1-149"/>
</dbReference>
<dbReference type="PDB" id="5K8Q">
    <property type="method" value="X-ray"/>
    <property type="resolution" value="1.74 A"/>
    <property type="chains" value="A=1-149"/>
</dbReference>
<dbReference type="PDB" id="5OEO">
    <property type="method" value="NMR"/>
    <property type="chains" value="A=1-149"/>
</dbReference>
<dbReference type="PDB" id="5TP5">
    <property type="method" value="NMR"/>
    <property type="chains" value="A=2-149"/>
</dbReference>
<dbReference type="PDB" id="5TP6">
    <property type="method" value="NMR"/>
    <property type="chains" value="A=2-149"/>
</dbReference>
<dbReference type="PDB" id="5V02">
    <property type="method" value="X-ray"/>
    <property type="resolution" value="1.78 A"/>
    <property type="chains" value="R=1-149"/>
</dbReference>
<dbReference type="PDB" id="5V03">
    <property type="method" value="X-ray"/>
    <property type="resolution" value="1.58 A"/>
    <property type="chains" value="R=1-149"/>
</dbReference>
<dbReference type="PDB" id="5V7X">
    <property type="method" value="X-ray"/>
    <property type="resolution" value="3.14 A"/>
    <property type="chains" value="B=1-149"/>
</dbReference>
<dbReference type="PDB" id="5WBX">
    <property type="method" value="X-ray"/>
    <property type="resolution" value="1.90 A"/>
    <property type="chains" value="R=5-148"/>
</dbReference>
<dbReference type="PDB" id="5WC5">
    <property type="method" value="X-ray"/>
    <property type="resolution" value="2.30 A"/>
    <property type="chains" value="R=5-148"/>
</dbReference>
<dbReference type="PDB" id="6B8L">
    <property type="method" value="X-ray"/>
    <property type="resolution" value="2.30 A"/>
    <property type="chains" value="B/D/F/H=1-149"/>
</dbReference>
<dbReference type="PDB" id="6B8M">
    <property type="method" value="X-ray"/>
    <property type="resolution" value="2.30 A"/>
    <property type="chains" value="B/D/F/H=1-149"/>
</dbReference>
<dbReference type="PDB" id="6B8N">
    <property type="method" value="X-ray"/>
    <property type="resolution" value="2.20 A"/>
    <property type="chains" value="B/D/F/H=1-149"/>
</dbReference>
<dbReference type="PDB" id="6B8P">
    <property type="method" value="X-ray"/>
    <property type="resolution" value="2.20 A"/>
    <property type="chains" value="B/D/F/H=1-149"/>
</dbReference>
<dbReference type="PDB" id="6B8Q">
    <property type="method" value="X-ray"/>
    <property type="resolution" value="2.60 A"/>
    <property type="chains" value="B/D/F/H=1-149"/>
</dbReference>
<dbReference type="PDB" id="6BUT">
    <property type="method" value="NMR"/>
    <property type="chains" value="A=2-149"/>
</dbReference>
<dbReference type="PDB" id="6C1D">
    <property type="method" value="EM"/>
    <property type="resolution" value="3.20 A"/>
    <property type="chains" value="R=2-149"/>
</dbReference>
<dbReference type="PDB" id="6C1G">
    <property type="method" value="EM"/>
    <property type="resolution" value="3.80 A"/>
    <property type="chains" value="R=2-149"/>
</dbReference>
<dbReference type="PDB" id="6C1H">
    <property type="method" value="EM"/>
    <property type="resolution" value="3.90 A"/>
    <property type="chains" value="R=2-149"/>
</dbReference>
<dbReference type="PDB" id="6CNM">
    <property type="method" value="EM"/>
    <property type="resolution" value="3.40 A"/>
    <property type="chains" value="E/F/G/H=1-149"/>
</dbReference>
<dbReference type="PDB" id="6CNN">
    <property type="method" value="EM"/>
    <property type="resolution" value="3.50 A"/>
    <property type="chains" value="E/F/G/H=1-149"/>
</dbReference>
<dbReference type="PDB" id="6CNO">
    <property type="method" value="EM"/>
    <property type="resolution" value="4.70 A"/>
    <property type="chains" value="E/F/G/H=1-149"/>
</dbReference>
<dbReference type="PDB" id="6DAD">
    <property type="method" value="X-ray"/>
    <property type="resolution" value="1.65 A"/>
    <property type="chains" value="A/B=2-149"/>
</dbReference>
<dbReference type="PDB" id="6DAE">
    <property type="method" value="X-ray"/>
    <property type="resolution" value="2.00 A"/>
    <property type="chains" value="A/B=2-149"/>
</dbReference>
<dbReference type="PDB" id="6DAF">
    <property type="method" value="X-ray"/>
    <property type="resolution" value="2.40 A"/>
    <property type="chains" value="A/B=2-149"/>
</dbReference>
<dbReference type="PDB" id="6DAH">
    <property type="method" value="X-ray"/>
    <property type="resolution" value="2.50 A"/>
    <property type="chains" value="A/B/C/D=1-149"/>
</dbReference>
<dbReference type="PDB" id="6E2F">
    <property type="method" value="EM"/>
    <property type="resolution" value="3.90 A"/>
    <property type="chains" value="E=1-149"/>
</dbReference>
<dbReference type="PDB" id="6E2G">
    <property type="method" value="EM"/>
    <property type="resolution" value="3.60 A"/>
    <property type="chains" value="E=1-149"/>
</dbReference>
<dbReference type="PDB" id="6EEB">
    <property type="method" value="X-ray"/>
    <property type="resolution" value="1.96 A"/>
    <property type="chains" value="A=1-149"/>
</dbReference>
<dbReference type="PDB" id="6FEG">
    <property type="method" value="NMR"/>
    <property type="chains" value="B=1-149"/>
</dbReference>
<dbReference type="PDB" id="6FEH">
    <property type="method" value="NMR"/>
    <property type="chains" value="B=1-149"/>
</dbReference>
<dbReference type="PDB" id="6GDK">
    <property type="method" value="NMR"/>
    <property type="chains" value="A=2-149"/>
</dbReference>
<dbReference type="PDB" id="6GDL">
    <property type="method" value="NMR"/>
    <property type="chains" value="A=2-80"/>
</dbReference>
<dbReference type="PDB" id="6HCS">
    <property type="method" value="X-ray"/>
    <property type="resolution" value="2.00 A"/>
    <property type="chains" value="A/C/E/G=1-149"/>
</dbReference>
<dbReference type="PDB" id="6HR1">
    <property type="method" value="X-ray"/>
    <property type="resolution" value="1.90 A"/>
    <property type="chains" value="A/B=2-149"/>
</dbReference>
<dbReference type="PDB" id="6JI8">
    <property type="method" value="EM"/>
    <property type="resolution" value="3.60 A"/>
    <property type="chains" value="C/F/I/L=1-149"/>
</dbReference>
<dbReference type="PDB" id="6JII">
    <property type="method" value="EM"/>
    <property type="resolution" value="4.20 A"/>
    <property type="chains" value="C/F/I/L=1-149"/>
</dbReference>
<dbReference type="PDB" id="6JIU">
    <property type="method" value="EM"/>
    <property type="resolution" value="4.20 A"/>
    <property type="chains" value="C/F/I/L=1-149"/>
</dbReference>
<dbReference type="PDB" id="6JIY">
    <property type="method" value="EM"/>
    <property type="resolution" value="3.90 A"/>
    <property type="chains" value="C/F/I/L=1-149"/>
</dbReference>
<dbReference type="PDB" id="6JRS">
    <property type="method" value="EM"/>
    <property type="resolution" value="3.70 A"/>
    <property type="chains" value="C/F/I/L=1-149"/>
</dbReference>
<dbReference type="PDB" id="6JV2">
    <property type="method" value="EM"/>
    <property type="resolution" value="4.40 A"/>
    <property type="chains" value="B/D/F/H=1-149"/>
</dbReference>
<dbReference type="PDB" id="6K4K">
    <property type="method" value="X-ray"/>
    <property type="resolution" value="2.71 A"/>
    <property type="chains" value="C/D=1-149"/>
</dbReference>
<dbReference type="PDB" id="6K4L">
    <property type="method" value="X-ray"/>
    <property type="resolution" value="2.95 A"/>
    <property type="chains" value="C/D=1-149"/>
</dbReference>
<dbReference type="PDB" id="6K4R">
    <property type="method" value="X-ray"/>
    <property type="resolution" value="3.11 A"/>
    <property type="chains" value="C/D=1-149"/>
</dbReference>
<dbReference type="PDB" id="6M2W">
    <property type="method" value="EM"/>
    <property type="resolution" value="3.80 A"/>
    <property type="chains" value="C/F/I/L=1-149"/>
</dbReference>
<dbReference type="PDB" id="6M7H">
    <property type="method" value="X-ray"/>
    <property type="resolution" value="1.60 A"/>
    <property type="chains" value="A=2-148"/>
</dbReference>
<dbReference type="PDB" id="6MUD">
    <property type="method" value="X-ray"/>
    <property type="resolution" value="2.69 A"/>
    <property type="chains" value="A=1-149"/>
</dbReference>
<dbReference type="PDB" id="6MUE">
    <property type="method" value="X-ray"/>
    <property type="resolution" value="1.90 A"/>
    <property type="chains" value="A=1-149"/>
</dbReference>
<dbReference type="PDB" id="6N5W">
    <property type="method" value="X-ray"/>
    <property type="resolution" value="2.15 A"/>
    <property type="chains" value="C=1-149"/>
</dbReference>
<dbReference type="PDB" id="6O5G">
    <property type="method" value="X-ray"/>
    <property type="resolution" value="1.89 A"/>
    <property type="chains" value="A=1-149"/>
</dbReference>
<dbReference type="PDB" id="6OS4">
    <property type="method" value="X-ray"/>
    <property type="resolution" value="2.05 A"/>
    <property type="chains" value="A=2-149"/>
</dbReference>
<dbReference type="PDB" id="6PAW">
    <property type="method" value="X-ray"/>
    <property type="resolution" value="2.95 A"/>
    <property type="chains" value="C/D/G/H=1-149"/>
</dbReference>
<dbReference type="PDB" id="6PBX">
    <property type="method" value="EM"/>
    <property type="resolution" value="4.00 A"/>
    <property type="chains" value="B/D/F/H=1-149"/>
</dbReference>
<dbReference type="PDB" id="6PBY">
    <property type="method" value="EM"/>
    <property type="resolution" value="3.67 A"/>
    <property type="chains" value="B/D/F/H=1-149"/>
</dbReference>
<dbReference type="PDB" id="6TV7">
    <property type="method" value="X-ray"/>
    <property type="resolution" value="2.90 A"/>
    <property type="chains" value="A=3-149"/>
</dbReference>
<dbReference type="PDB" id="6U39">
    <property type="method" value="X-ray"/>
    <property type="resolution" value="2.40 A"/>
    <property type="chains" value="A/C/E/G/I/K/M/O/Q/S=2-149"/>
</dbReference>
<dbReference type="PDB" id="6U3A">
    <property type="method" value="X-ray"/>
    <property type="resolution" value="1.65 A"/>
    <property type="chains" value="A/B=2-149"/>
</dbReference>
<dbReference type="PDB" id="6U3B">
    <property type="method" value="X-ray"/>
    <property type="resolution" value="1.70 A"/>
    <property type="chains" value="A=2-149"/>
</dbReference>
<dbReference type="PDB" id="6U3D">
    <property type="method" value="X-ray"/>
    <property type="resolution" value="1.75 A"/>
    <property type="chains" value="A/B=2-149"/>
</dbReference>
<dbReference type="PDB" id="6UZZ">
    <property type="method" value="EM"/>
    <property type="resolution" value="3.10 A"/>
    <property type="chains" value="B/D/F/H=1-149"/>
</dbReference>
<dbReference type="PDB" id="6V00">
    <property type="method" value="EM"/>
    <property type="resolution" value="3.10 A"/>
    <property type="chains" value="B/E/H/K=1-149"/>
</dbReference>
<dbReference type="PDB" id="6V01">
    <property type="method" value="EM"/>
    <property type="resolution" value="3.90 A"/>
    <property type="chains" value="B/E/H/K=1-149"/>
</dbReference>
<dbReference type="PDB" id="6X32">
    <property type="method" value="EM"/>
    <property type="resolution" value="3.80 A"/>
    <property type="chains" value="C/F/I/L=3-148"/>
</dbReference>
<dbReference type="PDB" id="6X33">
    <property type="method" value="EM"/>
    <property type="resolution" value="4.20 A"/>
    <property type="chains" value="C/F/I/L=1-148"/>
</dbReference>
<dbReference type="PDB" id="6X35">
    <property type="method" value="EM"/>
    <property type="resolution" value="4.20 A"/>
    <property type="chains" value="C/F/I/L=1-148"/>
</dbReference>
<dbReference type="PDB" id="6X36">
    <property type="method" value="EM"/>
    <property type="resolution" value="4.70 A"/>
    <property type="chains" value="C/F/I/L=1-148"/>
</dbReference>
<dbReference type="PDB" id="6XXX">
    <property type="method" value="X-ray"/>
    <property type="resolution" value="1.25 A"/>
    <property type="chains" value="AAA=1-149"/>
</dbReference>
<dbReference type="PDB" id="6XY3">
    <property type="method" value="X-ray"/>
    <property type="resolution" value="2.00 A"/>
    <property type="chains" value="AAA=1-149"/>
</dbReference>
<dbReference type="PDB" id="6XYR">
    <property type="method" value="X-ray"/>
    <property type="resolution" value="2.08 A"/>
    <property type="chains" value="A=2-149"/>
</dbReference>
<dbReference type="PDB" id="6Y4P">
    <property type="method" value="X-ray"/>
    <property type="resolution" value="2.13 A"/>
    <property type="chains" value="A=1-149"/>
</dbReference>
<dbReference type="PDB" id="6Y94">
    <property type="method" value="NMR"/>
    <property type="chains" value="A=2-149"/>
</dbReference>
<dbReference type="PDB" id="6Y95">
    <property type="method" value="NMR"/>
    <property type="chains" value="A=2-149"/>
</dbReference>
<dbReference type="PDB" id="6YA9">
    <property type="method" value="X-ray"/>
    <property type="resolution" value="2.15 A"/>
    <property type="chains" value="A=3-149"/>
</dbReference>
<dbReference type="PDB" id="6YNS">
    <property type="method" value="X-ray"/>
    <property type="resolution" value="3.94 A"/>
    <property type="chains" value="A/B/C/D/E/F/G/H/I/J/K/L=2-149"/>
</dbReference>
<dbReference type="PDB" id="6YNU">
    <property type="method" value="X-ray"/>
    <property type="resolution" value="3.12 A"/>
    <property type="chains" value="A/C=2-149"/>
</dbReference>
<dbReference type="PDB" id="6ZBI">
    <property type="method" value="NMR"/>
    <property type="chains" value="A=2-149"/>
</dbReference>
<dbReference type="PDB" id="7AUG">
    <property type="method" value="X-ray"/>
    <property type="resolution" value="2.04 A"/>
    <property type="chains" value="A=3-149"/>
</dbReference>
<dbReference type="PDB" id="7BF1">
    <property type="method" value="X-ray"/>
    <property type="resolution" value="1.24 A"/>
    <property type="chains" value="AAA=1-149"/>
</dbReference>
<dbReference type="PDB" id="7BF2">
    <property type="method" value="X-ray"/>
    <property type="resolution" value="1.43 A"/>
    <property type="chains" value="AAA=1-149"/>
</dbReference>
<dbReference type="PDB" id="7KL5">
    <property type="method" value="X-ray"/>
    <property type="resolution" value="1.65 A"/>
    <property type="chains" value="A=1-149"/>
</dbReference>
<dbReference type="PDB" id="7L8V">
    <property type="method" value="NMR"/>
    <property type="chains" value="A=1-149"/>
</dbReference>
<dbReference type="PDB" id="7PSZ">
    <property type="method" value="X-ray"/>
    <property type="resolution" value="1.90 A"/>
    <property type="chains" value="A=2-149"/>
</dbReference>
<dbReference type="PDB" id="7PU9">
    <property type="method" value="X-ray"/>
    <property type="resolution" value="2.28 A"/>
    <property type="chains" value="A=2-149"/>
</dbReference>
<dbReference type="PDB" id="7SHQ">
    <property type="method" value="X-ray"/>
    <property type="resolution" value="2.34 A"/>
    <property type="chains" value="B=2-149"/>
</dbReference>
<dbReference type="PDB" id="7SX3">
    <property type="method" value="EM"/>
    <property type="resolution" value="3.10 A"/>
    <property type="chains" value="C=1-149"/>
</dbReference>
<dbReference type="PDB" id="7SX4">
    <property type="method" value="EM"/>
    <property type="resolution" value="3.50 A"/>
    <property type="chains" value="C=1-149"/>
</dbReference>
<dbReference type="PDB" id="7T2Q">
    <property type="method" value="X-ray"/>
    <property type="resolution" value="1.95 A"/>
    <property type="chains" value="A=2-149"/>
</dbReference>
<dbReference type="PDB" id="7TCI">
    <property type="method" value="EM"/>
    <property type="resolution" value="3.90 A"/>
    <property type="chains" value="B/D/F/H=1-149"/>
</dbReference>
<dbReference type="PDB" id="7TCP">
    <property type="method" value="EM"/>
    <property type="resolution" value="3.84 A"/>
    <property type="chains" value="B/D/F/H=1-149"/>
</dbReference>
<dbReference type="PDB" id="7TZC">
    <property type="method" value="EM"/>
    <property type="resolution" value="2.45 A"/>
    <property type="chains" value="C/D/E/K=1-149"/>
</dbReference>
<dbReference type="PDB" id="7U9T">
    <property type="method" value="EM"/>
    <property type="resolution" value="2.68 A"/>
    <property type="chains" value="I/J/K/L=1-149"/>
</dbReference>
<dbReference type="PDB" id="7UA3">
    <property type="method" value="EM"/>
    <property type="resolution" value="2.97 A"/>
    <property type="chains" value="I/J/K/L=1-149"/>
</dbReference>
<dbReference type="PDB" id="7UA4">
    <property type="method" value="EM"/>
    <property type="resolution" value="2.93 A"/>
    <property type="chains" value="I/J/K/L=1-149"/>
</dbReference>
<dbReference type="PDB" id="7VMB">
    <property type="method" value="X-ray"/>
    <property type="resolution" value="2.00 A"/>
    <property type="chains" value="C=1-149"/>
</dbReference>
<dbReference type="PDB" id="7VUO">
    <property type="method" value="X-ray"/>
    <property type="resolution" value="2.68 A"/>
    <property type="chains" value="C=2-149"/>
</dbReference>
<dbReference type="PDB" id="7VUR">
    <property type="method" value="X-ray"/>
    <property type="resolution" value="1.70 A"/>
    <property type="chains" value="A/B=77-149"/>
</dbReference>
<dbReference type="PDB" id="7VUS">
    <property type="method" value="X-ray"/>
    <property type="resolution" value="1.70 A"/>
    <property type="chains" value="A/B/C/D=77-149"/>
</dbReference>
<dbReference type="PDB" id="7VUT">
    <property type="method" value="X-ray"/>
    <property type="resolution" value="1.70 A"/>
    <property type="chains" value="A/B=77-149"/>
</dbReference>
<dbReference type="PDB" id="7VUU">
    <property type="method" value="X-ray"/>
    <property type="resolution" value="1.95 A"/>
    <property type="chains" value="A/B/C/D=77-149"/>
</dbReference>
<dbReference type="PDB" id="7VVD">
    <property type="method" value="X-ray"/>
    <property type="resolution" value="3.13 A"/>
    <property type="chains" value="C/E=1-149"/>
</dbReference>
<dbReference type="PDB" id="7VVH">
    <property type="method" value="X-ray"/>
    <property type="resolution" value="2.30 A"/>
    <property type="chains" value="C=1-149"/>
</dbReference>
<dbReference type="PDB" id="7WJI">
    <property type="method" value="EM"/>
    <property type="resolution" value="4.50 A"/>
    <property type="chains" value="E=1-149"/>
</dbReference>
<dbReference type="PDB" id="7WR3">
    <property type="method" value="X-ray"/>
    <property type="resolution" value="1.87 A"/>
    <property type="chains" value="C/D=1-149"/>
</dbReference>
<dbReference type="PDB" id="7WR4">
    <property type="method" value="X-ray"/>
    <property type="resolution" value="2.75 A"/>
    <property type="chains" value="B=1-149"/>
</dbReference>
<dbReference type="PDB" id="7WR5">
    <property type="method" value="X-ray"/>
    <property type="resolution" value="3.10 A"/>
    <property type="chains" value="B=1-149"/>
</dbReference>
<dbReference type="PDB" id="7WZS">
    <property type="method" value="X-ray"/>
    <property type="resolution" value="3.60 A"/>
    <property type="chains" value="C=1-149"/>
</dbReference>
<dbReference type="PDB" id="7XN4">
    <property type="method" value="EM"/>
    <property type="resolution" value="3.35 A"/>
    <property type="chains" value="D=1-149"/>
</dbReference>
<dbReference type="PDB" id="7XN5">
    <property type="method" value="EM"/>
    <property type="resolution" value="3.18 A"/>
    <property type="chains" value="D=1-149"/>
</dbReference>
<dbReference type="PDB" id="7XN6">
    <property type="method" value="EM"/>
    <property type="resolution" value="3.45 A"/>
    <property type="chains" value="D=1-149"/>
</dbReference>
<dbReference type="PDB" id="7ZRP">
    <property type="method" value="X-ray"/>
    <property type="resolution" value="2.65 A"/>
    <property type="chains" value="A/C=2-149"/>
</dbReference>
<dbReference type="PDB" id="7ZRQ">
    <property type="method" value="X-ray"/>
    <property type="resolution" value="1.68 A"/>
    <property type="chains" value="A=2-149"/>
</dbReference>
<dbReference type="PDB" id="8AHS">
    <property type="method" value="X-ray"/>
    <property type="resolution" value="2.48 A"/>
    <property type="chains" value="A=1-149"/>
</dbReference>
<dbReference type="PDB" id="8B6Q">
    <property type="method" value="X-ray"/>
    <property type="resolution" value="2.60 A"/>
    <property type="chains" value="A=3-148"/>
</dbReference>
<dbReference type="PDB" id="8BFG">
    <property type="method" value="NMR"/>
    <property type="chains" value="A=2-149"/>
</dbReference>
<dbReference type="PDB" id="8DGH">
    <property type="method" value="NMR"/>
    <property type="chains" value="A=1-149"/>
</dbReference>
<dbReference type="PDB" id="8DGK">
    <property type="method" value="NMR"/>
    <property type="chains" value="A=1-149"/>
</dbReference>
<dbReference type="PDB" id="8DUJ">
    <property type="method" value="EM"/>
    <property type="resolution" value="3.70 A"/>
    <property type="chains" value="C/F/I/L=1-149"/>
</dbReference>
<dbReference type="PDB" id="8DVE">
    <property type="method" value="EM"/>
    <property type="resolution" value="3.84 A"/>
    <property type="chains" value="C/F/I/L=1-149"/>
</dbReference>
<dbReference type="PDB" id="8EOW">
    <property type="method" value="EM"/>
    <property type="resolution" value="3.90 A"/>
    <property type="chains" value="E/F/G/H=7-148"/>
</dbReference>
<dbReference type="PDB" id="8EP0">
    <property type="method" value="EM"/>
    <property type="resolution" value="4.90 A"/>
    <property type="chains" value="E/F/G/H=7-148"/>
</dbReference>
<dbReference type="PDB" id="8EP1">
    <property type="method" value="EM"/>
    <property type="resolution" value="5.40 A"/>
    <property type="chains" value="E/F/G/H=7-148"/>
</dbReference>
<dbReference type="PDB" id="8FNY">
    <property type="method" value="X-ray"/>
    <property type="resolution" value="2.22 A"/>
    <property type="chains" value="B/D=2-149"/>
</dbReference>
<dbReference type="PDB" id="8FO6">
    <property type="method" value="X-ray"/>
    <property type="resolution" value="2.55 A"/>
    <property type="chains" value="B=2-149"/>
</dbReference>
<dbReference type="PDB" id="8GM4">
    <property type="method" value="X-ray"/>
    <property type="resolution" value="2.12 A"/>
    <property type="chains" value="B=2-149"/>
</dbReference>
<dbReference type="PDB" id="8GM5">
    <property type="method" value="X-ray"/>
    <property type="resolution" value="2.12 A"/>
    <property type="chains" value="B=2-149"/>
</dbReference>
<dbReference type="PDB" id="8IJK">
    <property type="method" value="EM"/>
    <property type="resolution" value="3.40 A"/>
    <property type="chains" value="E/F/G/H=1-149"/>
</dbReference>
<dbReference type="PDB" id="8J00">
    <property type="method" value="EM"/>
    <property type="resolution" value="3.00 A"/>
    <property type="chains" value="E/F/G/H=1-149"/>
</dbReference>
<dbReference type="PDB" id="8J01">
    <property type="method" value="EM"/>
    <property type="resolution" value="3.10 A"/>
    <property type="chains" value="C/E/F/H=1-149"/>
</dbReference>
<dbReference type="PDB" id="8J02">
    <property type="method" value="EM"/>
    <property type="resolution" value="3.50 A"/>
    <property type="chains" value="C/E/F/H=1-149"/>
</dbReference>
<dbReference type="PDB" id="8J03">
    <property type="method" value="EM"/>
    <property type="resolution" value="2.70 A"/>
    <property type="chains" value="E/F/H/J=1-149"/>
</dbReference>
<dbReference type="PDB" id="8J04">
    <property type="method" value="EM"/>
    <property type="resolution" value="2.70 A"/>
    <property type="chains" value="C/E/F/H=1-149"/>
</dbReference>
<dbReference type="PDB" id="8J05">
    <property type="method" value="EM"/>
    <property type="resolution" value="2.70 A"/>
    <property type="chains" value="C/E/F/H=1-149"/>
</dbReference>
<dbReference type="PDB" id="8J07">
    <property type="method" value="EM"/>
    <property type="resolution" value="4.10 A"/>
    <property type="chains" value="W=1-149"/>
</dbReference>
<dbReference type="PDB" id="8JFK">
    <property type="method" value="EM"/>
    <property type="resolution" value="2.90 A"/>
    <property type="chains" value="D/H/L/P=1-149"/>
</dbReference>
<dbReference type="PDB" id="8ODZ">
    <property type="method" value="EM"/>
    <property type="resolution" value="3.60 A"/>
    <property type="chains" value="D=5-149"/>
</dbReference>
<dbReference type="PDB" id="8OE0">
    <property type="method" value="EM"/>
    <property type="resolution" value="4.60 A"/>
    <property type="chains" value="D=5-149"/>
</dbReference>
<dbReference type="PDB" id="8OE4">
    <property type="method" value="EM"/>
    <property type="resolution" value="3.60 A"/>
    <property type="chains" value="C=5-149"/>
</dbReference>
<dbReference type="PDB" id="8PB1">
    <property type="method" value="EM"/>
    <property type="resolution" value="3.50 A"/>
    <property type="chains" value="D=5-149"/>
</dbReference>
<dbReference type="PDB" id="8SIK">
    <property type="method" value="EM"/>
    <property type="resolution" value="2.90 A"/>
    <property type="chains" value="B/D/F/H=1-149"/>
</dbReference>
<dbReference type="PDB" id="8SIM">
    <property type="method" value="EM"/>
    <property type="resolution" value="6.20 A"/>
    <property type="chains" value="B/D/F/H=1-149"/>
</dbReference>
<dbReference type="PDB" id="8SIN">
    <property type="method" value="EM"/>
    <property type="resolution" value="6.80 A"/>
    <property type="chains" value="B/D/F/H=1-149"/>
</dbReference>
<dbReference type="PDB" id="8UXL">
    <property type="method" value="EM"/>
    <property type="resolution" value="3.12 A"/>
    <property type="chains" value="I/J/K/L=1-149"/>
</dbReference>
<dbReference type="PDB" id="8UXM">
    <property type="method" value="EM"/>
    <property type="resolution" value="3.56 A"/>
    <property type="chains" value="I/J/K/L=1-149"/>
</dbReference>
<dbReference type="PDB" id="8W4U">
    <property type="method" value="EM"/>
    <property type="resolution" value="3.30 A"/>
    <property type="chains" value="C/E/F/H=1-149"/>
</dbReference>
<dbReference type="PDB" id="8X43">
    <property type="method" value="EM"/>
    <property type="resolution" value="3.00 A"/>
    <property type="chains" value="B/D/F/H=1-149"/>
</dbReference>
<dbReference type="PDB" id="8XJI">
    <property type="method" value="EM"/>
    <property type="resolution" value="3.91 A"/>
    <property type="chains" value="I/J/K/L=1-148"/>
</dbReference>
<dbReference type="PDB" id="8XKH">
    <property type="method" value="EM"/>
    <property type="resolution" value="3.87 A"/>
    <property type="chains" value="I/J/K/L=1-149"/>
</dbReference>
<dbReference type="PDB" id="8XLF">
    <property type="method" value="EM"/>
    <property type="resolution" value="3.62 A"/>
    <property type="chains" value="I/J/K/L=1-148"/>
</dbReference>
<dbReference type="PDB" id="8XLH">
    <property type="method" value="EM"/>
    <property type="resolution" value="3.62 A"/>
    <property type="chains" value="I/J/K/L=1-149"/>
</dbReference>
<dbReference type="PDB" id="8XO1">
    <property type="method" value="EM"/>
    <property type="resolution" value="3.80 A"/>
    <property type="chains" value="C/E/G/H=1-149"/>
</dbReference>
<dbReference type="PDB" id="8XYA">
    <property type="method" value="EM"/>
    <property type="resolution" value="2.70 A"/>
    <property type="chains" value="D=1-149"/>
</dbReference>
<dbReference type="PDB" id="8XYB">
    <property type="method" value="EM"/>
    <property type="resolution" value="3.10 A"/>
    <property type="chains" value="D=1-149"/>
</dbReference>
<dbReference type="PDB" id="8Y40">
    <property type="method" value="EM"/>
    <property type="resolution" value="3.58 A"/>
    <property type="chains" value="I/J/K/L=1-149"/>
</dbReference>
<dbReference type="PDB" id="9CUI">
    <property type="method" value="EM"/>
    <property type="resolution" value="3.42 A"/>
    <property type="chains" value="E=1-149"/>
</dbReference>
<dbReference type="PDB" id="9CUK">
    <property type="method" value="EM"/>
    <property type="resolution" value="3.26 A"/>
    <property type="chains" value="E=1-149"/>
</dbReference>
<dbReference type="PDB" id="9E17">
    <property type="method" value="EM"/>
    <property type="resolution" value="2.45 A"/>
    <property type="chains" value="C/D/E/K=1-149"/>
</dbReference>
<dbReference type="PDB" id="9JQI">
    <property type="method" value="X-ray"/>
    <property type="resolution" value="2.10 A"/>
    <property type="chains" value="A/B/C=1-149"/>
</dbReference>
<dbReference type="PDB" id="9K8W">
    <property type="method" value="X-ray"/>
    <property type="resolution" value="2.65 A"/>
    <property type="chains" value="A=1-149"/>
</dbReference>
<dbReference type="PDB" id="9K8X">
    <property type="method" value="X-ray"/>
    <property type="resolution" value="2.05 A"/>
    <property type="chains" value="A=1-149"/>
</dbReference>
<dbReference type="PDBsum" id="1CDL"/>
<dbReference type="PDBsum" id="1CLL"/>
<dbReference type="PDBsum" id="1CTR"/>
<dbReference type="PDBsum" id="1IWQ"/>
<dbReference type="PDBsum" id="1J7O"/>
<dbReference type="PDBsum" id="1J7P"/>
<dbReference type="PDBsum" id="1K90"/>
<dbReference type="PDBsum" id="1K93"/>
<dbReference type="PDBsum" id="1L7Z"/>
<dbReference type="PDBsum" id="1LVC"/>
<dbReference type="PDBsum" id="1NKF"/>
<dbReference type="PDBsum" id="1PK0"/>
<dbReference type="PDBsum" id="1S26"/>
<dbReference type="PDBsum" id="1SK6"/>
<dbReference type="PDBsum" id="1SW8"/>
<dbReference type="PDBsum" id="1UP5"/>
<dbReference type="PDBsum" id="1WRZ"/>
<dbReference type="PDBsum" id="1XFU"/>
<dbReference type="PDBsum" id="1XFV"/>
<dbReference type="PDBsum" id="1XFW"/>
<dbReference type="PDBsum" id="1XFX"/>
<dbReference type="PDBsum" id="1XFY"/>
<dbReference type="PDBsum" id="1XFZ"/>
<dbReference type="PDBsum" id="1Y6W"/>
<dbReference type="PDBsum" id="1YR5"/>
<dbReference type="PDBsum" id="1YRT"/>
<dbReference type="PDBsum" id="1YRU"/>
<dbReference type="PDBsum" id="1ZOT"/>
<dbReference type="PDBsum" id="1ZUZ"/>
<dbReference type="PDBsum" id="2BE6"/>
<dbReference type="PDBsum" id="2F3Y"/>
<dbReference type="PDBsum" id="2F3Z"/>
<dbReference type="PDBsum" id="2HF5"/>
<dbReference type="PDBsum" id="2I08"/>
<dbReference type="PDBsum" id="2JZI"/>
<dbReference type="PDBsum" id="2K0E"/>
<dbReference type="PDBsum" id="2K0F"/>
<dbReference type="PDBsum" id="2K0J"/>
<dbReference type="PDBsum" id="2K61"/>
<dbReference type="PDBsum" id="2KNE"/>
<dbReference type="PDBsum" id="2KUG"/>
<dbReference type="PDBsum" id="2KUH"/>
<dbReference type="PDBsum" id="2L53"/>
<dbReference type="PDBsum" id="2L7L"/>
<dbReference type="PDBsum" id="2LGF"/>
<dbReference type="PDBsum" id="2LL6"/>
<dbReference type="PDBsum" id="2LL7"/>
<dbReference type="PDBsum" id="2LQC"/>
<dbReference type="PDBsum" id="2LQP"/>
<dbReference type="PDBsum" id="2LV6"/>
<dbReference type="PDBsum" id="2M0J"/>
<dbReference type="PDBsum" id="2M0K"/>
<dbReference type="PDBsum" id="2M55"/>
<dbReference type="PDBsum" id="2MG5"/>
<dbReference type="PDBsum" id="2N27"/>
<dbReference type="PDBsum" id="2N6A"/>
<dbReference type="PDBsum" id="2N77"/>
<dbReference type="PDBsum" id="2N8J"/>
<dbReference type="PDBsum" id="2R28"/>
<dbReference type="PDBsum" id="2V01"/>
<dbReference type="PDBsum" id="2V02"/>
<dbReference type="PDBsum" id="2VAY"/>
<dbReference type="PDBsum" id="2W73"/>
<dbReference type="PDBsum" id="2WEL"/>
<dbReference type="PDBsum" id="2X0G"/>
<dbReference type="PDBsum" id="2Y4V"/>
<dbReference type="PDBsum" id="3BYA"/>
<dbReference type="PDBsum" id="3DVE"/>
<dbReference type="PDBsum" id="3DVJ"/>
<dbReference type="PDBsum" id="3DVK"/>
<dbReference type="PDBsum" id="3DVM"/>
<dbReference type="PDBsum" id="3EVV"/>
<dbReference type="PDBsum" id="3EWT"/>
<dbReference type="PDBsum" id="3EWV"/>
<dbReference type="PDBsum" id="3G43"/>
<dbReference type="PDBsum" id="3HR4"/>
<dbReference type="PDBsum" id="3J41"/>
<dbReference type="PDBsum" id="3O77"/>
<dbReference type="PDBsum" id="3O78"/>
<dbReference type="PDBsum" id="3OXQ"/>
<dbReference type="PDBsum" id="3SUI"/>
<dbReference type="PDBsum" id="3UCT"/>
<dbReference type="PDBsum" id="3UCW"/>
<dbReference type="PDBsum" id="3UCY"/>
<dbReference type="PDBsum" id="4BW7"/>
<dbReference type="PDBsum" id="4BW8"/>
<dbReference type="PDBsum" id="4BYF"/>
<dbReference type="PDBsum" id="4DCK"/>
<dbReference type="PDBsum" id="4DJC"/>
<dbReference type="PDBsum" id="4GOW"/>
<dbReference type="PDBsum" id="4JPZ"/>
<dbReference type="PDBsum" id="4JQ0"/>
<dbReference type="PDBsum" id="4L79"/>
<dbReference type="PDBsum" id="4LZX"/>
<dbReference type="PDBsum" id="4M1L"/>
<dbReference type="PDBsum" id="4OVN"/>
<dbReference type="PDBsum" id="4Q57"/>
<dbReference type="PDBsum" id="4Q5U"/>
<dbReference type="PDBsum" id="4UMO"/>
<dbReference type="PDBsum" id="4UPU"/>
<dbReference type="PDBsum" id="4V0C"/>
<dbReference type="PDBsum" id="5COC"/>
<dbReference type="PDBsum" id="5DBR"/>
<dbReference type="PDBsum" id="5DOW"/>
<dbReference type="PDBsum" id="5DSU"/>
<dbReference type="PDBsum" id="5GGM"/>
<dbReference type="PDBsum" id="5I0I"/>
<dbReference type="PDBsum" id="5J03"/>
<dbReference type="PDBsum" id="5J8H"/>
<dbReference type="PDBsum" id="5JQA"/>
<dbReference type="PDBsum" id="5JTH"/>
<dbReference type="PDBsum" id="5K7L"/>
<dbReference type="PDBsum" id="5K8Q"/>
<dbReference type="PDBsum" id="5OEO"/>
<dbReference type="PDBsum" id="5TP5"/>
<dbReference type="PDBsum" id="5TP6"/>
<dbReference type="PDBsum" id="5V02"/>
<dbReference type="PDBsum" id="5V03"/>
<dbReference type="PDBsum" id="5V7X"/>
<dbReference type="PDBsum" id="5WBX"/>
<dbReference type="PDBsum" id="5WC5"/>
<dbReference type="PDBsum" id="6B8L"/>
<dbReference type="PDBsum" id="6B8M"/>
<dbReference type="PDBsum" id="6B8N"/>
<dbReference type="PDBsum" id="6B8P"/>
<dbReference type="PDBsum" id="6B8Q"/>
<dbReference type="PDBsum" id="6BUT"/>
<dbReference type="PDBsum" id="6C1D"/>
<dbReference type="PDBsum" id="6C1G"/>
<dbReference type="PDBsum" id="6C1H"/>
<dbReference type="PDBsum" id="6CNM"/>
<dbReference type="PDBsum" id="6CNN"/>
<dbReference type="PDBsum" id="6CNO"/>
<dbReference type="PDBsum" id="6DAD"/>
<dbReference type="PDBsum" id="6DAE"/>
<dbReference type="PDBsum" id="6DAF"/>
<dbReference type="PDBsum" id="6DAH"/>
<dbReference type="PDBsum" id="6E2F"/>
<dbReference type="PDBsum" id="6E2G"/>
<dbReference type="PDBsum" id="6EEB"/>
<dbReference type="PDBsum" id="6FEG"/>
<dbReference type="PDBsum" id="6FEH"/>
<dbReference type="PDBsum" id="6GDK"/>
<dbReference type="PDBsum" id="6GDL"/>
<dbReference type="PDBsum" id="6HCS"/>
<dbReference type="PDBsum" id="6HR1"/>
<dbReference type="PDBsum" id="6JI8"/>
<dbReference type="PDBsum" id="6JII"/>
<dbReference type="PDBsum" id="6JIU"/>
<dbReference type="PDBsum" id="6JIY"/>
<dbReference type="PDBsum" id="6JRS"/>
<dbReference type="PDBsum" id="6JV2"/>
<dbReference type="PDBsum" id="6K4K"/>
<dbReference type="PDBsum" id="6K4L"/>
<dbReference type="PDBsum" id="6K4R"/>
<dbReference type="PDBsum" id="6M2W"/>
<dbReference type="PDBsum" id="6M7H"/>
<dbReference type="PDBsum" id="6MUD"/>
<dbReference type="PDBsum" id="6MUE"/>
<dbReference type="PDBsum" id="6N5W"/>
<dbReference type="PDBsum" id="6O5G"/>
<dbReference type="PDBsum" id="6OS4"/>
<dbReference type="PDBsum" id="6PAW"/>
<dbReference type="PDBsum" id="6PBX"/>
<dbReference type="PDBsum" id="6PBY"/>
<dbReference type="PDBsum" id="6TV7"/>
<dbReference type="PDBsum" id="6U39"/>
<dbReference type="PDBsum" id="6U3A"/>
<dbReference type="PDBsum" id="6U3B"/>
<dbReference type="PDBsum" id="6U3D"/>
<dbReference type="PDBsum" id="6UZZ"/>
<dbReference type="PDBsum" id="6V00"/>
<dbReference type="PDBsum" id="6V01"/>
<dbReference type="PDBsum" id="6X32"/>
<dbReference type="PDBsum" id="6X33"/>
<dbReference type="PDBsum" id="6X35"/>
<dbReference type="PDBsum" id="6X36"/>
<dbReference type="PDBsum" id="6XXX"/>
<dbReference type="PDBsum" id="6XY3"/>
<dbReference type="PDBsum" id="6XYR"/>
<dbReference type="PDBsum" id="6Y4P"/>
<dbReference type="PDBsum" id="6Y94"/>
<dbReference type="PDBsum" id="6Y95"/>
<dbReference type="PDBsum" id="6YA9"/>
<dbReference type="PDBsum" id="6YNS"/>
<dbReference type="PDBsum" id="6YNU"/>
<dbReference type="PDBsum" id="6ZBI"/>
<dbReference type="PDBsum" id="7AUG"/>
<dbReference type="PDBsum" id="7BF1"/>
<dbReference type="PDBsum" id="7BF2"/>
<dbReference type="PDBsum" id="7KL5"/>
<dbReference type="PDBsum" id="7L8V"/>
<dbReference type="PDBsum" id="7PSZ"/>
<dbReference type="PDBsum" id="7PU9"/>
<dbReference type="PDBsum" id="7SHQ"/>
<dbReference type="PDBsum" id="7SX3"/>
<dbReference type="PDBsum" id="7SX4"/>
<dbReference type="PDBsum" id="7T2Q"/>
<dbReference type="PDBsum" id="7TCI"/>
<dbReference type="PDBsum" id="7TCP"/>
<dbReference type="PDBsum" id="7TZC"/>
<dbReference type="PDBsum" id="7U9T"/>
<dbReference type="PDBsum" id="7UA3"/>
<dbReference type="PDBsum" id="7UA4"/>
<dbReference type="PDBsum" id="7VMB"/>
<dbReference type="PDBsum" id="7VUO"/>
<dbReference type="PDBsum" id="7VUR"/>
<dbReference type="PDBsum" id="7VUS"/>
<dbReference type="PDBsum" id="7VUT"/>
<dbReference type="PDBsum" id="7VUU"/>
<dbReference type="PDBsum" id="7VVD"/>
<dbReference type="PDBsum" id="7VVH"/>
<dbReference type="PDBsum" id="7WJI"/>
<dbReference type="PDBsum" id="7WR3"/>
<dbReference type="PDBsum" id="7WR4"/>
<dbReference type="PDBsum" id="7WR5"/>
<dbReference type="PDBsum" id="7WZS"/>
<dbReference type="PDBsum" id="7XN4"/>
<dbReference type="PDBsum" id="7XN5"/>
<dbReference type="PDBsum" id="7XN6"/>
<dbReference type="PDBsum" id="7ZRP"/>
<dbReference type="PDBsum" id="7ZRQ"/>
<dbReference type="PDBsum" id="8AHS"/>
<dbReference type="PDBsum" id="8B6Q"/>
<dbReference type="PDBsum" id="8BFG"/>
<dbReference type="PDBsum" id="8DGH"/>
<dbReference type="PDBsum" id="8DGK"/>
<dbReference type="PDBsum" id="8DUJ"/>
<dbReference type="PDBsum" id="8DVE"/>
<dbReference type="PDBsum" id="8EOW"/>
<dbReference type="PDBsum" id="8EP0"/>
<dbReference type="PDBsum" id="8EP1"/>
<dbReference type="PDBsum" id="8FNY"/>
<dbReference type="PDBsum" id="8FO6"/>
<dbReference type="PDBsum" id="8GM4"/>
<dbReference type="PDBsum" id="8GM5"/>
<dbReference type="PDBsum" id="8IJK"/>
<dbReference type="PDBsum" id="8J00"/>
<dbReference type="PDBsum" id="8J01"/>
<dbReference type="PDBsum" id="8J02"/>
<dbReference type="PDBsum" id="8J03"/>
<dbReference type="PDBsum" id="8J04"/>
<dbReference type="PDBsum" id="8J05"/>
<dbReference type="PDBsum" id="8J07"/>
<dbReference type="PDBsum" id="8JFK"/>
<dbReference type="PDBsum" id="8ODZ"/>
<dbReference type="PDBsum" id="8OE0"/>
<dbReference type="PDBsum" id="8OE4"/>
<dbReference type="PDBsum" id="8PB1"/>
<dbReference type="PDBsum" id="8SIK"/>
<dbReference type="PDBsum" id="8SIM"/>
<dbReference type="PDBsum" id="8SIN"/>
<dbReference type="PDBsum" id="8UXL"/>
<dbReference type="PDBsum" id="8UXM"/>
<dbReference type="PDBsum" id="8W4U"/>
<dbReference type="PDBsum" id="8X43"/>
<dbReference type="PDBsum" id="8XJI"/>
<dbReference type="PDBsum" id="8XKH"/>
<dbReference type="PDBsum" id="8XLF"/>
<dbReference type="PDBsum" id="8XLH"/>
<dbReference type="PDBsum" id="8XO1"/>
<dbReference type="PDBsum" id="8XYA"/>
<dbReference type="PDBsum" id="8XYB"/>
<dbReference type="PDBsum" id="8Y40"/>
<dbReference type="PDBsum" id="9CUI"/>
<dbReference type="PDBsum" id="9CUK"/>
<dbReference type="PDBsum" id="9E17"/>
<dbReference type="PDBsum" id="9JQI"/>
<dbReference type="PDBsum" id="9K8W"/>
<dbReference type="PDBsum" id="9K8X"/>
<dbReference type="EMDB" id="EMD-16820"/>
<dbReference type="EMDB" id="EMD-16821"/>
<dbReference type="EMDB" id="EMD-16824"/>
<dbReference type="EMDB" id="EMD-17580"/>
<dbReference type="EMDB" id="EMD-20294"/>
<dbReference type="EMDB" id="EMD-20295"/>
<dbReference type="EMDB" id="EMD-20965"/>
<dbReference type="EMDB" id="EMD-20966"/>
<dbReference type="EMDB" id="EMD-20967"/>
<dbReference type="EMDB" id="EMD-22015"/>
<dbReference type="EMDB" id="EMD-22016"/>
<dbReference type="EMDB" id="EMD-22018"/>
<dbReference type="EMDB" id="EMD-22019"/>
<dbReference type="EMDB" id="EMD-25492"/>
<dbReference type="EMDB" id="EMD-25493"/>
<dbReference type="EMDB" id="EMD-25813"/>
<dbReference type="EMDB" id="EMD-25816"/>
<dbReference type="EMDB" id="EMD-26205"/>
<dbReference type="EMDB" id="EMD-26408"/>
<dbReference type="EMDB" id="EMD-26413"/>
<dbReference type="EMDB" id="EMD-26414"/>
<dbReference type="EMDB" id="EMD-27721"/>
<dbReference type="EMDB" id="EMD-27736"/>
<dbReference type="EMDB" id="EMD-28487"/>
<dbReference type="EMDB" id="EMD-28494"/>
<dbReference type="EMDB" id="EMD-28498"/>
<dbReference type="EMDB" id="EMD-30067"/>
<dbReference type="EMDB" id="EMD-32544"/>
<dbReference type="EMDB" id="EMD-33310"/>
<dbReference type="EMDB" id="EMD-33311"/>
<dbReference type="EMDB" id="EMD-33312"/>
<dbReference type="EMDB" id="EMD-35487"/>
<dbReference type="EMDB" id="EMD-35879"/>
<dbReference type="EMDB" id="EMD-35880"/>
<dbReference type="EMDB" id="EMD-35881"/>
<dbReference type="EMDB" id="EMD-35882"/>
<dbReference type="EMDB" id="EMD-35883"/>
<dbReference type="EMDB" id="EMD-35884"/>
<dbReference type="EMDB" id="EMD-35888"/>
<dbReference type="EMDB" id="EMD-36212"/>
<dbReference type="EMDB" id="EMD-37270"/>
<dbReference type="EMDB" id="EMD-38041"/>
<dbReference type="EMDB" id="EMD-38398"/>
<dbReference type="EMDB" id="EMD-38417"/>
<dbReference type="EMDB" id="EMD-38447"/>
<dbReference type="EMDB" id="EMD-38448"/>
<dbReference type="EMDB" id="EMD-38522"/>
<dbReference type="EMDB" id="EMD-38908"/>
<dbReference type="EMDB" id="EMD-40508"/>
<dbReference type="EMDB" id="EMD-40509"/>
<dbReference type="EMDB" id="EMD-40510"/>
<dbReference type="EMDB" id="EMD-42768"/>
<dbReference type="EMDB" id="EMD-42769"/>
<dbReference type="EMDB" id="EMD-45934"/>
<dbReference type="EMDB" id="EMD-45936"/>
<dbReference type="EMDB" id="EMD-7329"/>
<dbReference type="EMDB" id="EMD-7330"/>
<dbReference type="EMDB" id="EMD-7331"/>
<dbReference type="EMDB" id="EMD-7537"/>
<dbReference type="EMDB" id="EMD-7538"/>
<dbReference type="EMDB" id="EMD-7539"/>
<dbReference type="EMDB" id="EMD-8961"/>
<dbReference type="EMDB" id="EMD-8962"/>
<dbReference type="EMDB" id="EMD-9833"/>
<dbReference type="EMDB" id="EMD-9834"/>
<dbReference type="EMDB" id="EMD-9836"/>
<dbReference type="EMDB" id="EMD-9837"/>
<dbReference type="EMDB" id="EMD-9880"/>
<dbReference type="EMDB" id="EMD-9889"/>
<dbReference type="SASBDB" id="P0DP23"/>
<dbReference type="SMR" id="P0DP23"/>
<dbReference type="ComplexPortal" id="CPX-1001">
    <property type="entry name" value="Calcineurin-Calmodulin complex, gamma-R1 variant"/>
</dbReference>
<dbReference type="ComplexPortal" id="CPX-1002">
    <property type="entry name" value="Calcineurin-Calmodulin complex, beta-R2 variant"/>
</dbReference>
<dbReference type="ComplexPortal" id="CPX-1003">
    <property type="entry name" value="Calcineurin-Calmodulin complex, alpha-R1 variant"/>
</dbReference>
<dbReference type="ComplexPortal" id="CPX-1009">
    <property type="entry name" value="Calcineurin-Calmodulin complex, beta-R1 variant"/>
</dbReference>
<dbReference type="ComplexPortal" id="CPX-102">
    <property type="entry name" value="DAPK1 - calmodulin complex"/>
</dbReference>
<dbReference type="ComplexPortal" id="CPX-1048">
    <property type="entry name" value="Calcineurin-Calmodulin complex, alpha-R2 variant"/>
</dbReference>
<dbReference type="ComplexPortal" id="CPX-1050">
    <property type="entry name" value="Calcineurin-Calmodulin complex, gamma-R2 variant"/>
</dbReference>
<dbReference type="ComplexPortal" id="CPX-1112">
    <property type="entry name" value="Calcineurin-Calmodulin-AKAP5 complex, gamma-R1 variant"/>
</dbReference>
<dbReference type="ComplexPortal" id="CPX-1114">
    <property type="entry name" value="Calcineurin-Calmodulin-AKAP5 complex, alpha-R2 variant"/>
</dbReference>
<dbReference type="ComplexPortal" id="CPX-1116">
    <property type="entry name" value="Calcineurin-Calmodulin-AKAP5 complex, beta-R2 variant"/>
</dbReference>
<dbReference type="ComplexPortal" id="CPX-1118">
    <property type="entry name" value="Calcineurin-Calmodulin-AKAP5 complex, gamma-R2 variant"/>
</dbReference>
<dbReference type="ComplexPortal" id="CPX-2341">
    <property type="entry name" value="NALCN channelosome complex"/>
</dbReference>
<dbReference type="ComplexPortal" id="CPX-2640">
    <property type="entry name" value="Phosphorylase kinase, muscle variant"/>
</dbReference>
<dbReference type="ComplexPortal" id="CPX-674">
    <property type="entry name" value="Calcineurin-Calmodulin-AKAP5 complex, alpha-R1 variant"/>
</dbReference>
<dbReference type="ComplexPortal" id="CPX-902">
    <property type="entry name" value="Kv7.1 channel complex"/>
</dbReference>
<dbReference type="ComplexPortal" id="CPX-9141">
    <property type="entry name" value="Silencing factor of the integrated stress response complex"/>
</dbReference>
<dbReference type="ComplexPortal" id="CPX-9581">
    <property type="entry name" value="Phosphorylase kinase, liver variant"/>
</dbReference>
<dbReference type="ComplexPortal" id="CPX-998">
    <property type="entry name" value="Calcineurin-Calmodulin-AKAP5 complex, beta-R1 variant"/>
</dbReference>
<dbReference type="CORUM" id="P0DP23"/>
<dbReference type="FunCoup" id="P0DP23">
    <property type="interactions" value="3752"/>
</dbReference>
<dbReference type="IntAct" id="P0DP23">
    <property type="interactions" value="89"/>
</dbReference>
<dbReference type="MINT" id="P0DP23"/>
<dbReference type="STRING" id="9606.ENSP00000291295"/>
<dbReference type="BindingDB" id="P0DP23"/>
<dbReference type="ChEMBL" id="CHEMBL6093"/>
<dbReference type="DrugBank" id="DB08039">
    <property type="generic name" value="(3Z)-N,N-DIMETHYL-2-OXO-3-(4,5,6,7-TETRAHYDRO-1H-INDOL-2-YLMETHYLIDENE)-2,3-DIHYDRO-1H-INDOLE-5-SULFONAMIDE"/>
</dbReference>
<dbReference type="DrugBank" id="DB14511">
    <property type="generic name" value="Acetate"/>
</dbReference>
<dbReference type="DrugBank" id="DB01429">
    <property type="generic name" value="Aprindine"/>
</dbReference>
<dbReference type="DrugBank" id="DB01244">
    <property type="generic name" value="Bepridil"/>
</dbReference>
<dbReference type="DrugBank" id="DB01373">
    <property type="generic name" value="Calcium"/>
</dbReference>
<dbReference type="DrugBank" id="DB11093">
    <property type="generic name" value="Calcium citrate"/>
</dbReference>
<dbReference type="DrugBank" id="DB13800">
    <property type="generic name" value="Calcium levulinate"/>
</dbReference>
<dbReference type="DrugBank" id="DB11348">
    <property type="generic name" value="Calcium Phosphate"/>
</dbReference>
<dbReference type="DrugBank" id="DB14481">
    <property type="generic name" value="Calcium phosphate dihydrate"/>
</dbReference>
<dbReference type="DrugBank" id="DB00477">
    <property type="generic name" value="Chlorpromazine"/>
</dbReference>
<dbReference type="DrugBank" id="DB00527">
    <property type="generic name" value="Cinchocaine"/>
</dbReference>
<dbReference type="DrugBank" id="DB02868">
    <property type="generic name" value="Deacetoxyvinzolidine"/>
</dbReference>
<dbReference type="DrugBank" id="DB04209">
    <property type="generic name" value="Dequalinium"/>
</dbReference>
<dbReference type="DrugBank" id="DB01023">
    <property type="generic name" value="Felodipine"/>
</dbReference>
<dbReference type="DrugBank" id="DB04841">
    <property type="generic name" value="Flunarizine"/>
</dbReference>
<dbReference type="DrugBank" id="DB00623">
    <property type="generic name" value="Fluphenazine"/>
</dbReference>
<dbReference type="DrugBank" id="DB01218">
    <property type="generic name" value="Halofantrine"/>
</dbReference>
<dbReference type="DrugBank" id="DB00753">
    <property type="generic name" value="Isoflurane"/>
</dbReference>
<dbReference type="DrugBank" id="DB00836">
    <property type="generic name" value="Loperamide"/>
</dbReference>
<dbReference type="DrugBank" id="DB01065">
    <property type="generic name" value="Melatonin"/>
</dbReference>
<dbReference type="DrugBank" id="DB08231">
    <property type="generic name" value="Myristic acid"/>
</dbReference>
<dbReference type="DrugBank" id="DB04513">
    <property type="generic name" value="N-(6-Aminohexyl)-5-Chloro-1-Naphthalenesulfonamide"/>
</dbReference>
<dbReference type="DrugBank" id="DB00622">
    <property type="generic name" value="Nicardipine"/>
</dbReference>
<dbReference type="DrugBank" id="DB01115">
    <property type="generic name" value="Nifedipine"/>
</dbReference>
<dbReference type="DrugBank" id="DB00850">
    <property type="generic name" value="Perphenazine"/>
</dbReference>
<dbReference type="DrugBank" id="DB00925">
    <property type="generic name" value="Phenoxybenzamine"/>
</dbReference>
<dbReference type="DrugBank" id="DB01100">
    <property type="generic name" value="Pimozide"/>
</dbReference>
<dbReference type="DrugBank" id="DB04825">
    <property type="generic name" value="Prenylamine"/>
</dbReference>
<dbReference type="DrugBank" id="DB01069">
    <property type="generic name" value="Promethazine"/>
</dbReference>
<dbReference type="DrugBank" id="DB03900">
    <property type="generic name" value="tert-butanol"/>
</dbReference>
<dbReference type="DrugBank" id="DB00831">
    <property type="generic name" value="Trifluoperazine"/>
</dbReference>
<dbReference type="DrugBank" id="DB03977">
    <property type="generic name" value="Trimethyllysine"/>
</dbReference>
<dbReference type="DrugCentral" id="P0DP23"/>
<dbReference type="MoonDB" id="P0DP23">
    <property type="type" value="Predicted"/>
</dbReference>
<dbReference type="GlyGen" id="P0DP23">
    <property type="glycosylation" value="1 site, 1 O-linked glycan (1 site)"/>
</dbReference>
<dbReference type="iPTMnet" id="P0DP23"/>
<dbReference type="MetOSite" id="P0DP23"/>
<dbReference type="PhosphoSitePlus" id="P0DP23"/>
<dbReference type="BioMuta" id="CALM1"/>
<dbReference type="jPOST" id="P0DP23"/>
<dbReference type="MassIVE" id="P0DP23"/>
<dbReference type="PaxDb" id="9606-ENSP00000272298"/>
<dbReference type="PeptideAtlas" id="P0DP23"/>
<dbReference type="Pumba" id="P0DP23"/>
<dbReference type="Antibodypedia" id="4344">
    <property type="antibodies" value="514 antibodies from 34 providers"/>
</dbReference>
<dbReference type="DNASU" id="801"/>
<dbReference type="Ensembl" id="ENST00000356978.9">
    <property type="protein sequence ID" value="ENSP00000349467.4"/>
    <property type="gene ID" value="ENSG00000198668.14"/>
</dbReference>
<dbReference type="GeneID" id="801"/>
<dbReference type="GeneID" id="805"/>
<dbReference type="GeneID" id="808"/>
<dbReference type="KEGG" id="hsa:801"/>
<dbReference type="KEGG" id="hsa:805"/>
<dbReference type="KEGG" id="hsa:808"/>
<dbReference type="MANE-Select" id="ENST00000356978.9">
    <property type="protein sequence ID" value="ENSP00000349467.4"/>
    <property type="RefSeq nucleotide sequence ID" value="NM_006888.6"/>
    <property type="RefSeq protein sequence ID" value="NP_008819.1"/>
</dbReference>
<dbReference type="AGR" id="HGNC:1442"/>
<dbReference type="AGR" id="HGNC:1445"/>
<dbReference type="AGR" id="HGNC:1449"/>
<dbReference type="CTD" id="801"/>
<dbReference type="CTD" id="805"/>
<dbReference type="CTD" id="808"/>
<dbReference type="DisGeNET" id="801"/>
<dbReference type="DisGeNET" id="805"/>
<dbReference type="DisGeNET" id="808"/>
<dbReference type="GeneCards" id="CALM1"/>
<dbReference type="GeneReviews" id="CALM1"/>
<dbReference type="HGNC" id="HGNC:1442">
    <property type="gene designation" value="CALM1"/>
</dbReference>
<dbReference type="HPA" id="ENSG00000198668">
    <property type="expression patterns" value="Low tissue specificity"/>
</dbReference>
<dbReference type="MalaCards" id="CALM1"/>
<dbReference type="MIM" id="114180">
    <property type="type" value="gene"/>
</dbReference>
<dbReference type="MIM" id="614916">
    <property type="type" value="phenotype"/>
</dbReference>
<dbReference type="MIM" id="616247">
    <property type="type" value="phenotype"/>
</dbReference>
<dbReference type="neXtProt" id="NX_P0DP23"/>
<dbReference type="OpenTargets" id="ENSG00000143933"/>
<dbReference type="OpenTargets" id="ENSG00000160014"/>
<dbReference type="OpenTargets" id="ENSG00000198668"/>
<dbReference type="Orphanet" id="3286">
    <property type="disease" value="Catecholaminergic polymorphic ventricular tachycardia"/>
</dbReference>
<dbReference type="Orphanet" id="101016">
    <property type="disease" value="Romano-Ward syndrome"/>
</dbReference>
<dbReference type="VEuPathDB" id="HostDB:ENSG00000198668"/>
<dbReference type="eggNOG" id="KOG0027">
    <property type="taxonomic scope" value="Eukaryota"/>
</dbReference>
<dbReference type="InParanoid" id="P0DP23"/>
<dbReference type="OMA" id="ARKMKEC"/>
<dbReference type="OrthoDB" id="9924840at2759"/>
<dbReference type="PAN-GO" id="P0DP23">
    <property type="GO annotations" value="2 GO annotations based on evolutionary models"/>
</dbReference>
<dbReference type="PathwayCommons" id="P0DP23"/>
<dbReference type="Reactome" id="R-HSA-111932">
    <property type="pathway name" value="CaMK IV-mediated phosphorylation of CREB"/>
</dbReference>
<dbReference type="Reactome" id="R-HSA-111933">
    <property type="pathway name" value="Calmodulin induced events"/>
</dbReference>
<dbReference type="Reactome" id="R-HSA-111957">
    <property type="pathway name" value="Cam-PDE 1 activation"/>
</dbReference>
<dbReference type="Reactome" id="R-HSA-111997">
    <property type="pathway name" value="CaM pathway"/>
</dbReference>
<dbReference type="Reactome" id="R-HSA-114608">
    <property type="pathway name" value="Platelet degranulation"/>
</dbReference>
<dbReference type="Reactome" id="R-HSA-1445148">
    <property type="pathway name" value="Translocation of SLC2A4 (GLUT4) to the plasma membrane"/>
</dbReference>
<dbReference type="Reactome" id="R-HSA-1474151">
    <property type="pathway name" value="Tetrahydrobiopterin (BH4) synthesis, recycling, salvage and regulation"/>
</dbReference>
<dbReference type="Reactome" id="R-HSA-163615">
    <property type="pathway name" value="PKA activation"/>
</dbReference>
<dbReference type="Reactome" id="R-HSA-180024">
    <property type="pathway name" value="DARPP-32 events"/>
</dbReference>
<dbReference type="Reactome" id="R-HSA-1855204">
    <property type="pathway name" value="Synthesis of IP3 and IP4 in the cytosol"/>
</dbReference>
<dbReference type="Reactome" id="R-HSA-2025928">
    <property type="pathway name" value="Calcineurin activates NFAT"/>
</dbReference>
<dbReference type="Reactome" id="R-HSA-203615">
    <property type="pathway name" value="eNOS activation"/>
</dbReference>
<dbReference type="Reactome" id="R-HSA-2151201">
    <property type="pathway name" value="Transcriptional activation of mitochondrial biogenesis"/>
</dbReference>
<dbReference type="Reactome" id="R-HSA-2514859">
    <property type="pathway name" value="Inactivation, recovery and regulation of the phototransduction cascade"/>
</dbReference>
<dbReference type="Reactome" id="R-HSA-2672351">
    <property type="pathway name" value="Stimuli-sensing channels"/>
</dbReference>
<dbReference type="Reactome" id="R-HSA-2871809">
    <property type="pathway name" value="FCERI mediated Ca+2 mobilization"/>
</dbReference>
<dbReference type="Reactome" id="R-HSA-4086398">
    <property type="pathway name" value="Ca2+ pathway"/>
</dbReference>
<dbReference type="Reactome" id="R-HSA-418359">
    <property type="pathway name" value="Reduction of cytosolic Ca++ levels"/>
</dbReference>
<dbReference type="Reactome" id="R-HSA-425561">
    <property type="pathway name" value="Sodium/Calcium exchangers"/>
</dbReference>
<dbReference type="Reactome" id="R-HSA-438066">
    <property type="pathway name" value="Unblocking of NMDA receptors, glutamate binding and activation"/>
</dbReference>
<dbReference type="Reactome" id="R-HSA-442720">
    <property type="pathway name" value="CREB1 phosphorylation through the activation of Adenylate Cyclase"/>
</dbReference>
<dbReference type="Reactome" id="R-HSA-442729">
    <property type="pathway name" value="CREB1 phosphorylation through the activation of CaMKII/CaMKK/CaMKIV cascasde"/>
</dbReference>
<dbReference type="Reactome" id="R-HSA-442982">
    <property type="pathway name" value="Ras activation upon Ca2+ influx through NMDA receptor"/>
</dbReference>
<dbReference type="Reactome" id="R-HSA-445355">
    <property type="pathway name" value="Smooth Muscle Contraction"/>
</dbReference>
<dbReference type="Reactome" id="R-HSA-451308">
    <property type="pathway name" value="Activation of Ca-permeable Kainate Receptor"/>
</dbReference>
<dbReference type="Reactome" id="R-HSA-5210891">
    <property type="pathway name" value="Uptake and function of anthrax toxins"/>
</dbReference>
<dbReference type="Reactome" id="R-HSA-5218920">
    <property type="pathway name" value="VEGFR2 mediated vascular permeability"/>
</dbReference>
<dbReference type="Reactome" id="R-HSA-5218921">
    <property type="pathway name" value="VEGFR2 mediated cell proliferation"/>
</dbReference>
<dbReference type="Reactome" id="R-HSA-5576892">
    <property type="pathway name" value="Phase 0 - rapid depolarisation"/>
</dbReference>
<dbReference type="Reactome" id="R-HSA-5578775">
    <property type="pathway name" value="Ion homeostasis"/>
</dbReference>
<dbReference type="Reactome" id="R-HSA-5607763">
    <property type="pathway name" value="CLEC7A (Dectin-1) induces NFAT activation"/>
</dbReference>
<dbReference type="Reactome" id="R-HSA-5626467">
    <property type="pathway name" value="RHO GTPases activate IQGAPs"/>
</dbReference>
<dbReference type="Reactome" id="R-HSA-5627123">
    <property type="pathway name" value="RHO GTPases activate PAKs"/>
</dbReference>
<dbReference type="Reactome" id="R-HSA-5673000">
    <property type="pathway name" value="RAF activation"/>
</dbReference>
<dbReference type="Reactome" id="R-HSA-5673001">
    <property type="pathway name" value="RAF/MAP kinase cascade"/>
</dbReference>
<dbReference type="Reactome" id="R-HSA-6802946">
    <property type="pathway name" value="Signaling by moderate kinase activity BRAF mutants"/>
</dbReference>
<dbReference type="Reactome" id="R-HSA-6802952">
    <property type="pathway name" value="Signaling by BRAF and RAF1 fusions"/>
</dbReference>
<dbReference type="Reactome" id="R-HSA-6802955">
    <property type="pathway name" value="Paradoxical activation of RAF signaling by kinase inactive BRAF"/>
</dbReference>
<dbReference type="Reactome" id="R-HSA-70221">
    <property type="pathway name" value="Glycogen breakdown (glycogenolysis)"/>
</dbReference>
<dbReference type="Reactome" id="R-HSA-8876725">
    <property type="pathway name" value="Protein methylation"/>
</dbReference>
<dbReference type="Reactome" id="R-HSA-9009391">
    <property type="pathway name" value="Extra-nuclear estrogen signaling"/>
</dbReference>
<dbReference type="Reactome" id="R-HSA-9022535">
    <property type="pathway name" value="Loss of phosphorylation of MECP2 at T308"/>
</dbReference>
<dbReference type="Reactome" id="R-HSA-9022692">
    <property type="pathway name" value="Regulation of MECP2 expression and activity"/>
</dbReference>
<dbReference type="Reactome" id="R-HSA-936837">
    <property type="pathway name" value="Ion transport by P-type ATPases"/>
</dbReference>
<dbReference type="Reactome" id="R-HSA-9617324">
    <property type="pathway name" value="Negative regulation of NMDA receptor-mediated neuronal transmission"/>
</dbReference>
<dbReference type="Reactome" id="R-HSA-9619229">
    <property type="pathway name" value="Activation of RAC1 downstream of NMDARs"/>
</dbReference>
<dbReference type="Reactome" id="R-HSA-9619483">
    <property type="pathway name" value="Activation of AMPK downstream of NMDARs"/>
</dbReference>
<dbReference type="Reactome" id="R-HSA-9620244">
    <property type="pathway name" value="Long-term potentiation"/>
</dbReference>
<dbReference type="Reactome" id="R-HSA-9648002">
    <property type="pathway name" value="RAS processing"/>
</dbReference>
<dbReference type="Reactome" id="R-HSA-9649948">
    <property type="pathway name" value="Signaling downstream of RAS mutants"/>
</dbReference>
<dbReference type="Reactome" id="R-HSA-9656223">
    <property type="pathway name" value="Signaling by RAF1 mutants"/>
</dbReference>
<dbReference type="Reactome" id="R-HSA-9664323">
    <property type="pathway name" value="FCGR3A-mediated IL10 synthesis"/>
</dbReference>
<dbReference type="Reactome" id="R-HSA-983695">
    <property type="pathway name" value="Antigen activates B Cell Receptor (BCR) leading to generation of second messengers"/>
</dbReference>
<dbReference type="Reactome" id="R-HSA-9856530">
    <property type="pathway name" value="High laminar flow shear stress activates signaling by PIEZO1 and PECAM1:CDH5:KDR in endothelial cells"/>
</dbReference>
<dbReference type="SignaLink" id="P0DP23"/>
<dbReference type="SIGNOR" id="P0DP23"/>
<dbReference type="BioGRID-ORCS" id="801">
    <property type="hits" value="10 hits in 1158 CRISPR screens"/>
</dbReference>
<dbReference type="BioGRID-ORCS" id="805">
    <property type="hits" value="38 hits in 1009 CRISPR screens"/>
</dbReference>
<dbReference type="BioGRID-ORCS" id="808">
    <property type="hits" value="46 hits in 1159 CRISPR screens"/>
</dbReference>
<dbReference type="ChiTaRS" id="CALM1">
    <property type="organism name" value="human"/>
</dbReference>
<dbReference type="EvolutionaryTrace" id="P0DP23"/>
<dbReference type="Pharos" id="P0DP23">
    <property type="development level" value="Tclin"/>
</dbReference>
<dbReference type="PRO" id="PR:P0DP23"/>
<dbReference type="Proteomes" id="UP000005640">
    <property type="component" value="Chromosome 14"/>
</dbReference>
<dbReference type="RNAct" id="P0DP23">
    <property type="molecule type" value="protein"/>
</dbReference>
<dbReference type="Bgee" id="ENSG00000198668">
    <property type="expression patterns" value="Expressed in lateral nuclear group of thalamus and 211 other cell types or tissues"/>
</dbReference>
<dbReference type="ExpressionAtlas" id="P0DP23">
    <property type="expression patterns" value="baseline and differential"/>
</dbReference>
<dbReference type="GO" id="GO:0034704">
    <property type="term" value="C:calcium channel complex"/>
    <property type="evidence" value="ECO:0000314"/>
    <property type="project" value="BHF-UCL"/>
</dbReference>
<dbReference type="GO" id="GO:0044305">
    <property type="term" value="C:calyx of Held"/>
    <property type="evidence" value="ECO:0007669"/>
    <property type="project" value="Ensembl"/>
</dbReference>
<dbReference type="GO" id="GO:1902494">
    <property type="term" value="C:catalytic complex"/>
    <property type="evidence" value="ECO:0000314"/>
    <property type="project" value="CAFA"/>
</dbReference>
<dbReference type="GO" id="GO:0005813">
    <property type="term" value="C:centrosome"/>
    <property type="evidence" value="ECO:0000314"/>
    <property type="project" value="UniProtKB"/>
</dbReference>
<dbReference type="GO" id="GO:0005737">
    <property type="term" value="C:cytoplasm"/>
    <property type="evidence" value="ECO:0000314"/>
    <property type="project" value="UniProtKB"/>
</dbReference>
<dbReference type="GO" id="GO:0005829">
    <property type="term" value="C:cytosol"/>
    <property type="evidence" value="ECO:0000304"/>
    <property type="project" value="Reactome"/>
</dbReference>
<dbReference type="GO" id="GO:0005576">
    <property type="term" value="C:extracellular region"/>
    <property type="evidence" value="ECO:0000304"/>
    <property type="project" value="Reactome"/>
</dbReference>
<dbReference type="GO" id="GO:0043209">
    <property type="term" value="C:myelin sheath"/>
    <property type="evidence" value="ECO:0000318"/>
    <property type="project" value="GO_Central"/>
</dbReference>
<dbReference type="GO" id="GO:0005654">
    <property type="term" value="C:nucleoplasm"/>
    <property type="evidence" value="ECO:0000304"/>
    <property type="project" value="Reactome"/>
</dbReference>
<dbReference type="GO" id="GO:0005634">
    <property type="term" value="C:nucleus"/>
    <property type="evidence" value="ECO:0007005"/>
    <property type="project" value="UniProtKB"/>
</dbReference>
<dbReference type="GO" id="GO:0005886">
    <property type="term" value="C:plasma membrane"/>
    <property type="evidence" value="ECO:0000304"/>
    <property type="project" value="UniProtKB"/>
</dbReference>
<dbReference type="GO" id="GO:0099523">
    <property type="term" value="C:presynaptic cytosol"/>
    <property type="evidence" value="ECO:0007669"/>
    <property type="project" value="Ensembl"/>
</dbReference>
<dbReference type="GO" id="GO:0032991">
    <property type="term" value="C:protein-containing complex"/>
    <property type="evidence" value="ECO:0000314"/>
    <property type="project" value="CAFA"/>
</dbReference>
<dbReference type="GO" id="GO:0030017">
    <property type="term" value="C:sarcomere"/>
    <property type="evidence" value="ECO:0000314"/>
    <property type="project" value="BHF-UCL"/>
</dbReference>
<dbReference type="GO" id="GO:0097225">
    <property type="term" value="C:sperm midpiece"/>
    <property type="evidence" value="ECO:0007669"/>
    <property type="project" value="Ensembl"/>
</dbReference>
<dbReference type="GO" id="GO:0005876">
    <property type="term" value="C:spindle microtubule"/>
    <property type="evidence" value="ECO:0000314"/>
    <property type="project" value="UniProtKB"/>
</dbReference>
<dbReference type="GO" id="GO:0000922">
    <property type="term" value="C:spindle pole"/>
    <property type="evidence" value="ECO:0000314"/>
    <property type="project" value="UniProtKB"/>
</dbReference>
<dbReference type="GO" id="GO:0031982">
    <property type="term" value="C:vesicle"/>
    <property type="evidence" value="ECO:0007005"/>
    <property type="project" value="UniProtKB"/>
</dbReference>
<dbReference type="GO" id="GO:0008076">
    <property type="term" value="C:voltage-gated potassium channel complex"/>
    <property type="evidence" value="ECO:0007669"/>
    <property type="project" value="Ensembl"/>
</dbReference>
<dbReference type="GO" id="GO:0010856">
    <property type="term" value="F:adenylate cyclase activator activity"/>
    <property type="evidence" value="ECO:0000314"/>
    <property type="project" value="UniProtKB"/>
</dbReference>
<dbReference type="GO" id="GO:0019855">
    <property type="term" value="F:calcium channel inhibitor activity"/>
    <property type="evidence" value="ECO:0000314"/>
    <property type="project" value="UniProtKB"/>
</dbReference>
<dbReference type="GO" id="GO:0005246">
    <property type="term" value="F:calcium channel regulator activity"/>
    <property type="evidence" value="ECO:0000314"/>
    <property type="project" value="BHF-UCL"/>
</dbReference>
<dbReference type="GO" id="GO:0005509">
    <property type="term" value="F:calcium ion binding"/>
    <property type="evidence" value="ECO:0000314"/>
    <property type="project" value="UniProtKB"/>
</dbReference>
<dbReference type="GO" id="GO:0048306">
    <property type="term" value="F:calcium-dependent protein binding"/>
    <property type="evidence" value="ECO:0007669"/>
    <property type="project" value="Ensembl"/>
</dbReference>
<dbReference type="GO" id="GO:0019901">
    <property type="term" value="F:protein kinase binding"/>
    <property type="evidence" value="ECO:0000353"/>
    <property type="project" value="BHF-UCL"/>
</dbReference>
<dbReference type="GO" id="GO:0072542">
    <property type="term" value="F:protein phosphatase activator activity"/>
    <property type="evidence" value="ECO:0000314"/>
    <property type="project" value="BHF-UCL"/>
</dbReference>
<dbReference type="GO" id="GO:0043539">
    <property type="term" value="F:protein serine/threonine kinase activator activity"/>
    <property type="evidence" value="ECO:0000314"/>
    <property type="project" value="UniProtKB"/>
</dbReference>
<dbReference type="GO" id="GO:0031432">
    <property type="term" value="F:titin binding"/>
    <property type="evidence" value="ECO:0000353"/>
    <property type="project" value="BHF-UCL"/>
</dbReference>
<dbReference type="GO" id="GO:0044325">
    <property type="term" value="F:transmembrane transporter binding"/>
    <property type="evidence" value="ECO:0000353"/>
    <property type="project" value="BHF-UCL"/>
</dbReference>
<dbReference type="GO" id="GO:0016240">
    <property type="term" value="P:autophagosome membrane docking"/>
    <property type="evidence" value="ECO:0000314"/>
    <property type="project" value="UniProtKB"/>
</dbReference>
<dbReference type="GO" id="GO:0097720">
    <property type="term" value="P:calcineurin-mediated signaling"/>
    <property type="evidence" value="ECO:0000314"/>
    <property type="project" value="BHF-UCL"/>
</dbReference>
<dbReference type="GO" id="GO:0035458">
    <property type="term" value="P:cellular response to interferon-beta"/>
    <property type="evidence" value="ECO:0000314"/>
    <property type="project" value="UniProt"/>
</dbReference>
<dbReference type="GO" id="GO:0071346">
    <property type="term" value="P:cellular response to type II interferon"/>
    <property type="evidence" value="ECO:0000314"/>
    <property type="project" value="UniProt"/>
</dbReference>
<dbReference type="GO" id="GO:0005513">
    <property type="term" value="P:detection of calcium ion"/>
    <property type="evidence" value="ECO:0000315"/>
    <property type="project" value="BHF-UCL"/>
</dbReference>
<dbReference type="GO" id="GO:0007186">
    <property type="term" value="P:G protein-coupled receptor signaling pathway"/>
    <property type="evidence" value="ECO:0000304"/>
    <property type="project" value="UniProtKB"/>
</dbReference>
<dbReference type="GO" id="GO:0000086">
    <property type="term" value="P:G2/M transition of mitotic cell cycle"/>
    <property type="evidence" value="ECO:0007669"/>
    <property type="project" value="Ensembl"/>
</dbReference>
<dbReference type="GO" id="GO:0060291">
    <property type="term" value="P:long-term synaptic potentiation"/>
    <property type="evidence" value="ECO:0000304"/>
    <property type="project" value="BHF-UCL"/>
</dbReference>
<dbReference type="GO" id="GO:1990456">
    <property type="term" value="P:mitochondrion-endoplasmic reticulum membrane tethering"/>
    <property type="evidence" value="ECO:0000314"/>
    <property type="project" value="UniProtKB"/>
</dbReference>
<dbReference type="GO" id="GO:1905913">
    <property type="term" value="P:negative regulation of calcium ion export across plasma membrane"/>
    <property type="evidence" value="ECO:0007669"/>
    <property type="project" value="Ensembl"/>
</dbReference>
<dbReference type="GO" id="GO:1901842">
    <property type="term" value="P:negative regulation of high voltage-gated calcium channel activity"/>
    <property type="evidence" value="ECO:0000315"/>
    <property type="project" value="UniProtKB"/>
</dbReference>
<dbReference type="GO" id="GO:0060315">
    <property type="term" value="P:negative regulation of ryanodine-sensitive calcium-release channel activity"/>
    <property type="evidence" value="ECO:0000314"/>
    <property type="project" value="UniProtKB"/>
</dbReference>
<dbReference type="GO" id="GO:0140056">
    <property type="term" value="P:organelle localization by membrane tethering"/>
    <property type="evidence" value="ECO:0000314"/>
    <property type="project" value="UniProtKB"/>
</dbReference>
<dbReference type="GO" id="GO:0046427">
    <property type="term" value="P:positive regulation of receptor signaling pathway via JAK-STAT"/>
    <property type="evidence" value="ECO:0000314"/>
    <property type="project" value="UniProt"/>
</dbReference>
<dbReference type="GO" id="GO:0140238">
    <property type="term" value="P:presynaptic endocytosis"/>
    <property type="evidence" value="ECO:0007669"/>
    <property type="project" value="Ensembl"/>
</dbReference>
<dbReference type="GO" id="GO:0050848">
    <property type="term" value="P:regulation of calcium-mediated signaling"/>
    <property type="evidence" value="ECO:0007669"/>
    <property type="project" value="Ensembl"/>
</dbReference>
<dbReference type="GO" id="GO:0098901">
    <property type="term" value="P:regulation of cardiac muscle cell action potential"/>
    <property type="evidence" value="ECO:0000315"/>
    <property type="project" value="UniProtKB"/>
</dbReference>
<dbReference type="GO" id="GO:0055117">
    <property type="term" value="P:regulation of cardiac muscle contraction"/>
    <property type="evidence" value="ECO:0000315"/>
    <property type="project" value="BHF-UCL"/>
</dbReference>
<dbReference type="GO" id="GO:0010881">
    <property type="term" value="P:regulation of cardiac muscle contraction by regulation of the release of sequestered calcium ion"/>
    <property type="evidence" value="ECO:0000314"/>
    <property type="project" value="BHF-UCL"/>
</dbReference>
<dbReference type="GO" id="GO:1901844">
    <property type="term" value="P:regulation of cell communication by electrical coupling involved in cardiac conduction"/>
    <property type="evidence" value="ECO:0000305"/>
    <property type="project" value="BHF-UCL"/>
</dbReference>
<dbReference type="GO" id="GO:0032465">
    <property type="term" value="P:regulation of cytokinesis"/>
    <property type="evidence" value="ECO:0000315"/>
    <property type="project" value="UniProtKB"/>
</dbReference>
<dbReference type="GO" id="GO:0002027">
    <property type="term" value="P:regulation of heart rate"/>
    <property type="evidence" value="ECO:0000315"/>
    <property type="project" value="BHF-UCL"/>
</dbReference>
<dbReference type="GO" id="GO:0010880">
    <property type="term" value="P:regulation of release of sequestered calcium ion into cytosol by sarcoplasmic reticulum"/>
    <property type="evidence" value="ECO:0000314"/>
    <property type="project" value="BHF-UCL"/>
</dbReference>
<dbReference type="GO" id="GO:0060314">
    <property type="term" value="P:regulation of ryanodine-sensitive calcium-release channel activity"/>
    <property type="evidence" value="ECO:0000314"/>
    <property type="project" value="UniProtKB"/>
</dbReference>
<dbReference type="GO" id="GO:0051592">
    <property type="term" value="P:response to calcium ion"/>
    <property type="evidence" value="ECO:0000314"/>
    <property type="project" value="BHF-UCL"/>
</dbReference>
<dbReference type="GO" id="GO:0021762">
    <property type="term" value="P:substantia nigra development"/>
    <property type="evidence" value="ECO:0007007"/>
    <property type="project" value="UniProtKB"/>
</dbReference>
<dbReference type="CDD" id="cd00051">
    <property type="entry name" value="EFh"/>
    <property type="match status" value="2"/>
</dbReference>
<dbReference type="FunFam" id="1.10.238.10:FF:000527">
    <property type="entry name" value="Calmodulin-3"/>
    <property type="match status" value="1"/>
</dbReference>
<dbReference type="Gene3D" id="1.10.238.10">
    <property type="entry name" value="EF-hand"/>
    <property type="match status" value="3"/>
</dbReference>
<dbReference type="IDEAL" id="IID00706"/>
<dbReference type="InterPro" id="IPR050230">
    <property type="entry name" value="CALM/Myosin/TropC-like"/>
</dbReference>
<dbReference type="InterPro" id="IPR011992">
    <property type="entry name" value="EF-hand-dom_pair"/>
</dbReference>
<dbReference type="InterPro" id="IPR018247">
    <property type="entry name" value="EF_Hand_1_Ca_BS"/>
</dbReference>
<dbReference type="InterPro" id="IPR002048">
    <property type="entry name" value="EF_hand_dom"/>
</dbReference>
<dbReference type="PANTHER" id="PTHR23048:SF0">
    <property type="entry name" value="CALMODULIN LIKE 3"/>
    <property type="match status" value="1"/>
</dbReference>
<dbReference type="PANTHER" id="PTHR23048">
    <property type="entry name" value="MYOSIN LIGHT CHAIN 1, 3"/>
    <property type="match status" value="1"/>
</dbReference>
<dbReference type="Pfam" id="PF13499">
    <property type="entry name" value="EF-hand_7"/>
    <property type="match status" value="2"/>
</dbReference>
<dbReference type="PRINTS" id="PR00450">
    <property type="entry name" value="RECOVERIN"/>
</dbReference>
<dbReference type="SMART" id="SM00054">
    <property type="entry name" value="EFh"/>
    <property type="match status" value="4"/>
</dbReference>
<dbReference type="SUPFAM" id="SSF47473">
    <property type="entry name" value="EF-hand"/>
    <property type="match status" value="1"/>
</dbReference>
<dbReference type="PROSITE" id="PS00018">
    <property type="entry name" value="EF_HAND_1"/>
    <property type="match status" value="4"/>
</dbReference>
<dbReference type="PROSITE" id="PS50222">
    <property type="entry name" value="EF_HAND_2"/>
    <property type="match status" value="4"/>
</dbReference>
<keyword id="KW-0002">3D-structure</keyword>
<keyword id="KW-0007">Acetylation</keyword>
<keyword id="KW-0106">Calcium</keyword>
<keyword id="KW-0966">Cell projection</keyword>
<keyword id="KW-0969">Cilium</keyword>
<keyword id="KW-0963">Cytoplasm</keyword>
<keyword id="KW-0206">Cytoskeleton</keyword>
<keyword id="KW-0903">Direct protein sequencing</keyword>
<keyword id="KW-0225">Disease variant</keyword>
<keyword id="KW-0282">Flagellum</keyword>
<keyword id="KW-0945">Host-virus interaction</keyword>
<keyword id="KW-1017">Isopeptide bond</keyword>
<keyword id="KW-0454">Long QT syndrome</keyword>
<keyword id="KW-0479">Metal-binding</keyword>
<keyword id="KW-0488">Methylation</keyword>
<keyword id="KW-0597">Phosphoprotein</keyword>
<keyword id="KW-1185">Reference proteome</keyword>
<keyword id="KW-0677">Repeat</keyword>
<keyword id="KW-0832">Ubl conjugation</keyword>
<name>CALM1_HUMAN</name>
<feature type="initiator methionine" description="Removed" evidence="55 57 72 76 77 81">
    <location>
        <position position="1"/>
    </location>
</feature>
<feature type="chain" id="PRO_0000439932" description="Calmodulin-1">
    <location>
        <begin position="2"/>
        <end position="149"/>
    </location>
</feature>
<feature type="domain" description="EF-hand 1" evidence="7">
    <location>
        <begin position="8"/>
        <end position="43"/>
    </location>
</feature>
<feature type="domain" description="EF-hand 2" evidence="7">
    <location>
        <begin position="44"/>
        <end position="79"/>
    </location>
</feature>
<feature type="domain" description="EF-hand 3" evidence="7">
    <location>
        <begin position="81"/>
        <end position="116"/>
    </location>
</feature>
<feature type="domain" description="EF-hand 4" evidence="7">
    <location>
        <begin position="117"/>
        <end position="149"/>
    </location>
</feature>
<feature type="region of interest" description="Necessary and sufficient for interaction with PCP4" evidence="39">
    <location>
        <begin position="77"/>
        <end position="149"/>
    </location>
</feature>
<feature type="binding site" evidence="7 12 32 38 61 63 64 65">
    <location>
        <position position="21"/>
    </location>
    <ligand>
        <name>Ca(2+)</name>
        <dbReference type="ChEBI" id="CHEBI:29108"/>
        <label>1</label>
    </ligand>
</feature>
<feature type="binding site" evidence="7 12 32 38 61 63 64 65">
    <location>
        <position position="23"/>
    </location>
    <ligand>
        <name>Ca(2+)</name>
        <dbReference type="ChEBI" id="CHEBI:29108"/>
        <label>1</label>
    </ligand>
</feature>
<feature type="binding site" evidence="7 12 32 38 61 63 64 65">
    <location>
        <position position="25"/>
    </location>
    <ligand>
        <name>Ca(2+)</name>
        <dbReference type="ChEBI" id="CHEBI:29108"/>
        <label>1</label>
    </ligand>
</feature>
<feature type="binding site" evidence="7 12 32 38 61 63 64 65">
    <location>
        <position position="27"/>
    </location>
    <ligand>
        <name>Ca(2+)</name>
        <dbReference type="ChEBI" id="CHEBI:29108"/>
        <label>1</label>
    </ligand>
</feature>
<feature type="binding site" evidence="7 12 32 38 61 63 64 65">
    <location>
        <position position="32"/>
    </location>
    <ligand>
        <name>Ca(2+)</name>
        <dbReference type="ChEBI" id="CHEBI:29108"/>
        <label>1</label>
    </ligand>
</feature>
<feature type="binding site" evidence="7 12 32 38 61 63 64 65">
    <location>
        <position position="57"/>
    </location>
    <ligand>
        <name>Ca(2+)</name>
        <dbReference type="ChEBI" id="CHEBI:29108"/>
        <label>2</label>
    </ligand>
</feature>
<feature type="binding site" evidence="7 12 32 38 61 63 64 65">
    <location>
        <position position="59"/>
    </location>
    <ligand>
        <name>Ca(2+)</name>
        <dbReference type="ChEBI" id="CHEBI:29108"/>
        <label>2</label>
    </ligand>
</feature>
<feature type="binding site" evidence="7 12 32 38 61 63 64 65">
    <location>
        <position position="61"/>
    </location>
    <ligand>
        <name>Ca(2+)</name>
        <dbReference type="ChEBI" id="CHEBI:29108"/>
        <label>2</label>
    </ligand>
</feature>
<feature type="binding site" evidence="7 12 32 38 61 63 64 65">
    <location>
        <position position="63"/>
    </location>
    <ligand>
        <name>Ca(2+)</name>
        <dbReference type="ChEBI" id="CHEBI:29108"/>
        <label>2</label>
    </ligand>
</feature>
<feature type="binding site" evidence="7 12 32 38 61 63 64 65">
    <location>
        <position position="68"/>
    </location>
    <ligand>
        <name>Ca(2+)</name>
        <dbReference type="ChEBI" id="CHEBI:29108"/>
        <label>2</label>
    </ligand>
</feature>
<feature type="binding site" evidence="7 12 38 42 61 65 67 68">
    <location>
        <position position="94"/>
    </location>
    <ligand>
        <name>Ca(2+)</name>
        <dbReference type="ChEBI" id="CHEBI:29108"/>
        <label>3</label>
    </ligand>
</feature>
<feature type="binding site" evidence="7 12 38 42 61 65 67 68">
    <location>
        <position position="96"/>
    </location>
    <ligand>
        <name>Ca(2+)</name>
        <dbReference type="ChEBI" id="CHEBI:29108"/>
        <label>3</label>
    </ligand>
</feature>
<feature type="binding site" evidence="7 12 38 42 61 65 67 68">
    <location>
        <position position="98"/>
    </location>
    <ligand>
        <name>Ca(2+)</name>
        <dbReference type="ChEBI" id="CHEBI:29108"/>
        <label>3</label>
    </ligand>
</feature>
<feature type="binding site" evidence="7 12 38 42 61 65 67 68">
    <location>
        <position position="100"/>
    </location>
    <ligand>
        <name>Ca(2+)</name>
        <dbReference type="ChEBI" id="CHEBI:29108"/>
        <label>3</label>
    </ligand>
</feature>
<feature type="binding site" evidence="7 12 38 42 61 65 67 68">
    <location>
        <position position="105"/>
    </location>
    <ligand>
        <name>Ca(2+)</name>
        <dbReference type="ChEBI" id="CHEBI:29108"/>
        <label>3</label>
    </ligand>
</feature>
<feature type="binding site" evidence="7 12 38 61 65">
    <location>
        <position position="130"/>
    </location>
    <ligand>
        <name>Ca(2+)</name>
        <dbReference type="ChEBI" id="CHEBI:29108"/>
        <label>4</label>
    </ligand>
</feature>
<feature type="binding site" evidence="7 12 38 61 65">
    <location>
        <position position="132"/>
    </location>
    <ligand>
        <name>Ca(2+)</name>
        <dbReference type="ChEBI" id="CHEBI:29108"/>
        <label>4</label>
    </ligand>
</feature>
<feature type="binding site" evidence="7 12 38 61 65">
    <location>
        <position position="134"/>
    </location>
    <ligand>
        <name>Ca(2+)</name>
        <dbReference type="ChEBI" id="CHEBI:29108"/>
        <label>4</label>
    </ligand>
</feature>
<feature type="binding site" evidence="7 12 38 61 65">
    <location>
        <position position="136"/>
    </location>
    <ligand>
        <name>Ca(2+)</name>
        <dbReference type="ChEBI" id="CHEBI:29108"/>
        <label>4</label>
    </ligand>
</feature>
<feature type="binding site" evidence="7 12 38 61 65">
    <location>
        <position position="141"/>
    </location>
    <ligand>
        <name>Ca(2+)</name>
        <dbReference type="ChEBI" id="CHEBI:29108"/>
        <label>4</label>
    </ligand>
</feature>
<feature type="modified residue" description="N-acetylalanine" evidence="55 57 72 76 77 81">
    <location>
        <position position="2"/>
    </location>
</feature>
<feature type="modified residue" description="N6-acetyllysine; alternate" evidence="73">
    <location>
        <position position="22"/>
    </location>
</feature>
<feature type="modified residue" description="Phosphothreonine; by CaMK4" evidence="3">
    <location>
        <position position="45"/>
    </location>
</feature>
<feature type="modified residue" description="Phosphoserine" evidence="78">
    <location>
        <position position="82"/>
    </location>
</feature>
<feature type="modified residue" description="N6-acetyllysine" evidence="73">
    <location>
        <position position="95"/>
    </location>
</feature>
<feature type="modified residue" description="Phosphotyrosine" evidence="71 74">
    <location>
        <position position="100"/>
    </location>
</feature>
<feature type="modified residue" description="Phosphoserine" evidence="75 78 80">
    <location>
        <position position="102"/>
    </location>
</feature>
<feature type="modified residue" description="Phosphothreonine" evidence="80">
    <location>
        <position position="111"/>
    </location>
</feature>
<feature type="modified residue" description="N6,N6,N6-trimethyllysine; alternate" evidence="55 79">
    <location>
        <position position="116"/>
    </location>
</feature>
<feature type="modified residue" description="N6-methyllysine; alternate" evidence="79">
    <location>
        <position position="116"/>
    </location>
</feature>
<feature type="modified residue" description="Phosphotyrosine" evidence="74">
    <location>
        <position position="139"/>
    </location>
</feature>
<feature type="cross-link" description="Glycyl lysine isopeptide (Lys-Gly) (interchain with G-Cter in SUMO2); alternate" evidence="82">
    <location>
        <position position="22"/>
    </location>
</feature>
<feature type="cross-link" description="Glycyl lysine isopeptide (Lys-Gly) (interchain with G-Cter in ubiquitin); alternate" evidence="4">
    <location>
        <position position="22"/>
    </location>
</feature>
<feature type="sequence variant" id="VAR_069222" description="In CPVT4; increased RYR2 calcium-release channel activity; not changed calcium-dependent inactivation of L-type calcium channel; not changed protein abundance; not changed structure; not changed thermal stability both in the absence and presence of calcium; no effect on the calcium binding affinity; significantly increased binding of RYR2; increased ryanodine-sensitive calcium-release channel activity; decreased of KCNN2 calcium-activated potassium channel activity; not changed KCNN2 expression; not changed KCNN2 location at membrane; dbSNP:rs267607276." evidence="25 34 36 37">
    <original>N</original>
    <variation>I</variation>
    <location>
        <position position="54"/>
    </location>
</feature>
<feature type="sequence variant" id="VAR_073275" description="In LQT14; significantly decreased of KCNN2 calcium-activated potassium channel activity; not changed KCNN2 expression; not changed KCNN2 location at membrane; decreased thermal stability in presence of calcium ions; decreased interaction with RYR2; dbSNP:rs730882253." evidence="30 31 36">
    <original>F</original>
    <variation>L</variation>
    <location>
        <position position="90"/>
    </location>
</feature>
<feature type="sequence variant" id="VAR_078541" description="In CPVT4; the mutant has significantly reduced calcium affinity compared to wild-type; calmodulin-RYR2 interaction is defective at low intracellular Ca(2+) concentrations and restored at moderate to high Ca(2+) concentrations; increased RYR2 calcium-release channel activity; decreased KCNN2 calcium-activated potassium channel activity; not changed KCNN2 expression; not changed KCNN2 location at membrane; dbSNP:rs267607277." evidence="25 34 36 37">
    <original>N</original>
    <variation>S</variation>
    <location>
        <position position="98"/>
    </location>
</feature>
<feature type="sequence variant" id="VAR_078542" description="In LQT14; reduction in calcium affinity; not changed protein abundance; not changed structure; significantly decreased thermal stability in presence of calcium; significantly decreased RYR2 interaction; increased ryanodine-sensitive calcium-release channel activity; decreased of KCNN2 calcium-activated potassium channel activity; not changed KCNN2 expression; not changed KCNN2 location at membrane; dbSNP:rs730882252." evidence="27 34 36">
    <original>D</original>
    <variation>G</variation>
    <location>
        <position position="130"/>
    </location>
</feature>
<feature type="sequence variant" id="VAR_078263" description="In LQT14; decreased calcium affinity; loss of CACNA1C calcium-dependent-inactivation; no effect on intracellular RYR2-mediated calcium release; dbSNP:rs1887120112." evidence="35">
    <original>E</original>
    <variation>G</variation>
    <location>
        <position position="141"/>
    </location>
</feature>
<feature type="sequence variant" id="VAR_083814" description="In LQT14; loss-of-function variant causing impaired negative regulation of high voltage-gated calcium channel activity; impaired regulation of cardiac muscle cell action potential; decreased calcium ion binding; dbSNP:rs1887120112." evidence="47">
    <original>E</original>
    <variation>V</variation>
    <location>
        <position position="141"/>
    </location>
</feature>
<feature type="sequence variant" id="VAR_073282" description="In LQT14; reduction in calcium affinity; not changed protein abundance; not changed structure; significantly decreased thermal stability in presence of calcium; no effect on RYR2 interaction; significantly reduced ryanodine-sensitive calcium-release channel activity; impaired negative regulation of high voltage-gated calcium channel activity; impaired regulation of cardiac muscle cell action potential; dbSNP:rs1085307479 and dbSNP:rs199744595." evidence="27 34 35 40">
    <original>F</original>
    <variation>L</variation>
    <location>
        <position position="142"/>
    </location>
</feature>
<feature type="helix" evidence="86">
    <location>
        <begin position="2"/>
        <end position="4"/>
    </location>
</feature>
<feature type="helix" evidence="86">
    <location>
        <begin position="7"/>
        <end position="20"/>
    </location>
</feature>
<feature type="strand" evidence="84">
    <location>
        <begin position="21"/>
        <end position="23"/>
    </location>
</feature>
<feature type="strand" evidence="86">
    <location>
        <begin position="25"/>
        <end position="28"/>
    </location>
</feature>
<feature type="helix" evidence="86">
    <location>
        <begin position="30"/>
        <end position="39"/>
    </location>
</feature>
<feature type="helix" evidence="86">
    <location>
        <begin position="46"/>
        <end position="56"/>
    </location>
</feature>
<feature type="helix" evidence="87">
    <location>
        <begin position="57"/>
        <end position="59"/>
    </location>
</feature>
<feature type="strand" evidence="86">
    <location>
        <begin position="61"/>
        <end position="65"/>
    </location>
</feature>
<feature type="helix" evidence="86">
    <location>
        <begin position="66"/>
        <end position="93"/>
    </location>
</feature>
<feature type="strand" evidence="83">
    <location>
        <begin position="94"/>
        <end position="96"/>
    </location>
</feature>
<feature type="strand" evidence="86">
    <location>
        <begin position="97"/>
        <end position="101"/>
    </location>
</feature>
<feature type="helix" evidence="86">
    <location>
        <begin position="103"/>
        <end position="112"/>
    </location>
</feature>
<feature type="strand" evidence="87">
    <location>
        <begin position="113"/>
        <end position="115"/>
    </location>
</feature>
<feature type="helix" evidence="86">
    <location>
        <begin position="119"/>
        <end position="129"/>
    </location>
</feature>
<feature type="turn" evidence="85">
    <location>
        <begin position="130"/>
        <end position="132"/>
    </location>
</feature>
<feature type="strand" evidence="86">
    <location>
        <begin position="133"/>
        <end position="138"/>
    </location>
</feature>
<feature type="helix" evidence="86">
    <location>
        <begin position="139"/>
        <end position="146"/>
    </location>
</feature>
<comment type="function">
    <text evidence="17 29 32 35 36 41 47 51">Calmodulin acts as part of a calcium signal transduction pathway by mediating the control of a large number of enzymes, ion channels, aquaporins and other proteins through calcium-binding (PubMed:16760425, PubMed:23893133, PubMed:26969752, PubMed:27165696, PubMed:28890335, PubMed:31454269, PubMed:35568036). Calcium-binding is required for the activation of calmodulin (PubMed:16760425, PubMed:23893133, PubMed:26969752, PubMed:27165696, PubMed:28890335, PubMed:31454269, PubMed:35568036). Among the enzymes to be stimulated by the calmodulin-calcium complex are a number of protein kinases, such as myosin light-chain kinases and calmodulin-dependent protein kinase type II (CaMK2), and phosphatases (PubMed:16760425, PubMed:23893133, PubMed:26969752, PubMed:27165696, PubMed:28890335, PubMed:31454269, PubMed:35568036). Together with CCP110 and centrin, is involved in a genetic pathway that regulates the centrosome cycle and progression through cytokinesis (PubMed:16760425). Is a regulator of voltage-dependent L-type calcium channels (PubMed:31454269). Mediates calcium-dependent inactivation of CACNA1C (PubMed:26969752). Positively regulates calcium-activated potassium channel activity of KCNN2 (PubMed:27165696). Forms a potassium channel complex with KCNQ1 and regulates electrophysiological activity of the channel via calcium-binding (PubMed:25441029). Acts as a sensor to modulate the endoplasmic reticulum contacts with other organelles mediated by VMP1:ATP2A2 (PubMed:28890335).</text>
</comment>
<comment type="function">
    <text evidence="46">(Microbial infection) Required for Legionella pneumophila SidJ glutamylase activity.</text>
</comment>
<comment type="function">
    <text evidence="49 50 52 53">(Microbial infection) Required for C.violaceum CopC and S.flexneri OspC3 arginine ADP-riboxanase activity.</text>
</comment>
<comment type="activity regulation">
    <text evidence="51">(Microbial infection) Inactivated by S.flexneri OspC1 and OspC3 proteins, which specifically bind the apo-form of calmodulin, thereby preventing calcium-binding and activity.</text>
</comment>
<comment type="subunit">
    <text evidence="2 3 4 5 6 8 9 10 13 14 15 16 17 18 19 20 22 23 24 26 28 29 32 33 34 37 38 39 41 42 43 44 45 48 54 56">Homotetramer (PubMed:29724949). Interacts with MYO1C, MYO5A and RRAD. Interacts with MYO10 (By similarity). Interacts with CEP97, CCP110, TTN/titin and SRY (PubMed:12871148, PubMed:15746192, PubMed:16760425, PubMed:17719545, PubMed:9804419). Interacts with USP6; the interaction is calcium dependent (PubMed:16127172). Interacts with CDK5RAP2 (PubMed:20466722). Interacts with SCN5A (PubMed:21167176). Interacts with RYR1 (PubMed:18650434). Interacts with FCHO1 (PubMed:22484487). Interacts with MIP in a 1:2 stoichiometry; the interaction with the cytoplasmic domains from two MIP subunits promotes MIP water channel closure (PubMed:23893133). Interacts with ORAI1; this may play a role in the regulation of ORAI1-mediated calcium transport (By similarity). Interacts with IQCF1 (By similarity). Interacts with SYT7 (By similarity). Interacts with CEACAM1 (via cytoplasmic domain); this interaction is in a calcium dependent manner and reduces homophilic cell adhesion through dissociation of dimer (By similarity). Interacts with RYR2; regulates RYR2 calcium-release channel activity (PubMed:18650434, PubMed:26164367, PubMed:27516456). Interacts with PCP4; regulates calmodulin calcium-binding (PubMed:27876793). Interacts with the heterotetrameric KCNQ2 and KCNQ3 channel; the interaction is calcium-independent, constitutive and participates in the proper assembly of a functional heterotetrameric M channel (PubMed:27564677). Interacts with alpha-synuclein/SNCA (PubMed:23607618). Interacts with SLC9A1 in a calcium-dependent manner (PubMed:30287853). In the absence of Ca(+2), interacts with GIMAP4 (via IQ domain) (By similarity). Interacts with SCN8A; the interaction modulates the inactivation rate of SCN8A (By similarity). Interaction with KIF1A; the interaction is increased in presence of calcium and increases neuronal dense core vesicles motility (PubMed:30021165). Interacts with KCNN3 (PubMed:31155282). Interacts with KCNQ1 (via C-terminus); forms a heterooctameric structure (with 4:4 KCNQ1:CALM stoichiometry) in a calcium-independent manner (PubMed:18165683, PubMed:25441029). Interacts with PIK3C3; the interaction modulates PIK3C3 kinase activity (PubMed:28890335). Interacts with HINT1; interaction increases in the presence of calcium ions (By similarity). Interacts with HINT3 (By similarity). Interacts with GARIN2; in mature sperm flagella (By similarity). Interacts with IQUB (By similarity). Interacts with SLC26A5 (via STAS domain); this interaction is calcium-dependent and the STAS domain interacts with only one lobe of CALM which is an elongated conformation (PubMed:33667636). Ca(2+)-bound CALM1 binds CNGA1:CNGB1 channel (via CaM1 and CaM2 regions); this interaction modulates the affinity of the channel for cNMPs in response to intracellular Ca(2+) levels. Interacts with ITPR1; this interaction inhibits inositol 1,4,5 trisphosphate binding in both the presence and absence of calcium and 1,4,5 trisphosphate-induced calcium release in the presence of calcium (By similarity). Component of the SIFI complex (PubMed:25582440, PubMed:38297121). Interacts with KCNN4; this interaction allows channel opening (PubMed:29724949). Interacts with KCNN2; this interaction regulates the channel activity through calcium-binding (By similarity).</text>
</comment>
<comment type="subunit">
    <text evidence="21">(Microbial infection) Interacts with Rubella virus protease/methyltransferase p150.</text>
</comment>
<comment type="subunit">
    <text evidence="46">(Microbial infection) Interacts with Legionella pneumophila glutamylase SidJ.</text>
</comment>
<comment type="subunit">
    <text evidence="49 50 52">(Microbial infection) Interacts with C.violaceum CopC (PubMed:35338844, PubMed:35446120, PubMed:36423631). C.violaceum CopC interacts specifically with the apo form of calmodulin (PubMed:35446120, PubMed:36423631).</text>
</comment>
<comment type="subunit">
    <text evidence="51 53">(Microbial infection) Interacts with S.flexneri OspC1 and OspC3 (PubMed:35568036, PubMed:36624349). S.flexneri OspC1 and OspC3 interact specifically with the apo form of calmodulin and prevents calcium-binding (PubMed:35568036).</text>
</comment>
<comment type="interaction">
    <interactant intactId="EBI-25817233">
        <id>P0DP23</id>
    </interactant>
    <interactant intactId="EBI-715695">
        <id>O75874</id>
        <label>IDH1</label>
    </interactant>
    <organismsDiffer>false</organismsDiffer>
    <experiments>7</experiments>
</comment>
<comment type="interaction">
    <interactant intactId="EBI-25817233">
        <id>P0DP23</id>
    </interactant>
    <interactant intactId="EBI-11028607">
        <id>Q5JU85</id>
        <label>IQSEC2</label>
    </interactant>
    <organismsDiffer>false</organismsDiffer>
    <experiments>2</experiments>
</comment>
<comment type="subcellular location">
    <subcellularLocation>
        <location evidence="17">Cytoplasm</location>
        <location evidence="17">Cytoskeleton</location>
        <location evidence="17">Spindle</location>
    </subcellularLocation>
    <subcellularLocation>
        <location evidence="17">Cytoplasm</location>
        <location evidence="17">Cytoskeleton</location>
        <location evidence="17">Spindle pole</location>
    </subcellularLocation>
    <subcellularLocation>
        <location evidence="11">Cytoplasm</location>
        <location evidence="11">Cytoskeleton</location>
        <location evidence="11">Microtubule organizing center</location>
        <location evidence="11">Centrosome</location>
    </subcellularLocation>
    <subcellularLocation>
        <location evidence="2">Cell projection</location>
        <location evidence="2">Cilium</location>
        <location evidence="2">Flagellum</location>
    </subcellularLocation>
    <text>Distributed throughout the cell during interphase, but during mitosis becomes dramatically localized to the spindle poles and the spindle microtubules.</text>
</comment>
<comment type="domain">
    <text evidence="32 42">The N-terminal and C-terminal lobes of CALM bind to the C-terminus of KCNQ1 in a clamp-like conformation. Binding of CALM C-terminus to KCNQ1 is calcium-independent but is essential for assembly of the structure. Binding of CALM N-terminus to KCNQ1 is calcium-dependent and regulates electrophysiological activity of the channel (PubMed:25441029). The C-lobe interacts with KCNN4 channels in a calcium-independent manner, whereas the N-lobe interacts with the S4-S5 linker of KCNN4 in a calcium-dependent manner playing a role as calcium sensor and gating the channel (PubMed:29724949).</text>
</comment>
<comment type="PTM">
    <text evidence="1">Ubiquitination results in a strongly decreased activity.</text>
</comment>
<comment type="PTM">
    <text evidence="1">Phosphorylation results in a decreased activity.</text>
</comment>
<comment type="disease" evidence="25 34 36 37">
    <disease id="DI-03610">
        <name>Ventricular tachycardia, catecholaminergic polymorphic, 4</name>
        <acronym>CPVT4</acronym>
        <description>An arrhythmogenic disorder characterized by stress-induced, bidirectional ventricular tachycardia that may degenerate into cardiac arrest and cause sudden death. Patients present with recurrent syncope, seizures, or sudden death after physical activity or emotional stress. CPVT4 inheritance is autosomal dominant.</description>
        <dbReference type="MIM" id="614916"/>
    </disease>
    <text>The disease is caused by variants affecting the gene represented in this entry. Mutations in CALM1 are the cause of CPVT4.</text>
</comment>
<comment type="disease" evidence="27 30 31 34 35 36 40 47">
    <disease id="DI-04329">
        <name>Long QT syndrome 14</name>
        <acronym>LQT14</acronym>
        <description>A form of long QT syndrome, a heart disorder characterized by a prolonged QT interval on the ECG and polymorphic ventricular arrhythmias. They cause syncope and sudden death in response to exercise or emotional stress, and can present with a sentinel event of sudden cardiac death in infancy.</description>
        <dbReference type="MIM" id="616247"/>
    </disease>
    <text>The disease is caused by variants affecting the gene represented in this entry.</text>
</comment>
<comment type="miscellaneous">
    <text evidence="12 38">This protein has four functional calcium-binding sites.</text>
</comment>
<comment type="similarity">
    <text evidence="59">Belongs to the calmodulin family.</text>
</comment>
<comment type="online information" name="Protein Spotlight">
    <link uri="https://www.proteinspotlight.org/back_issues/105"/>
    <text>A question of length - Issue 105 of May 2009</text>
</comment>
<organism>
    <name type="scientific">Homo sapiens</name>
    <name type="common">Human</name>
    <dbReference type="NCBI Taxonomy" id="9606"/>
    <lineage>
        <taxon>Eukaryota</taxon>
        <taxon>Metazoa</taxon>
        <taxon>Chordata</taxon>
        <taxon>Craniata</taxon>
        <taxon>Vertebrata</taxon>
        <taxon>Euteleostomi</taxon>
        <taxon>Mammalia</taxon>
        <taxon>Eutheria</taxon>
        <taxon>Euarchontoglires</taxon>
        <taxon>Primates</taxon>
        <taxon>Haplorrhini</taxon>
        <taxon>Catarrhini</taxon>
        <taxon>Hominidae</taxon>
        <taxon>Homo</taxon>
    </lineage>
</organism>